<protein>
    <recommendedName>
        <fullName>Genome polyprotein</fullName>
    </recommendedName>
    <component>
        <recommendedName>
            <fullName evidence="9">Capsid protein C</fullName>
        </recommendedName>
        <alternativeName>
            <fullName>Capsid protein</fullName>
        </alternativeName>
        <alternativeName>
            <fullName>Core protein</fullName>
        </alternativeName>
    </component>
    <component>
        <recommendedName>
            <fullName evidence="9">Protein prM</fullName>
        </recommendedName>
        <alternativeName>
            <fullName>Precursor membrane protein</fullName>
        </alternativeName>
    </component>
    <component>
        <recommendedName>
            <fullName evidence="9">Peptide pr</fullName>
        </recommendedName>
        <alternativeName>
            <fullName>Peptide precursor</fullName>
        </alternativeName>
    </component>
    <component>
        <recommendedName>
            <fullName evidence="9">Small envelope protein M</fullName>
        </recommendedName>
        <alternativeName>
            <fullName>Matrix protein</fullName>
        </alternativeName>
    </component>
    <component>
        <recommendedName>
            <fullName evidence="9">Envelope protein E</fullName>
        </recommendedName>
    </component>
    <component>
        <recommendedName>
            <fullName evidence="9">Non-structural protein 1</fullName>
            <shortName>NS1</shortName>
        </recommendedName>
    </component>
    <component>
        <recommendedName>
            <fullName evidence="9">Non-structural protein 2A</fullName>
            <shortName>NS2A</shortName>
        </recommendedName>
    </component>
    <component>
        <recommendedName>
            <fullName evidence="9">Serine protease subunit NS2B</fullName>
        </recommendedName>
        <alternativeName>
            <fullName>Flavivirin protease NS2B regulatory subunit</fullName>
        </alternativeName>
        <alternativeName>
            <fullName>Non-structural protein 2B</fullName>
        </alternativeName>
    </component>
    <component>
        <recommendedName>
            <fullName evidence="9">Serine protease NS3</fullName>
            <ecNumber>3.4.21.91</ecNumber>
            <ecNumber>3.6.1.15</ecNumber>
            <ecNumber>3.6.4.13</ecNumber>
        </recommendedName>
        <alternativeName>
            <fullName>Flavivirin protease NS3 catalytic subunit</fullName>
        </alternativeName>
        <alternativeName>
            <fullName>Non-structural protein 3</fullName>
        </alternativeName>
    </component>
    <component>
        <recommendedName>
            <fullName evidence="9">Non-structural protein 4A</fullName>
            <shortName>NS4A</shortName>
        </recommendedName>
    </component>
    <component>
        <recommendedName>
            <fullName evidence="9">Peptide 2k</fullName>
        </recommendedName>
    </component>
    <component>
        <recommendedName>
            <fullName evidence="9">Non-structural protein 4B</fullName>
            <shortName>NS4B</shortName>
        </recommendedName>
    </component>
    <component>
        <recommendedName>
            <fullName evidence="9">RNA-directed RNA polymerase NS5</fullName>
            <ecNumber evidence="19">2.1.1.56</ecNumber>
            <ecNumber evidence="19">2.1.1.57</ecNumber>
            <ecNumber evidence="19 40">2.7.7.48</ecNumber>
        </recommendedName>
        <alternativeName>
            <fullName>NS5</fullName>
        </alternativeName>
    </component>
</protein>
<dbReference type="EC" id="3.4.21.91"/>
<dbReference type="EC" id="3.6.1.15"/>
<dbReference type="EC" id="3.6.4.13"/>
<dbReference type="EC" id="2.1.1.56" evidence="19"/>
<dbReference type="EC" id="2.1.1.57" evidence="19"/>
<dbReference type="EC" id="2.7.7.48" evidence="19 40"/>
<dbReference type="EMBL" id="AY632535">
    <property type="protein sequence ID" value="AAV34151.1"/>
    <property type="molecule type" value="Genomic_RNA"/>
</dbReference>
<dbReference type="RefSeq" id="YP_002790881.1">
    <molecule id="Q32ZE1-1"/>
    <property type="nucleotide sequence ID" value="NC_012532.1"/>
</dbReference>
<dbReference type="PDB" id="5GJ4">
    <property type="method" value="X-ray"/>
    <property type="resolution" value="1.84 A"/>
    <property type="chains" value="A/C/E/G=1414-1464, B/D/F/H=1499-1675"/>
</dbReference>
<dbReference type="PDB" id="5GPI">
    <property type="method" value="X-ray"/>
    <property type="resolution" value="1.58 A"/>
    <property type="chains" value="A/C/E/G=1414-1464, B/D/F/H=1499-1675"/>
</dbReference>
<dbReference type="PDB" id="5GXJ">
    <property type="method" value="X-ray"/>
    <property type="resolution" value="2.60 A"/>
    <property type="chains" value="A/B=1416-1668"/>
</dbReference>
<dbReference type="PDB" id="5JPS">
    <property type="method" value="X-ray"/>
    <property type="resolution" value="1.78 A"/>
    <property type="chains" value="A=1674-2115"/>
</dbReference>
<dbReference type="PDB" id="5JRZ">
    <property type="method" value="X-ray"/>
    <property type="resolution" value="1.62 A"/>
    <property type="chains" value="A=1669-2115"/>
</dbReference>
<dbReference type="PDB" id="5K6K">
    <property type="method" value="X-ray"/>
    <property type="resolution" value="1.89 A"/>
    <property type="chains" value="A/B=790-1142"/>
</dbReference>
<dbReference type="PDB" id="5RHG">
    <property type="method" value="X-ray"/>
    <property type="resolution" value="1.41 A"/>
    <property type="chains" value="A=1681-2115"/>
</dbReference>
<dbReference type="PDB" id="5RHH">
    <property type="method" value="X-ray"/>
    <property type="resolution" value="1.59 A"/>
    <property type="chains" value="A=1681-2115"/>
</dbReference>
<dbReference type="PDB" id="5RHI">
    <property type="method" value="X-ray"/>
    <property type="resolution" value="1.45 A"/>
    <property type="chains" value="A=1681-2115"/>
</dbReference>
<dbReference type="PDB" id="5RHJ">
    <property type="method" value="X-ray"/>
    <property type="resolution" value="1.50 A"/>
    <property type="chains" value="A=1681-2115"/>
</dbReference>
<dbReference type="PDB" id="5RHK">
    <property type="method" value="X-ray"/>
    <property type="resolution" value="1.52 A"/>
    <property type="chains" value="A=1681-2115"/>
</dbReference>
<dbReference type="PDB" id="5RHL">
    <property type="method" value="X-ray"/>
    <property type="resolution" value="1.43 A"/>
    <property type="chains" value="A=1681-2115"/>
</dbReference>
<dbReference type="PDB" id="5RHM">
    <property type="method" value="X-ray"/>
    <property type="resolution" value="1.68 A"/>
    <property type="chains" value="A=1681-2115"/>
</dbReference>
<dbReference type="PDB" id="5RHO">
    <property type="method" value="X-ray"/>
    <property type="resolution" value="1.49 A"/>
    <property type="chains" value="A=1681-2115"/>
</dbReference>
<dbReference type="PDB" id="5RHP">
    <property type="method" value="X-ray"/>
    <property type="resolution" value="1.61 A"/>
    <property type="chains" value="A=1681-2115"/>
</dbReference>
<dbReference type="PDB" id="5RHQ">
    <property type="method" value="X-ray"/>
    <property type="resolution" value="1.49 A"/>
    <property type="chains" value="A=1681-2115"/>
</dbReference>
<dbReference type="PDB" id="5RHR">
    <property type="method" value="X-ray"/>
    <property type="resolution" value="1.46 A"/>
    <property type="chains" value="A=1681-2115"/>
</dbReference>
<dbReference type="PDB" id="5RHS">
    <property type="method" value="X-ray"/>
    <property type="resolution" value="1.53 A"/>
    <property type="chains" value="A=1681-2115"/>
</dbReference>
<dbReference type="PDB" id="5RHT">
    <property type="method" value="X-ray"/>
    <property type="resolution" value="1.63 A"/>
    <property type="chains" value="A=1681-2115"/>
</dbReference>
<dbReference type="PDB" id="5RHU">
    <property type="method" value="X-ray"/>
    <property type="resolution" value="1.61 A"/>
    <property type="chains" value="A=1681-2115"/>
</dbReference>
<dbReference type="PDB" id="5RHV">
    <property type="method" value="X-ray"/>
    <property type="resolution" value="1.71 A"/>
    <property type="chains" value="A=1681-2115"/>
</dbReference>
<dbReference type="PDB" id="5RHW">
    <property type="method" value="X-ray"/>
    <property type="resolution" value="1.62 A"/>
    <property type="chains" value="A=1681-2115"/>
</dbReference>
<dbReference type="PDB" id="5RHX">
    <property type="method" value="X-ray"/>
    <property type="resolution" value="1.73 A"/>
    <property type="chains" value="A=1681-2115"/>
</dbReference>
<dbReference type="PDB" id="5RHY">
    <property type="method" value="X-ray"/>
    <property type="resolution" value="1.36 A"/>
    <property type="chains" value="A=1681-2115"/>
</dbReference>
<dbReference type="PDB" id="5T1V">
    <property type="method" value="X-ray"/>
    <property type="resolution" value="3.10 A"/>
    <property type="chains" value="A/B=1414-1467, A/B=1499-1685"/>
</dbReference>
<dbReference type="PDB" id="5TFN">
    <property type="method" value="X-ray"/>
    <property type="resolution" value="3.00 A"/>
    <property type="chains" value="A/B=1416-1456, A/B=1499-1553"/>
</dbReference>
<dbReference type="PDB" id="5TFO">
    <property type="method" value="X-ray"/>
    <property type="resolution" value="2.51 A"/>
    <property type="chains" value="A/B=1416-1443, A/B=1455-1462, A/B=1499-1680"/>
</dbReference>
<dbReference type="PDB" id="5TFR">
    <property type="method" value="X-ray"/>
    <property type="resolution" value="3.05 A"/>
    <property type="chains" value="A/B=2517-3419"/>
</dbReference>
<dbReference type="PDB" id="5TMH">
    <property type="method" value="X-ray"/>
    <property type="resolution" value="3.28 A"/>
    <property type="chains" value="A/B=2517-3418"/>
</dbReference>
<dbReference type="PDB" id="5U04">
    <property type="method" value="X-ray"/>
    <property type="resolution" value="1.90 A"/>
    <property type="chains" value="A=2822-3419"/>
</dbReference>
<dbReference type="PDB" id="5U0B">
    <property type="method" value="X-ray"/>
    <property type="resolution" value="3.00 A"/>
    <property type="chains" value="A/B=2517-3419"/>
</dbReference>
<dbReference type="PDB" id="5U0C">
    <property type="method" value="X-ray"/>
    <property type="resolution" value="3.00 A"/>
    <property type="chains" value="A/B/C/D/E/F/G/H=2781-3419"/>
</dbReference>
<dbReference type="PDB" id="5VI7">
    <property type="method" value="X-ray"/>
    <property type="resolution" value="2.00 A"/>
    <property type="chains" value="A=1677-2115"/>
</dbReference>
<dbReference type="PDB" id="5VIM">
    <property type="method" value="X-ray"/>
    <property type="resolution" value="2.10 A"/>
    <property type="chains" value="A/B=2521-2781"/>
</dbReference>
<dbReference type="PDB" id="5W41">
    <property type="method" value="X-ray"/>
    <property type="resolution" value="2.20 A"/>
    <property type="chains" value="B=2887-2923"/>
</dbReference>
<dbReference type="PDB" id="5Y4Z">
    <property type="method" value="X-ray"/>
    <property type="resolution" value="1.30 A"/>
    <property type="chains" value="A=1676-2115"/>
</dbReference>
<dbReference type="PDB" id="5YOD">
    <property type="method" value="X-ray"/>
    <property type="resolution" value="1.90 A"/>
    <property type="chains" value="A/C/E/G=1412-1464, B/D/F/H=1499-1675"/>
</dbReference>
<dbReference type="PDB" id="5YOF">
    <property type="method" value="X-ray"/>
    <property type="resolution" value="1.51 A"/>
    <property type="chains" value="A=1412-1464, B=1499-1675"/>
</dbReference>
<dbReference type="PDB" id="5Z0R">
    <property type="method" value="X-ray"/>
    <property type="resolution" value="2.05 A"/>
    <property type="chains" value="A/B=24-98"/>
</dbReference>
<dbReference type="PDB" id="5Z0V">
    <property type="method" value="X-ray"/>
    <property type="resolution" value="2.91 A"/>
    <property type="chains" value="A/B/C/D=24-98"/>
</dbReference>
<dbReference type="PDB" id="5ZMQ">
    <property type="method" value="X-ray"/>
    <property type="resolution" value="1.99 A"/>
    <property type="chains" value="A/C/E/G=1414-1464"/>
</dbReference>
<dbReference type="PDB" id="5ZMS">
    <property type="method" value="X-ray"/>
    <property type="resolution" value="1.80 A"/>
    <property type="chains" value="A/D/G/J=1414-1464"/>
</dbReference>
<dbReference type="PDB" id="5ZOB">
    <property type="method" value="X-ray"/>
    <property type="resolution" value="2.00 A"/>
    <property type="chains" value="A/C/E/G=1414-1464"/>
</dbReference>
<dbReference type="PDB" id="6ADW">
    <property type="method" value="X-ray"/>
    <property type="resolution" value="2.20 A"/>
    <property type="chains" value="A=1679-2115"/>
</dbReference>
<dbReference type="PDB" id="6ADX">
    <property type="method" value="X-ray"/>
    <property type="resolution" value="1.75 A"/>
    <property type="chains" value="A=1679-2115"/>
</dbReference>
<dbReference type="PDB" id="6ADY">
    <property type="method" value="X-ray"/>
    <property type="resolution" value="1.90 A"/>
    <property type="chains" value="A=1679-2115"/>
</dbReference>
<dbReference type="PDB" id="6JPW">
    <property type="method" value="X-ray"/>
    <property type="resolution" value="1.95 A"/>
    <property type="chains" value="A/C/E/G=1414-1464"/>
</dbReference>
<dbReference type="PDB" id="6KK2">
    <property type="method" value="X-ray"/>
    <property type="resolution" value="2.02 A"/>
    <property type="chains" value="A=1414-1464"/>
</dbReference>
<dbReference type="PDB" id="6KK3">
    <property type="method" value="X-ray"/>
    <property type="resolution" value="2.05 A"/>
    <property type="chains" value="A=1418-1455"/>
</dbReference>
<dbReference type="PDB" id="6KK4">
    <property type="method" value="X-ray"/>
    <property type="resolution" value="1.74 A"/>
    <property type="chains" value="A=1414-1464"/>
</dbReference>
<dbReference type="PDB" id="6KK5">
    <property type="method" value="X-ray"/>
    <property type="resolution" value="2.03 A"/>
    <property type="chains" value="A=1414-1464"/>
</dbReference>
<dbReference type="PDB" id="6KK6">
    <property type="method" value="X-ray"/>
    <property type="resolution" value="1.74 A"/>
    <property type="chains" value="A=1414-1464"/>
</dbReference>
<dbReference type="PDB" id="6KPQ">
    <property type="method" value="X-ray"/>
    <property type="resolution" value="2.62 A"/>
    <property type="chains" value="A=1414-1464"/>
</dbReference>
<dbReference type="PDB" id="6L50">
    <property type="method" value="X-ray"/>
    <property type="resolution" value="1.95 A"/>
    <property type="chains" value="A/C/E/G=1414-1464"/>
</dbReference>
<dbReference type="PDB" id="6MH3">
    <property type="method" value="X-ray"/>
    <property type="resolution" value="1.92 A"/>
    <property type="chains" value="A=1681-2115"/>
</dbReference>
<dbReference type="PDB" id="6UX2">
    <property type="method" value="X-ray"/>
    <property type="resolution" value="3.01 A"/>
    <property type="chains" value="B=2789-3419"/>
</dbReference>
<dbReference type="PDB" id="6WCZ">
    <property type="method" value="EM"/>
    <property type="resolution" value="4.00 A"/>
    <property type="chains" value="B=2517-3419"/>
</dbReference>
<dbReference type="PDB" id="6Y3B">
    <property type="method" value="X-ray"/>
    <property type="resolution" value="1.59 A"/>
    <property type="chains" value="A=1412-1464, B=1499-1675"/>
</dbReference>
<dbReference type="PDB" id="7G9K">
    <property type="method" value="X-ray"/>
    <property type="resolution" value="1.55 A"/>
    <property type="chains" value="A=1681-2115"/>
</dbReference>
<dbReference type="PDB" id="7G9L">
    <property type="method" value="X-ray"/>
    <property type="resolution" value="1.54 A"/>
    <property type="chains" value="A=1681-2115"/>
</dbReference>
<dbReference type="PDB" id="7G9M">
    <property type="method" value="X-ray"/>
    <property type="resolution" value="1.54 A"/>
    <property type="chains" value="A=1681-2115"/>
</dbReference>
<dbReference type="PDB" id="7G9N">
    <property type="method" value="X-ray"/>
    <property type="resolution" value="1.42 A"/>
    <property type="chains" value="A=1681-2115"/>
</dbReference>
<dbReference type="PDB" id="7G9O">
    <property type="method" value="X-ray"/>
    <property type="resolution" value="1.93 A"/>
    <property type="chains" value="A=1681-2115"/>
</dbReference>
<dbReference type="PDB" id="7G9P">
    <property type="method" value="X-ray"/>
    <property type="resolution" value="1.74 A"/>
    <property type="chains" value="A=1681-2115"/>
</dbReference>
<dbReference type="PDB" id="7G9Q">
    <property type="method" value="X-ray"/>
    <property type="resolution" value="2.13 A"/>
    <property type="chains" value="A=1681-2115"/>
</dbReference>
<dbReference type="PDB" id="7G9R">
    <property type="method" value="X-ray"/>
    <property type="resolution" value="1.80 A"/>
    <property type="chains" value="A=1681-2115"/>
</dbReference>
<dbReference type="PDB" id="7G9S">
    <property type="method" value="X-ray"/>
    <property type="resolution" value="2.09 A"/>
    <property type="chains" value="A=1681-2115"/>
</dbReference>
<dbReference type="PDB" id="7G9T">
    <property type="method" value="X-ray"/>
    <property type="resolution" value="1.90 A"/>
    <property type="chains" value="A=1681-2115"/>
</dbReference>
<dbReference type="PDB" id="7G9U">
    <property type="method" value="X-ray"/>
    <property type="resolution" value="1.69 A"/>
    <property type="chains" value="A=1681-2115"/>
</dbReference>
<dbReference type="PDB" id="7G9V">
    <property type="method" value="X-ray"/>
    <property type="resolution" value="1.74 A"/>
    <property type="chains" value="A=1681-2115"/>
</dbReference>
<dbReference type="PDB" id="7G9W">
    <property type="method" value="X-ray"/>
    <property type="resolution" value="1.85 A"/>
    <property type="chains" value="A=1681-2115"/>
</dbReference>
<dbReference type="PDB" id="7G9X">
    <property type="method" value="X-ray"/>
    <property type="resolution" value="1.81 A"/>
    <property type="chains" value="A=1681-2115"/>
</dbReference>
<dbReference type="PDB" id="7G9Y">
    <property type="method" value="X-ray"/>
    <property type="resolution" value="1.83 A"/>
    <property type="chains" value="A=1681-2115"/>
</dbReference>
<dbReference type="PDB" id="7G9Z">
    <property type="method" value="X-ray"/>
    <property type="resolution" value="1.62 A"/>
    <property type="chains" value="A=1681-2115"/>
</dbReference>
<dbReference type="PDB" id="7GA0">
    <property type="method" value="X-ray"/>
    <property type="resolution" value="1.97 A"/>
    <property type="chains" value="A=1681-2115"/>
</dbReference>
<dbReference type="PDB" id="7GA1">
    <property type="method" value="X-ray"/>
    <property type="resolution" value="2.09 A"/>
    <property type="chains" value="A=1681-2115"/>
</dbReference>
<dbReference type="PDB" id="7GA2">
    <property type="method" value="X-ray"/>
    <property type="resolution" value="2.03 A"/>
    <property type="chains" value="A=1681-2115"/>
</dbReference>
<dbReference type="PDB" id="7GA3">
    <property type="method" value="X-ray"/>
    <property type="resolution" value="1.81 A"/>
    <property type="chains" value="A=1681-2115"/>
</dbReference>
<dbReference type="PDB" id="7GA4">
    <property type="method" value="X-ray"/>
    <property type="resolution" value="1.75 A"/>
    <property type="chains" value="A=1681-2115"/>
</dbReference>
<dbReference type="PDB" id="7GA5">
    <property type="method" value="X-ray"/>
    <property type="resolution" value="1.84 A"/>
    <property type="chains" value="A=1681-2115"/>
</dbReference>
<dbReference type="PDB" id="7GA6">
    <property type="method" value="X-ray"/>
    <property type="resolution" value="1.75 A"/>
    <property type="chains" value="A=1681-2115"/>
</dbReference>
<dbReference type="PDB" id="7GA7">
    <property type="method" value="X-ray"/>
    <property type="resolution" value="1.42 A"/>
    <property type="chains" value="A=1681-2115"/>
</dbReference>
<dbReference type="PDB" id="7H1H">
    <property type="method" value="X-ray"/>
    <property type="resolution" value="1.68 A"/>
    <property type="chains" value="A=1414-1457, B=1509-1675"/>
</dbReference>
<dbReference type="PDB" id="7H1I">
    <property type="method" value="X-ray"/>
    <property type="resolution" value="1.41 A"/>
    <property type="chains" value="A=1414-1457, B=1509-1675"/>
</dbReference>
<dbReference type="PDB" id="7H1J">
    <property type="method" value="X-ray"/>
    <property type="resolution" value="1.55 A"/>
    <property type="chains" value="A=1414-1457, B=1509-1675"/>
</dbReference>
<dbReference type="PDB" id="7H1K">
    <property type="method" value="X-ray"/>
    <property type="resolution" value="1.50 A"/>
    <property type="chains" value="A=1414-1457, B=1509-1675"/>
</dbReference>
<dbReference type="PDB" id="7H1L">
    <property type="method" value="X-ray"/>
    <property type="resolution" value="1.53 A"/>
    <property type="chains" value="A=1414-1457, B=1509-1675"/>
</dbReference>
<dbReference type="PDB" id="7H1M">
    <property type="method" value="X-ray"/>
    <property type="resolution" value="1.61 A"/>
    <property type="chains" value="A=1414-1457, B=1509-1675"/>
</dbReference>
<dbReference type="PDB" id="7H1N">
    <property type="method" value="X-ray"/>
    <property type="resolution" value="1.41 A"/>
    <property type="chains" value="A=1414-1457, B=1509-1675"/>
</dbReference>
<dbReference type="PDB" id="7H1O">
    <property type="method" value="X-ray"/>
    <property type="resolution" value="1.41 A"/>
    <property type="chains" value="A=1414-1457, B=1509-1675"/>
</dbReference>
<dbReference type="PDB" id="7H1P">
    <property type="method" value="X-ray"/>
    <property type="resolution" value="1.38 A"/>
    <property type="chains" value="A=1414-1457, B=1509-1675"/>
</dbReference>
<dbReference type="PDB" id="7H1Q">
    <property type="method" value="X-ray"/>
    <property type="resolution" value="1.41 A"/>
    <property type="chains" value="A=1414-1457, B=1509-1675"/>
</dbReference>
<dbReference type="PDB" id="7H1R">
    <property type="method" value="X-ray"/>
    <property type="resolution" value="1.52 A"/>
    <property type="chains" value="A=1414-1457, B=1509-1675"/>
</dbReference>
<dbReference type="PDB" id="7H1S">
    <property type="method" value="X-ray"/>
    <property type="resolution" value="1.38 A"/>
    <property type="chains" value="A=1414-1457, B=1509-1675"/>
</dbReference>
<dbReference type="PDB" id="7H1T">
    <property type="method" value="X-ray"/>
    <property type="resolution" value="1.42 A"/>
    <property type="chains" value="A=1414-1457, B=1509-1675"/>
</dbReference>
<dbReference type="PDB" id="7H1U">
    <property type="method" value="X-ray"/>
    <property type="resolution" value="1.37 A"/>
    <property type="chains" value="A=1414-1457, B=1509-1675"/>
</dbReference>
<dbReference type="PDB" id="7H1V">
    <property type="method" value="X-ray"/>
    <property type="resolution" value="1.36 A"/>
    <property type="chains" value="A=1414-1457, B=1509-1675"/>
</dbReference>
<dbReference type="PDB" id="7H1W">
    <property type="method" value="X-ray"/>
    <property type="resolution" value="1.40 A"/>
    <property type="chains" value="A=1414-1457, B=1509-1675"/>
</dbReference>
<dbReference type="PDB" id="7H1X">
    <property type="method" value="X-ray"/>
    <property type="resolution" value="1.40 A"/>
    <property type="chains" value="A=1414-1457, B=1509-1675"/>
</dbReference>
<dbReference type="PDB" id="7H1Y">
    <property type="method" value="X-ray"/>
    <property type="resolution" value="1.37 A"/>
    <property type="chains" value="A=1414-1457, B=1509-1675"/>
</dbReference>
<dbReference type="PDB" id="7H1Z">
    <property type="method" value="X-ray"/>
    <property type="resolution" value="1.38 A"/>
    <property type="chains" value="A=1414-1457, B=1509-1675"/>
</dbReference>
<dbReference type="PDB" id="7H20">
    <property type="method" value="X-ray"/>
    <property type="resolution" value="1.39 A"/>
    <property type="chains" value="A=1414-1457, B=1509-1675"/>
</dbReference>
<dbReference type="PDB" id="7H21">
    <property type="method" value="X-ray"/>
    <property type="resolution" value="1.46 A"/>
    <property type="chains" value="A=1414-1457, B=1509-1675"/>
</dbReference>
<dbReference type="PDB" id="7H22">
    <property type="method" value="X-ray"/>
    <property type="resolution" value="1.55 A"/>
    <property type="chains" value="A=1414-1457, B=1509-1675"/>
</dbReference>
<dbReference type="PDB" id="7H23">
    <property type="method" value="X-ray"/>
    <property type="resolution" value="1.49 A"/>
    <property type="chains" value="A=1414-1457, B=1509-1675"/>
</dbReference>
<dbReference type="PDB" id="7H24">
    <property type="method" value="X-ray"/>
    <property type="resolution" value="1.64 A"/>
    <property type="chains" value="A=1414-1457, B=1509-1675"/>
</dbReference>
<dbReference type="PDB" id="7H25">
    <property type="method" value="X-ray"/>
    <property type="resolution" value="1.56 A"/>
    <property type="chains" value="A=1414-1457, B=1509-1675"/>
</dbReference>
<dbReference type="PDB" id="7H26">
    <property type="method" value="X-ray"/>
    <property type="resolution" value="1.85 A"/>
    <property type="chains" value="A=1414-1457, B=1509-1675"/>
</dbReference>
<dbReference type="PDB" id="7H27">
    <property type="method" value="X-ray"/>
    <property type="resolution" value="1.35 A"/>
    <property type="chains" value="A=1414-1457, B=1509-1675"/>
</dbReference>
<dbReference type="PDB" id="7H28">
    <property type="method" value="X-ray"/>
    <property type="resolution" value="1.80 A"/>
    <property type="chains" value="A=1414-1457, B=1509-1675"/>
</dbReference>
<dbReference type="PDB" id="7H29">
    <property type="method" value="X-ray"/>
    <property type="resolution" value="1.77 A"/>
    <property type="chains" value="A=1414-1457, B=1509-1675"/>
</dbReference>
<dbReference type="PDB" id="7H2A">
    <property type="method" value="X-ray"/>
    <property type="resolution" value="1.71 A"/>
    <property type="chains" value="A=1414-1457, B=1509-1675"/>
</dbReference>
<dbReference type="PDB" id="7H2B">
    <property type="method" value="X-ray"/>
    <property type="resolution" value="1.60 A"/>
    <property type="chains" value="A=1414-1457, B=1509-1675"/>
</dbReference>
<dbReference type="PDB" id="7H2C">
    <property type="method" value="X-ray"/>
    <property type="resolution" value="1.40 A"/>
    <property type="chains" value="A=1414-1457, B=1509-1675"/>
</dbReference>
<dbReference type="PDB" id="7H2D">
    <property type="method" value="X-ray"/>
    <property type="resolution" value="1.57 A"/>
    <property type="chains" value="A=1414-1457, B=1509-1675"/>
</dbReference>
<dbReference type="PDB" id="7H2E">
    <property type="method" value="X-ray"/>
    <property type="resolution" value="1.36 A"/>
    <property type="chains" value="A=1414-1457, B=1509-1675"/>
</dbReference>
<dbReference type="PDB" id="7H2F">
    <property type="method" value="X-ray"/>
    <property type="resolution" value="1.38 A"/>
    <property type="chains" value="A=1414-1457, B=1509-1675"/>
</dbReference>
<dbReference type="PDB" id="7H2G">
    <property type="method" value="X-ray"/>
    <property type="resolution" value="1.25 A"/>
    <property type="chains" value="A=1414-1457, B=1509-1675"/>
</dbReference>
<dbReference type="PDB" id="7H2H">
    <property type="method" value="X-ray"/>
    <property type="resolution" value="1.42 A"/>
    <property type="chains" value="A=1414-1457, B=1509-1675"/>
</dbReference>
<dbReference type="PDB" id="7H2I">
    <property type="method" value="X-ray"/>
    <property type="resolution" value="1.32 A"/>
    <property type="chains" value="A=1414-1457, B=1509-1675"/>
</dbReference>
<dbReference type="PDB" id="7H2J">
    <property type="method" value="X-ray"/>
    <property type="resolution" value="1.76 A"/>
    <property type="chains" value="A=1414-1457, B=1509-1675"/>
</dbReference>
<dbReference type="PDB" id="7H2K">
    <property type="method" value="X-ray"/>
    <property type="resolution" value="1.59 A"/>
    <property type="chains" value="A=1414-1457, B=1509-1675"/>
</dbReference>
<dbReference type="PDB" id="7H2L">
    <property type="method" value="X-ray"/>
    <property type="resolution" value="1.37 A"/>
    <property type="chains" value="A=1414-1457, B=1509-1675"/>
</dbReference>
<dbReference type="PDB" id="7H2M">
    <property type="method" value="X-ray"/>
    <property type="resolution" value="1.71 A"/>
    <property type="chains" value="A=1414-1457, B=1509-1675"/>
</dbReference>
<dbReference type="PDB" id="7H2N">
    <property type="method" value="X-ray"/>
    <property type="resolution" value="1.73 A"/>
    <property type="chains" value="A=1414-1457, B=1509-1675"/>
</dbReference>
<dbReference type="PDB" id="7H2O">
    <property type="method" value="X-ray"/>
    <property type="resolution" value="1.71 A"/>
    <property type="chains" value="A=1414-1457, B=1509-1675"/>
</dbReference>
<dbReference type="PDB" id="7H2P">
    <property type="method" value="X-ray"/>
    <property type="resolution" value="1.45 A"/>
    <property type="chains" value="A=1414-1457, B=1509-1675"/>
</dbReference>
<dbReference type="PDB" id="7H2Q">
    <property type="method" value="X-ray"/>
    <property type="resolution" value="1.53 A"/>
    <property type="chains" value="A=1414-1457, B=1509-1675"/>
</dbReference>
<dbReference type="PDB" id="7H2R">
    <property type="method" value="X-ray"/>
    <property type="resolution" value="1.32 A"/>
    <property type="chains" value="A=1414-1457, B=1509-1675"/>
</dbReference>
<dbReference type="PDB" id="7H2S">
    <property type="method" value="X-ray"/>
    <property type="resolution" value="1.57 A"/>
    <property type="chains" value="A=1414-1457, B=1509-1675"/>
</dbReference>
<dbReference type="PDB" id="7HOJ">
    <property type="method" value="X-ray"/>
    <property type="resolution" value="1.39 A"/>
    <property type="chains" value="A=1414-1457, B=1509-1675"/>
</dbReference>
<dbReference type="PDB" id="7HOK">
    <property type="method" value="X-ray"/>
    <property type="resolution" value="1.55 A"/>
    <property type="chains" value="A=1414-1457, B=1509-1675"/>
</dbReference>
<dbReference type="PDB" id="7HOL">
    <property type="method" value="X-ray"/>
    <property type="resolution" value="1.32 A"/>
    <property type="chains" value="A=1414-1457, B=1509-1675"/>
</dbReference>
<dbReference type="PDB" id="7HOM">
    <property type="method" value="X-ray"/>
    <property type="resolution" value="1.48 A"/>
    <property type="chains" value="A=1414-1457, B=1509-1675"/>
</dbReference>
<dbReference type="PDB" id="7HOP">
    <property type="method" value="X-ray"/>
    <property type="resolution" value="1.50 A"/>
    <property type="chains" value="A=1414-1457, B=1509-1675"/>
</dbReference>
<dbReference type="PDB" id="7HOQ">
    <property type="method" value="X-ray"/>
    <property type="resolution" value="1.43 A"/>
    <property type="chains" value="A=1414-1457, B=1509-1675"/>
</dbReference>
<dbReference type="PDB" id="7HOR">
    <property type="method" value="X-ray"/>
    <property type="resolution" value="1.81 A"/>
    <property type="chains" value="A=1414-1457, B=1509-1675"/>
</dbReference>
<dbReference type="PDB" id="7HOS">
    <property type="method" value="X-ray"/>
    <property type="resolution" value="1.60 A"/>
    <property type="chains" value="A=1414-1457, B=1509-1675"/>
</dbReference>
<dbReference type="PDB" id="7HOT">
    <property type="method" value="X-ray"/>
    <property type="resolution" value="1.59 A"/>
    <property type="chains" value="A=1414-1457, B=1509-1675"/>
</dbReference>
<dbReference type="PDB" id="7HOU">
    <property type="method" value="X-ray"/>
    <property type="resolution" value="1.48 A"/>
    <property type="chains" value="A=1414-1457, B=1509-1675"/>
</dbReference>
<dbReference type="PDB" id="7HOV">
    <property type="method" value="X-ray"/>
    <property type="resolution" value="1.69 A"/>
    <property type="chains" value="A=1414-1457, B=1509-1675"/>
</dbReference>
<dbReference type="PDB" id="7HOW">
    <property type="method" value="X-ray"/>
    <property type="resolution" value="1.45 A"/>
    <property type="chains" value="A=1414-1457, B=1509-1675"/>
</dbReference>
<dbReference type="PDB" id="7HOX">
    <property type="method" value="X-ray"/>
    <property type="resolution" value="1.67 A"/>
    <property type="chains" value="A=1414-1457, B=1509-1675"/>
</dbReference>
<dbReference type="PDB" id="7HOZ">
    <property type="method" value="X-ray"/>
    <property type="resolution" value="1.58 A"/>
    <property type="chains" value="A=1414-1457, B=1509-1675"/>
</dbReference>
<dbReference type="PDB" id="7HP0">
    <property type="method" value="X-ray"/>
    <property type="resolution" value="1.91 A"/>
    <property type="chains" value="A=1414-1457, B=1509-1675"/>
</dbReference>
<dbReference type="PDB" id="7HP1">
    <property type="method" value="X-ray"/>
    <property type="resolution" value="1.84 A"/>
    <property type="chains" value="A=1414-1457, B=1509-1675"/>
</dbReference>
<dbReference type="PDB" id="7HP2">
    <property type="method" value="X-ray"/>
    <property type="resolution" value="1.54 A"/>
    <property type="chains" value="A=1414-1457, B=1509-1675"/>
</dbReference>
<dbReference type="PDB" id="7HP4">
    <property type="method" value="X-ray"/>
    <property type="resolution" value="1.48 A"/>
    <property type="chains" value="A=1414-1457, B=1509-1675"/>
</dbReference>
<dbReference type="PDB" id="7HP5">
    <property type="method" value="X-ray"/>
    <property type="resolution" value="2.00 A"/>
    <property type="chains" value="A=1414-1457, B=1509-1675"/>
</dbReference>
<dbReference type="PDB" id="7HP6">
    <property type="method" value="X-ray"/>
    <property type="resolution" value="1.61 A"/>
    <property type="chains" value="A=1414-1457, B=1509-1675"/>
</dbReference>
<dbReference type="PDB" id="7HP7">
    <property type="method" value="X-ray"/>
    <property type="resolution" value="1.86 A"/>
    <property type="chains" value="A=1414-1457, B=1509-1675"/>
</dbReference>
<dbReference type="PDB" id="7HP8">
    <property type="method" value="X-ray"/>
    <property type="resolution" value="1.74 A"/>
    <property type="chains" value="A=1414-1457, B=1509-1675"/>
</dbReference>
<dbReference type="PDB" id="7HP9">
    <property type="method" value="X-ray"/>
    <property type="resolution" value="2.16 A"/>
    <property type="chains" value="A=1414-1457, B=1509-1675"/>
</dbReference>
<dbReference type="PDB" id="7HPA">
    <property type="method" value="X-ray"/>
    <property type="resolution" value="1.58 A"/>
    <property type="chains" value="A=1414-1457, B=1509-1675"/>
</dbReference>
<dbReference type="PDB" id="7HPB">
    <property type="method" value="X-ray"/>
    <property type="resolution" value="2.16 A"/>
    <property type="chains" value="A=1414-1457, B=1509-1675"/>
</dbReference>
<dbReference type="PDB" id="7HPC">
    <property type="method" value="X-ray"/>
    <property type="resolution" value="2.10 A"/>
    <property type="chains" value="A=1414-1457, B=1509-1675"/>
</dbReference>
<dbReference type="PDB" id="7HPD">
    <property type="method" value="X-ray"/>
    <property type="resolution" value="1.63 A"/>
    <property type="chains" value="A=1414-1457, B=1509-1675"/>
</dbReference>
<dbReference type="PDB" id="7HPE">
    <property type="method" value="X-ray"/>
    <property type="resolution" value="2.02 A"/>
    <property type="chains" value="A=1414-1457, B=1509-1675"/>
</dbReference>
<dbReference type="PDB" id="7HPF">
    <property type="method" value="X-ray"/>
    <property type="resolution" value="1.95 A"/>
    <property type="chains" value="A=1414-1457, B=1509-1675"/>
</dbReference>
<dbReference type="PDB" id="7HPG">
    <property type="method" value="X-ray"/>
    <property type="resolution" value="1.66 A"/>
    <property type="chains" value="A=1414-1457, B=1509-1675"/>
</dbReference>
<dbReference type="PDB" id="7HPH">
    <property type="method" value="X-ray"/>
    <property type="resolution" value="2.34 A"/>
    <property type="chains" value="A=1414-1457, B=1509-1675"/>
</dbReference>
<dbReference type="PDB" id="7I1K">
    <property type="method" value="X-ray"/>
    <property type="resolution" value="2.13 A"/>
    <property type="chains" value="A=1414-1457, B=1509-1675"/>
</dbReference>
<dbReference type="PDB" id="7I1L">
    <property type="method" value="X-ray"/>
    <property type="resolution" value="1.81 A"/>
    <property type="chains" value="A=1414-1457, B=1509-1675"/>
</dbReference>
<dbReference type="PDB" id="7I1M">
    <property type="method" value="X-ray"/>
    <property type="resolution" value="2.01 A"/>
    <property type="chains" value="A=1414-1457, B=1509-1675"/>
</dbReference>
<dbReference type="PDB" id="7I1N">
    <property type="method" value="X-ray"/>
    <property type="resolution" value="1.77 A"/>
    <property type="chains" value="A=1414-1457, B=1509-1675"/>
</dbReference>
<dbReference type="PDB" id="7I1O">
    <property type="method" value="X-ray"/>
    <property type="resolution" value="2.13 A"/>
    <property type="chains" value="A=1414-1457, B=1509-1675"/>
</dbReference>
<dbReference type="PDB" id="7I1P">
    <property type="method" value="X-ray"/>
    <property type="resolution" value="1.99 A"/>
    <property type="chains" value="A=1414-1457, B=1509-1675"/>
</dbReference>
<dbReference type="PDB" id="7I1Q">
    <property type="method" value="X-ray"/>
    <property type="resolution" value="1.73 A"/>
    <property type="chains" value="A=1414-1457, B=1509-1675"/>
</dbReference>
<dbReference type="PDB" id="7I1S">
    <property type="method" value="X-ray"/>
    <property type="resolution" value="1.86 A"/>
    <property type="chains" value="A=1414-1457, B=1509-1675"/>
</dbReference>
<dbReference type="PDB" id="7I1T">
    <property type="method" value="X-ray"/>
    <property type="resolution" value="1.86 A"/>
    <property type="chains" value="A=1414-1457, B=1509-1675"/>
</dbReference>
<dbReference type="PDB" id="7I1V">
    <property type="method" value="X-ray"/>
    <property type="resolution" value="1.97 A"/>
    <property type="chains" value="A=1414-1457, B=1509-1675"/>
</dbReference>
<dbReference type="PDB" id="7I1W">
    <property type="method" value="X-ray"/>
    <property type="resolution" value="1.67 A"/>
    <property type="chains" value="A=1414-1457, B=1509-1675"/>
</dbReference>
<dbReference type="PDB" id="7I1Y">
    <property type="method" value="X-ray"/>
    <property type="resolution" value="1.95 A"/>
    <property type="chains" value="A=1414-1457, B=1509-1675"/>
</dbReference>
<dbReference type="PDB" id="7I1Z">
    <property type="method" value="X-ray"/>
    <property type="resolution" value="1.72 A"/>
    <property type="chains" value="A=1414-1457, B=1509-1675"/>
</dbReference>
<dbReference type="PDB" id="7I20">
    <property type="method" value="X-ray"/>
    <property type="resolution" value="1.92 A"/>
    <property type="chains" value="A=1414-1457, B=1509-1675"/>
</dbReference>
<dbReference type="PDB" id="7I21">
    <property type="method" value="X-ray"/>
    <property type="resolution" value="1.83 A"/>
    <property type="chains" value="A=1414-1457, B=1509-1675"/>
</dbReference>
<dbReference type="PDB" id="7I22">
    <property type="method" value="X-ray"/>
    <property type="resolution" value="1.91 A"/>
    <property type="chains" value="A=1414-1457, B=1509-1675"/>
</dbReference>
<dbReference type="PDB" id="7O2M">
    <property type="method" value="X-ray"/>
    <property type="resolution" value="1.90 A"/>
    <property type="chains" value="A=1412-1464, B=1499-1675"/>
</dbReference>
<dbReference type="PDB" id="7O55">
    <property type="method" value="X-ray"/>
    <property type="resolution" value="1.95 A"/>
    <property type="chains" value="A=1414-1464, B=1499-1675"/>
</dbReference>
<dbReference type="PDB" id="7OBV">
    <property type="method" value="X-ray"/>
    <property type="resolution" value="1.30 A"/>
    <property type="chains" value="A=1414-1464, B=1499-1675"/>
</dbReference>
<dbReference type="PDB" id="7OC2">
    <property type="method" value="X-ray"/>
    <property type="resolution" value="1.50 A"/>
    <property type="chains" value="A=1414-1464, B=1499-1675"/>
</dbReference>
<dbReference type="PDB" id="7PFQ">
    <property type="method" value="X-ray"/>
    <property type="resolution" value="1.45 A"/>
    <property type="chains" value="A=1414-1464, B=1499-1675"/>
</dbReference>
<dbReference type="PDB" id="7PFY">
    <property type="method" value="X-ray"/>
    <property type="resolution" value="1.38 A"/>
    <property type="chains" value="A=1414-1464, B=1499-1675"/>
</dbReference>
<dbReference type="PDB" id="7PFZ">
    <property type="method" value="X-ray"/>
    <property type="resolution" value="1.45 A"/>
    <property type="chains" value="A=1414-1464, B=1499-1675"/>
</dbReference>
<dbReference type="PDB" id="7PG1">
    <property type="method" value="X-ray"/>
    <property type="resolution" value="1.95 A"/>
    <property type="chains" value="A=1414-1464, B=1499-1675"/>
</dbReference>
<dbReference type="PDB" id="7PGC">
    <property type="method" value="X-ray"/>
    <property type="resolution" value="1.55 A"/>
    <property type="chains" value="A=1414-1464, B=1499-1675"/>
</dbReference>
<dbReference type="PDB" id="7VLG">
    <property type="method" value="X-ray"/>
    <property type="resolution" value="1.77 A"/>
    <property type="chains" value="A=1414-1464"/>
</dbReference>
<dbReference type="PDB" id="7VLH">
    <property type="method" value="X-ray"/>
    <property type="resolution" value="2.62 A"/>
    <property type="chains" value="A=1414-1464"/>
</dbReference>
<dbReference type="PDB" id="7VLI">
    <property type="method" value="X-ray"/>
    <property type="resolution" value="2.38 A"/>
    <property type="chains" value="A=1414-1464"/>
</dbReference>
<dbReference type="PDB" id="7VXX">
    <property type="method" value="X-ray"/>
    <property type="resolution" value="1.90 A"/>
    <property type="chains" value="A/C=1412-1464, B/D=1499-1675"/>
</dbReference>
<dbReference type="PDB" id="7VXY">
    <property type="method" value="X-ray"/>
    <property type="resolution" value="1.90 A"/>
    <property type="chains" value="A/C=1412-1464, B/D=1499-1675"/>
</dbReference>
<dbReference type="PDB" id="7ZLC">
    <property type="method" value="X-ray"/>
    <property type="resolution" value="1.75 A"/>
    <property type="chains" value="A=1414-1464, B=1499-1675"/>
</dbReference>
<dbReference type="PDB" id="7ZLD">
    <property type="method" value="X-ray"/>
    <property type="resolution" value="1.61 A"/>
    <property type="chains" value="A=1414-1464, B=1499-1675"/>
</dbReference>
<dbReference type="PDB" id="7ZMI">
    <property type="method" value="X-ray"/>
    <property type="resolution" value="2.15 A"/>
    <property type="chains" value="A=1414-1464, B=1499-1675"/>
</dbReference>
<dbReference type="PDB" id="7ZNO">
    <property type="method" value="X-ray"/>
    <property type="resolution" value="1.70 A"/>
    <property type="chains" value="A=1414-1464, B=1499-1675"/>
</dbReference>
<dbReference type="PDB" id="7ZPD">
    <property type="method" value="X-ray"/>
    <property type="resolution" value="1.40 A"/>
    <property type="chains" value="A=1414-1464, B=1499-1675"/>
</dbReference>
<dbReference type="PDB" id="7ZQ1">
    <property type="method" value="X-ray"/>
    <property type="resolution" value="1.52 A"/>
    <property type="chains" value="A=1414-1464, B=1499-1675"/>
</dbReference>
<dbReference type="PDB" id="7ZQF">
    <property type="method" value="X-ray"/>
    <property type="resolution" value="1.68 A"/>
    <property type="chains" value="A=1414-1464, B=1499-1675"/>
</dbReference>
<dbReference type="PDB" id="7ZTM">
    <property type="method" value="X-ray"/>
    <property type="resolution" value="1.45 A"/>
    <property type="chains" value="A=1414-1464, B=1499-1675"/>
</dbReference>
<dbReference type="PDB" id="7ZUM">
    <property type="method" value="X-ray"/>
    <property type="resolution" value="1.75 A"/>
    <property type="chains" value="A=1414-1464, B=1499-1675"/>
</dbReference>
<dbReference type="PDB" id="7ZV4">
    <property type="method" value="X-ray"/>
    <property type="resolution" value="1.69 A"/>
    <property type="chains" value="A=1414-1464, B=1499-1675"/>
</dbReference>
<dbReference type="PDB" id="7ZVV">
    <property type="method" value="X-ray"/>
    <property type="resolution" value="1.75 A"/>
    <property type="chains" value="A=1414-1464, B=1499-1675"/>
</dbReference>
<dbReference type="PDB" id="7ZW5">
    <property type="method" value="X-ray"/>
    <property type="resolution" value="1.38 A"/>
    <property type="chains" value="A=1414-1464, B=1499-1675"/>
</dbReference>
<dbReference type="PDB" id="7ZWK">
    <property type="method" value="X-ray"/>
    <property type="resolution" value="2.00 A"/>
    <property type="chains" value="A=1414-1464, B=1499-1675"/>
</dbReference>
<dbReference type="PDB" id="7ZYS">
    <property type="method" value="X-ray"/>
    <property type="resolution" value="1.26 A"/>
    <property type="chains" value="A=1414-1464, B=1499-1675"/>
</dbReference>
<dbReference type="PDB" id="8A15">
    <property type="method" value="X-ray"/>
    <property type="resolution" value="1.23 A"/>
    <property type="chains" value="A=1414-1464, B=1499-1675"/>
</dbReference>
<dbReference type="PDB" id="8AQA">
    <property type="method" value="X-ray"/>
    <property type="resolution" value="1.35 A"/>
    <property type="chains" value="A=1414-1464, B=1499-1675"/>
</dbReference>
<dbReference type="PDB" id="8AQB">
    <property type="method" value="X-ray"/>
    <property type="resolution" value="1.28 A"/>
    <property type="chains" value="A=1414-1464, B=1499-1675"/>
</dbReference>
<dbReference type="PDB" id="8AQK">
    <property type="method" value="X-ray"/>
    <property type="resolution" value="1.20 A"/>
    <property type="chains" value="A=1414-1464, B=1499-1675"/>
</dbReference>
<dbReference type="PDB" id="8PEM">
    <property type="method" value="X-ray"/>
    <property type="resolution" value="2.00 A"/>
    <property type="chains" value="A=2517-2780"/>
</dbReference>
<dbReference type="PDB" id="8PN6">
    <property type="method" value="X-ray"/>
    <property type="resolution" value="1.61 A"/>
    <property type="chains" value="A=1414-1457"/>
</dbReference>
<dbReference type="PDB" id="8UM3">
    <property type="method" value="X-ray"/>
    <property type="resolution" value="1.93 A"/>
    <property type="chains" value="A=1681-2115"/>
</dbReference>
<dbReference type="PDB" id="8V7R">
    <property type="method" value="X-ray"/>
    <property type="resolution" value="1.41 A"/>
    <property type="chains" value="A=1681-2115"/>
</dbReference>
<dbReference type="PDB" id="8V7U">
    <property type="method" value="X-ray"/>
    <property type="resolution" value="1.82 A"/>
    <property type="chains" value="A=1681-2115"/>
</dbReference>
<dbReference type="PDB" id="8WN8">
    <property type="method" value="EM"/>
    <property type="resolution" value="3.00 A"/>
    <property type="chains" value="B/C/D/E=791-1143"/>
</dbReference>
<dbReference type="PDB" id="8WNP">
    <property type="method" value="EM"/>
    <property type="resolution" value="3.10 A"/>
    <property type="chains" value="E/F=791-1142"/>
</dbReference>
<dbReference type="PDB" id="8WNU">
    <property type="method" value="EM"/>
    <property type="resolution" value="3.80 A"/>
    <property type="chains" value="E/F=791-1142"/>
</dbReference>
<dbReference type="PDB" id="8WO0">
    <property type="method" value="EM"/>
    <property type="resolution" value="8.00 A"/>
    <property type="chains" value="B/C/D/E/F/G/K/L/M/N=791-1142"/>
</dbReference>
<dbReference type="PDB" id="8WO4">
    <property type="method" value="EM"/>
    <property type="resolution" value="2.80 A"/>
    <property type="chains" value="E/F=791-1143"/>
</dbReference>
<dbReference type="PDBsum" id="5GJ4"/>
<dbReference type="PDBsum" id="5GPI"/>
<dbReference type="PDBsum" id="5GXJ"/>
<dbReference type="PDBsum" id="5JPS"/>
<dbReference type="PDBsum" id="5JRZ"/>
<dbReference type="PDBsum" id="5K6K"/>
<dbReference type="PDBsum" id="5RHG"/>
<dbReference type="PDBsum" id="5RHH"/>
<dbReference type="PDBsum" id="5RHI"/>
<dbReference type="PDBsum" id="5RHJ"/>
<dbReference type="PDBsum" id="5RHK"/>
<dbReference type="PDBsum" id="5RHL"/>
<dbReference type="PDBsum" id="5RHM"/>
<dbReference type="PDBsum" id="5RHO"/>
<dbReference type="PDBsum" id="5RHP"/>
<dbReference type="PDBsum" id="5RHQ"/>
<dbReference type="PDBsum" id="5RHR"/>
<dbReference type="PDBsum" id="5RHS"/>
<dbReference type="PDBsum" id="5RHT"/>
<dbReference type="PDBsum" id="5RHU"/>
<dbReference type="PDBsum" id="5RHV"/>
<dbReference type="PDBsum" id="5RHW"/>
<dbReference type="PDBsum" id="5RHX"/>
<dbReference type="PDBsum" id="5RHY"/>
<dbReference type="PDBsum" id="5T1V"/>
<dbReference type="PDBsum" id="5TFN"/>
<dbReference type="PDBsum" id="5TFO"/>
<dbReference type="PDBsum" id="5TFR"/>
<dbReference type="PDBsum" id="5TMH"/>
<dbReference type="PDBsum" id="5U04"/>
<dbReference type="PDBsum" id="5U0B"/>
<dbReference type="PDBsum" id="5U0C"/>
<dbReference type="PDBsum" id="5VI7"/>
<dbReference type="PDBsum" id="5VIM"/>
<dbReference type="PDBsum" id="5W41"/>
<dbReference type="PDBsum" id="5Y4Z"/>
<dbReference type="PDBsum" id="5YOD"/>
<dbReference type="PDBsum" id="5YOF"/>
<dbReference type="PDBsum" id="5Z0R"/>
<dbReference type="PDBsum" id="5Z0V"/>
<dbReference type="PDBsum" id="5ZMQ"/>
<dbReference type="PDBsum" id="5ZMS"/>
<dbReference type="PDBsum" id="5ZOB"/>
<dbReference type="PDBsum" id="6ADW"/>
<dbReference type="PDBsum" id="6ADX"/>
<dbReference type="PDBsum" id="6ADY"/>
<dbReference type="PDBsum" id="6JPW"/>
<dbReference type="PDBsum" id="6KK2"/>
<dbReference type="PDBsum" id="6KK3"/>
<dbReference type="PDBsum" id="6KK4"/>
<dbReference type="PDBsum" id="6KK5"/>
<dbReference type="PDBsum" id="6KK6"/>
<dbReference type="PDBsum" id="6KPQ"/>
<dbReference type="PDBsum" id="6L50"/>
<dbReference type="PDBsum" id="6MH3"/>
<dbReference type="PDBsum" id="6UX2"/>
<dbReference type="PDBsum" id="6WCZ"/>
<dbReference type="PDBsum" id="6Y3B"/>
<dbReference type="PDBsum" id="7G9K"/>
<dbReference type="PDBsum" id="7G9L"/>
<dbReference type="PDBsum" id="7G9M"/>
<dbReference type="PDBsum" id="7G9N"/>
<dbReference type="PDBsum" id="7G9O"/>
<dbReference type="PDBsum" id="7G9P"/>
<dbReference type="PDBsum" id="7G9Q"/>
<dbReference type="PDBsum" id="7G9R"/>
<dbReference type="PDBsum" id="7G9S"/>
<dbReference type="PDBsum" id="7G9T"/>
<dbReference type="PDBsum" id="7G9U"/>
<dbReference type="PDBsum" id="7G9V"/>
<dbReference type="PDBsum" id="7G9W"/>
<dbReference type="PDBsum" id="7G9X"/>
<dbReference type="PDBsum" id="7G9Y"/>
<dbReference type="PDBsum" id="7G9Z"/>
<dbReference type="PDBsum" id="7GA0"/>
<dbReference type="PDBsum" id="7GA1"/>
<dbReference type="PDBsum" id="7GA2"/>
<dbReference type="PDBsum" id="7GA3"/>
<dbReference type="PDBsum" id="7GA4"/>
<dbReference type="PDBsum" id="7GA5"/>
<dbReference type="PDBsum" id="7GA6"/>
<dbReference type="PDBsum" id="7GA7"/>
<dbReference type="PDBsum" id="7H1H"/>
<dbReference type="PDBsum" id="7H1I"/>
<dbReference type="PDBsum" id="7H1J"/>
<dbReference type="PDBsum" id="7H1K"/>
<dbReference type="PDBsum" id="7H1L"/>
<dbReference type="PDBsum" id="7H1M"/>
<dbReference type="PDBsum" id="7H1N"/>
<dbReference type="PDBsum" id="7H1O"/>
<dbReference type="PDBsum" id="7H1P"/>
<dbReference type="PDBsum" id="7H1Q"/>
<dbReference type="PDBsum" id="7H1R"/>
<dbReference type="PDBsum" id="7H1S"/>
<dbReference type="PDBsum" id="7H1T"/>
<dbReference type="PDBsum" id="7H1U"/>
<dbReference type="PDBsum" id="7H1V"/>
<dbReference type="PDBsum" id="7H1W"/>
<dbReference type="PDBsum" id="7H1X"/>
<dbReference type="PDBsum" id="7H1Y"/>
<dbReference type="PDBsum" id="7H1Z"/>
<dbReference type="PDBsum" id="7H20"/>
<dbReference type="PDBsum" id="7H21"/>
<dbReference type="PDBsum" id="7H22"/>
<dbReference type="PDBsum" id="7H23"/>
<dbReference type="PDBsum" id="7H24"/>
<dbReference type="PDBsum" id="7H25"/>
<dbReference type="PDBsum" id="7H26"/>
<dbReference type="PDBsum" id="7H27"/>
<dbReference type="PDBsum" id="7H28"/>
<dbReference type="PDBsum" id="7H29"/>
<dbReference type="PDBsum" id="7H2A"/>
<dbReference type="PDBsum" id="7H2B"/>
<dbReference type="PDBsum" id="7H2C"/>
<dbReference type="PDBsum" id="7H2D"/>
<dbReference type="PDBsum" id="7H2E"/>
<dbReference type="PDBsum" id="7H2F"/>
<dbReference type="PDBsum" id="7H2G"/>
<dbReference type="PDBsum" id="7H2H"/>
<dbReference type="PDBsum" id="7H2I"/>
<dbReference type="PDBsum" id="7H2J"/>
<dbReference type="PDBsum" id="7H2K"/>
<dbReference type="PDBsum" id="7H2L"/>
<dbReference type="PDBsum" id="7H2M"/>
<dbReference type="PDBsum" id="7H2N"/>
<dbReference type="PDBsum" id="7H2O"/>
<dbReference type="PDBsum" id="7H2P"/>
<dbReference type="PDBsum" id="7H2Q"/>
<dbReference type="PDBsum" id="7H2R"/>
<dbReference type="PDBsum" id="7H2S"/>
<dbReference type="PDBsum" id="7HOJ"/>
<dbReference type="PDBsum" id="7HOK"/>
<dbReference type="PDBsum" id="7HOL"/>
<dbReference type="PDBsum" id="7HOM"/>
<dbReference type="PDBsum" id="7HOP"/>
<dbReference type="PDBsum" id="7HOQ"/>
<dbReference type="PDBsum" id="7HOR"/>
<dbReference type="PDBsum" id="7HOS"/>
<dbReference type="PDBsum" id="7HOT"/>
<dbReference type="PDBsum" id="7HOU"/>
<dbReference type="PDBsum" id="7HOV"/>
<dbReference type="PDBsum" id="7HOW"/>
<dbReference type="PDBsum" id="7HOX"/>
<dbReference type="PDBsum" id="7HOZ"/>
<dbReference type="PDBsum" id="7HP0"/>
<dbReference type="PDBsum" id="7HP1"/>
<dbReference type="PDBsum" id="7HP2"/>
<dbReference type="PDBsum" id="7HP4"/>
<dbReference type="PDBsum" id="7HP5"/>
<dbReference type="PDBsum" id="7HP6"/>
<dbReference type="PDBsum" id="7HP7"/>
<dbReference type="PDBsum" id="7HP8"/>
<dbReference type="PDBsum" id="7HP9"/>
<dbReference type="PDBsum" id="7HPA"/>
<dbReference type="PDBsum" id="7HPB"/>
<dbReference type="PDBsum" id="7HPC"/>
<dbReference type="PDBsum" id="7HPD"/>
<dbReference type="PDBsum" id="7HPE"/>
<dbReference type="PDBsum" id="7HPF"/>
<dbReference type="PDBsum" id="7HPG"/>
<dbReference type="PDBsum" id="7HPH"/>
<dbReference type="PDBsum" id="7I1K"/>
<dbReference type="PDBsum" id="7I1L"/>
<dbReference type="PDBsum" id="7I1M"/>
<dbReference type="PDBsum" id="7I1N"/>
<dbReference type="PDBsum" id="7I1O"/>
<dbReference type="PDBsum" id="7I1P"/>
<dbReference type="PDBsum" id="7I1Q"/>
<dbReference type="PDBsum" id="7I1S"/>
<dbReference type="PDBsum" id="7I1T"/>
<dbReference type="PDBsum" id="7I1V"/>
<dbReference type="PDBsum" id="7I1W"/>
<dbReference type="PDBsum" id="7I1Y"/>
<dbReference type="PDBsum" id="7I1Z"/>
<dbReference type="PDBsum" id="7I20"/>
<dbReference type="PDBsum" id="7I21"/>
<dbReference type="PDBsum" id="7I22"/>
<dbReference type="PDBsum" id="7O2M"/>
<dbReference type="PDBsum" id="7O55"/>
<dbReference type="PDBsum" id="7OBV"/>
<dbReference type="PDBsum" id="7OC2"/>
<dbReference type="PDBsum" id="7PFQ"/>
<dbReference type="PDBsum" id="7PFY"/>
<dbReference type="PDBsum" id="7PFZ"/>
<dbReference type="PDBsum" id="7PG1"/>
<dbReference type="PDBsum" id="7PGC"/>
<dbReference type="PDBsum" id="7VLG"/>
<dbReference type="PDBsum" id="7VLH"/>
<dbReference type="PDBsum" id="7VLI"/>
<dbReference type="PDBsum" id="7VXX"/>
<dbReference type="PDBsum" id="7VXY"/>
<dbReference type="PDBsum" id="7ZLC"/>
<dbReference type="PDBsum" id="7ZLD"/>
<dbReference type="PDBsum" id="7ZMI"/>
<dbReference type="PDBsum" id="7ZNO"/>
<dbReference type="PDBsum" id="7ZPD"/>
<dbReference type="PDBsum" id="7ZQ1"/>
<dbReference type="PDBsum" id="7ZQF"/>
<dbReference type="PDBsum" id="7ZTM"/>
<dbReference type="PDBsum" id="7ZUM"/>
<dbReference type="PDBsum" id="7ZV4"/>
<dbReference type="PDBsum" id="7ZVV"/>
<dbReference type="PDBsum" id="7ZW5"/>
<dbReference type="PDBsum" id="7ZWK"/>
<dbReference type="PDBsum" id="7ZYS"/>
<dbReference type="PDBsum" id="8A15"/>
<dbReference type="PDBsum" id="8AQA"/>
<dbReference type="PDBsum" id="8AQB"/>
<dbReference type="PDBsum" id="8AQK"/>
<dbReference type="PDBsum" id="8PEM"/>
<dbReference type="PDBsum" id="8PN6"/>
<dbReference type="PDBsum" id="8UM3"/>
<dbReference type="PDBsum" id="8V7R"/>
<dbReference type="PDBsum" id="8V7U"/>
<dbReference type="PDBsum" id="8WN8"/>
<dbReference type="PDBsum" id="8WNP"/>
<dbReference type="PDBsum" id="8WNU"/>
<dbReference type="PDBsum" id="8WO0"/>
<dbReference type="PDBsum" id="8WO4"/>
<dbReference type="EMDB" id="EMD-37663"/>
<dbReference type="EMDB" id="EMD-37670"/>
<dbReference type="EMDB" id="EMD-37673"/>
<dbReference type="EMDB" id="EMD-37676"/>
<dbReference type="EMDB" id="EMD-37678"/>
<dbReference type="SMR" id="Q32ZE1"/>
<dbReference type="IntAct" id="Q32ZE1">
    <property type="interactions" value="1"/>
</dbReference>
<dbReference type="BindingDB" id="Q32ZE1"/>
<dbReference type="ChEMBL" id="CHEMBL4523307"/>
<dbReference type="MEROPS" id="S07.003"/>
<dbReference type="iPTMnet" id="Q32ZE1"/>
<dbReference type="ABCD" id="Q32ZE1">
    <property type="antibodies" value="41 sequenced antibodies"/>
</dbReference>
<dbReference type="GeneID" id="7751225"/>
<dbReference type="KEGG" id="vg:7751225"/>
<dbReference type="BRENDA" id="2.7.7.48">
    <property type="organism ID" value="9645"/>
</dbReference>
<dbReference type="BRENDA" id="3.4.21.91">
    <property type="organism ID" value="9645"/>
</dbReference>
<dbReference type="Proteomes" id="UP000054557">
    <property type="component" value="Genome"/>
</dbReference>
<dbReference type="GO" id="GO:0005576">
    <property type="term" value="C:extracellular region"/>
    <property type="evidence" value="ECO:0007669"/>
    <property type="project" value="UniProtKB-SubCell"/>
</dbReference>
<dbReference type="GO" id="GO:0030430">
    <property type="term" value="C:host cell cytoplasm"/>
    <property type="evidence" value="ECO:0000314"/>
    <property type="project" value="UniProt"/>
</dbReference>
<dbReference type="GO" id="GO:0044167">
    <property type="term" value="C:host cell endoplasmic reticulum membrane"/>
    <property type="evidence" value="ECO:0007669"/>
    <property type="project" value="UniProtKB-SubCell"/>
</dbReference>
<dbReference type="GO" id="GO:0042025">
    <property type="term" value="C:host cell nucleus"/>
    <property type="evidence" value="ECO:0007669"/>
    <property type="project" value="UniProtKB-SubCell"/>
</dbReference>
<dbReference type="GO" id="GO:0044220">
    <property type="term" value="C:host cell perinuclear region of cytoplasm"/>
    <property type="evidence" value="ECO:0007669"/>
    <property type="project" value="UniProtKB-SubCell"/>
</dbReference>
<dbReference type="GO" id="GO:0016020">
    <property type="term" value="C:membrane"/>
    <property type="evidence" value="ECO:0007669"/>
    <property type="project" value="UniProtKB-KW"/>
</dbReference>
<dbReference type="GO" id="GO:0019028">
    <property type="term" value="C:viral capsid"/>
    <property type="evidence" value="ECO:0007669"/>
    <property type="project" value="UniProtKB-KW"/>
</dbReference>
<dbReference type="GO" id="GO:0019031">
    <property type="term" value="C:viral envelope"/>
    <property type="evidence" value="ECO:0007669"/>
    <property type="project" value="UniProtKB-KW"/>
</dbReference>
<dbReference type="GO" id="GO:0055036">
    <property type="term" value="C:virion membrane"/>
    <property type="evidence" value="ECO:0007669"/>
    <property type="project" value="UniProtKB-SubCell"/>
</dbReference>
<dbReference type="GO" id="GO:0005524">
    <property type="term" value="F:ATP binding"/>
    <property type="evidence" value="ECO:0007669"/>
    <property type="project" value="UniProtKB-KW"/>
</dbReference>
<dbReference type="GO" id="GO:0016887">
    <property type="term" value="F:ATP hydrolysis activity"/>
    <property type="evidence" value="ECO:0007669"/>
    <property type="project" value="RHEA"/>
</dbReference>
<dbReference type="GO" id="GO:0003725">
    <property type="term" value="F:double-stranded RNA binding"/>
    <property type="evidence" value="ECO:0007669"/>
    <property type="project" value="InterPro"/>
</dbReference>
<dbReference type="GO" id="GO:0005525">
    <property type="term" value="F:GTP binding"/>
    <property type="evidence" value="ECO:0007669"/>
    <property type="project" value="UniProtKB-KW"/>
</dbReference>
<dbReference type="GO" id="GO:0008289">
    <property type="term" value="F:lipid binding"/>
    <property type="evidence" value="ECO:0000269"/>
    <property type="project" value="DisProt"/>
</dbReference>
<dbReference type="GO" id="GO:0046872">
    <property type="term" value="F:metal ion binding"/>
    <property type="evidence" value="ECO:0007669"/>
    <property type="project" value="UniProtKB-KW"/>
</dbReference>
<dbReference type="GO" id="GO:0004483">
    <property type="term" value="F:mRNA (nucleoside-2'-O-)-methyltransferase activity"/>
    <property type="evidence" value="ECO:0007669"/>
    <property type="project" value="UniProtKB-EC"/>
</dbReference>
<dbReference type="GO" id="GO:0004482">
    <property type="term" value="F:mRNA 5'-cap (guanine-N7-)-methyltransferase activity"/>
    <property type="evidence" value="ECO:0007669"/>
    <property type="project" value="UniProtKB-EC"/>
</dbReference>
<dbReference type="GO" id="GO:0046983">
    <property type="term" value="F:protein dimerization activity"/>
    <property type="evidence" value="ECO:0007669"/>
    <property type="project" value="InterPro"/>
</dbReference>
<dbReference type="GO" id="GO:0030674">
    <property type="term" value="F:protein-macromolecule adaptor activity"/>
    <property type="evidence" value="ECO:0000314"/>
    <property type="project" value="UniProt"/>
</dbReference>
<dbReference type="GO" id="GO:0003724">
    <property type="term" value="F:RNA helicase activity"/>
    <property type="evidence" value="ECO:0007669"/>
    <property type="project" value="UniProtKB-EC"/>
</dbReference>
<dbReference type="GO" id="GO:0003968">
    <property type="term" value="F:RNA-directed RNA polymerase activity"/>
    <property type="evidence" value="ECO:0007669"/>
    <property type="project" value="UniProtKB-KW"/>
</dbReference>
<dbReference type="GO" id="GO:0004252">
    <property type="term" value="F:serine-type endopeptidase activity"/>
    <property type="evidence" value="ECO:0007669"/>
    <property type="project" value="InterPro"/>
</dbReference>
<dbReference type="GO" id="GO:0005198">
    <property type="term" value="F:structural molecule activity"/>
    <property type="evidence" value="ECO:0007669"/>
    <property type="project" value="InterPro"/>
</dbReference>
<dbReference type="GO" id="GO:0075512">
    <property type="term" value="P:clathrin-dependent endocytosis of virus by host cell"/>
    <property type="evidence" value="ECO:0007669"/>
    <property type="project" value="UniProtKB-KW"/>
</dbReference>
<dbReference type="GO" id="GO:0039654">
    <property type="term" value="P:fusion of virus membrane with host endosome membrane"/>
    <property type="evidence" value="ECO:0007669"/>
    <property type="project" value="UniProtKB-KW"/>
</dbReference>
<dbReference type="GO" id="GO:0006508">
    <property type="term" value="P:proteolysis"/>
    <property type="evidence" value="ECO:0007669"/>
    <property type="project" value="UniProtKB-KW"/>
</dbReference>
<dbReference type="GO" id="GO:0039520">
    <property type="term" value="P:symbiont-mediated activation of host autophagy"/>
    <property type="evidence" value="ECO:0007669"/>
    <property type="project" value="UniProtKB-KW"/>
</dbReference>
<dbReference type="GO" id="GO:0039723">
    <property type="term" value="P:symbiont-mediated suppression of host cytoplasmic pattern recognition receptor signaling pathway via inhibition of TBK1 activity"/>
    <property type="evidence" value="ECO:0007669"/>
    <property type="project" value="UniProtKB-KW"/>
</dbReference>
<dbReference type="GO" id="GO:0140886">
    <property type="term" value="P:symbiont-mediated suppression of host interferon-mediated signaling pathway"/>
    <property type="evidence" value="ECO:0000314"/>
    <property type="project" value="UniProt"/>
</dbReference>
<dbReference type="GO" id="GO:0039574">
    <property type="term" value="P:symbiont-mediated suppression of host JAK-STAT cascade via inhibition of host TYK2 activity"/>
    <property type="evidence" value="ECO:0007669"/>
    <property type="project" value="UniProtKB-KW"/>
</dbReference>
<dbReference type="GO" id="GO:0039563">
    <property type="term" value="P:symbiont-mediated suppression of host JAK-STAT cascade via inhibition of STAT1 activity"/>
    <property type="evidence" value="ECO:0007669"/>
    <property type="project" value="UniProtKB-KW"/>
</dbReference>
<dbReference type="GO" id="GO:0039564">
    <property type="term" value="P:symbiont-mediated suppression of host JAK-STAT cascade via inhibition of STAT2 activity"/>
    <property type="evidence" value="ECO:0007669"/>
    <property type="project" value="UniProtKB-KW"/>
</dbReference>
<dbReference type="GO" id="GO:0039722">
    <property type="term" value="P:symbiont-mediated suppression of host toll-like receptor signaling pathway"/>
    <property type="evidence" value="ECO:0007669"/>
    <property type="project" value="UniProtKB-KW"/>
</dbReference>
<dbReference type="GO" id="GO:0039502">
    <property type="term" value="P:symbiont-mediated suppression of host type I interferon-mediated signaling pathway"/>
    <property type="evidence" value="ECO:0007669"/>
    <property type="project" value="UniProtKB-KW"/>
</dbReference>
<dbReference type="GO" id="GO:0039694">
    <property type="term" value="P:viral RNA genome replication"/>
    <property type="evidence" value="ECO:0007669"/>
    <property type="project" value="InterPro"/>
</dbReference>
<dbReference type="GO" id="GO:0019062">
    <property type="term" value="P:virion attachment to host cell"/>
    <property type="evidence" value="ECO:0007669"/>
    <property type="project" value="UniProtKB-KW"/>
</dbReference>
<dbReference type="CDD" id="cd20761">
    <property type="entry name" value="capping_2-OMTase_Flaviviridae"/>
    <property type="match status" value="1"/>
</dbReference>
<dbReference type="CDD" id="cd17931">
    <property type="entry name" value="DEXHc_viral_Ns3"/>
    <property type="match status" value="1"/>
</dbReference>
<dbReference type="CDD" id="cd12149">
    <property type="entry name" value="Flavi_E_C"/>
    <property type="match status" value="1"/>
</dbReference>
<dbReference type="CDD" id="cd17038">
    <property type="entry name" value="Flavi_M"/>
    <property type="match status" value="1"/>
</dbReference>
<dbReference type="CDD" id="cd23204">
    <property type="entry name" value="Flavivirus_RdRp"/>
    <property type="match status" value="1"/>
</dbReference>
<dbReference type="CDD" id="cd18806">
    <property type="entry name" value="SF2_C_viral"/>
    <property type="match status" value="1"/>
</dbReference>
<dbReference type="DisProt" id="DP01256"/>
<dbReference type="FunFam" id="1.20.1280.260:FF:000001">
    <property type="entry name" value="Envelope glycoprotein"/>
    <property type="match status" value="1"/>
</dbReference>
<dbReference type="FunFam" id="2.60.40.350:FF:000001">
    <property type="entry name" value="Envelope glycoprotein"/>
    <property type="match status" value="1"/>
</dbReference>
<dbReference type="FunFam" id="1.10.10.930:FF:000001">
    <property type="entry name" value="Genome polyprotein"/>
    <property type="match status" value="1"/>
</dbReference>
<dbReference type="FunFam" id="1.10.260.90:FF:000001">
    <property type="entry name" value="Genome polyprotein"/>
    <property type="match status" value="1"/>
</dbReference>
<dbReference type="FunFam" id="2.40.10.120:FF:000005">
    <property type="entry name" value="Genome polyprotein"/>
    <property type="match status" value="1"/>
</dbReference>
<dbReference type="FunFam" id="2.40.10.120:FF:000006">
    <property type="entry name" value="Genome polyprotein"/>
    <property type="match status" value="1"/>
</dbReference>
<dbReference type="FunFam" id="2.60.260.50:FF:000001">
    <property type="entry name" value="Genome polyprotein"/>
    <property type="match status" value="1"/>
</dbReference>
<dbReference type="FunFam" id="3.30.70.2840:FF:000001">
    <property type="entry name" value="Genome polyprotein"/>
    <property type="match status" value="1"/>
</dbReference>
<dbReference type="FunFam" id="3.30.70.2840:FF:000002">
    <property type="entry name" value="Genome polyprotein"/>
    <property type="match status" value="1"/>
</dbReference>
<dbReference type="FunFam" id="3.30.70.2840:FF:000004">
    <property type="entry name" value="Genome polyprotein"/>
    <property type="match status" value="1"/>
</dbReference>
<dbReference type="FunFam" id="3.40.50.150:FF:000105">
    <property type="entry name" value="Genome polyprotein"/>
    <property type="match status" value="1"/>
</dbReference>
<dbReference type="FunFam" id="3.40.50.300:FF:000763">
    <property type="entry name" value="Genome polyprotein"/>
    <property type="match status" value="1"/>
</dbReference>
<dbReference type="Gene3D" id="1.10.10.930">
    <property type="match status" value="1"/>
</dbReference>
<dbReference type="Gene3D" id="1.10.260.90">
    <property type="match status" value="1"/>
</dbReference>
<dbReference type="Gene3D" id="1.20.1280.260">
    <property type="match status" value="1"/>
</dbReference>
<dbReference type="Gene3D" id="2.40.10.120">
    <property type="match status" value="2"/>
</dbReference>
<dbReference type="Gene3D" id="2.60.40.350">
    <property type="match status" value="1"/>
</dbReference>
<dbReference type="Gene3D" id="1.10.8.970">
    <property type="entry name" value="Flavivirus envelope glycoprotein M-like"/>
    <property type="match status" value="1"/>
</dbReference>
<dbReference type="Gene3D" id="2.60.260.50">
    <property type="entry name" value="Flavivirus polyprotein propeptide domain"/>
    <property type="match status" value="1"/>
</dbReference>
<dbReference type="Gene3D" id="3.30.70.2840">
    <property type="entry name" value="Flavivirus RNA-directed RNA polymerase, thumb domain"/>
    <property type="match status" value="3"/>
</dbReference>
<dbReference type="Gene3D" id="3.40.50.300">
    <property type="entry name" value="P-loop containing nucleotide triphosphate hydrolases"/>
    <property type="match status" value="2"/>
</dbReference>
<dbReference type="Gene3D" id="2.60.98.10">
    <property type="entry name" value="Tick-borne Encephalitis virus Glycoprotein, domain 1"/>
    <property type="match status" value="1"/>
</dbReference>
<dbReference type="Gene3D" id="3.40.50.150">
    <property type="entry name" value="Vaccinia Virus protein VP39"/>
    <property type="match status" value="1"/>
</dbReference>
<dbReference type="Gene3D" id="3.30.67.10">
    <property type="entry name" value="Viral Envelope Glycoprotein, domain 2"/>
    <property type="match status" value="1"/>
</dbReference>
<dbReference type="Gene3D" id="3.30.387.10">
    <property type="entry name" value="Viral Envelope Glycoprotein, domain 3"/>
    <property type="match status" value="1"/>
</dbReference>
<dbReference type="InterPro" id="IPR043502">
    <property type="entry name" value="DNA/RNA_pol_sf"/>
</dbReference>
<dbReference type="InterPro" id="IPR000069">
    <property type="entry name" value="Env_glycoprot_M_flavivir"/>
</dbReference>
<dbReference type="InterPro" id="IPR038302">
    <property type="entry name" value="Env_glycoprot_M_sf_flavivir"/>
</dbReference>
<dbReference type="InterPro" id="IPR013755">
    <property type="entry name" value="Flav_gly_cen_dom_subdom1"/>
</dbReference>
<dbReference type="InterPro" id="IPR001122">
    <property type="entry name" value="Flavi_capsidC"/>
</dbReference>
<dbReference type="InterPro" id="IPR037172">
    <property type="entry name" value="Flavi_capsidC_sf"/>
</dbReference>
<dbReference type="InterPro" id="IPR011492">
    <property type="entry name" value="Flavi_DEAD"/>
</dbReference>
<dbReference type="InterPro" id="IPR027287">
    <property type="entry name" value="Flavi_E_Ig-like"/>
</dbReference>
<dbReference type="InterPro" id="IPR026470">
    <property type="entry name" value="Flavi_E_Stem/Anchor_dom"/>
</dbReference>
<dbReference type="InterPro" id="IPR038345">
    <property type="entry name" value="Flavi_E_Stem/Anchor_dom_sf"/>
</dbReference>
<dbReference type="InterPro" id="IPR011998">
    <property type="entry name" value="Flavi_Glycoprot_E_cen/dimer"/>
</dbReference>
<dbReference type="InterPro" id="IPR001157">
    <property type="entry name" value="Flavi_NS1"/>
</dbReference>
<dbReference type="InterPro" id="IPR000752">
    <property type="entry name" value="Flavi_NS2A"/>
</dbReference>
<dbReference type="InterPro" id="IPR000487">
    <property type="entry name" value="Flavi_NS2B"/>
</dbReference>
<dbReference type="InterPro" id="IPR001850">
    <property type="entry name" value="Flavi_NS3_S7"/>
</dbReference>
<dbReference type="InterPro" id="IPR000404">
    <property type="entry name" value="Flavi_NS4A"/>
</dbReference>
<dbReference type="InterPro" id="IPR001528">
    <property type="entry name" value="Flavi_NS4B"/>
</dbReference>
<dbReference type="InterPro" id="IPR046811">
    <property type="entry name" value="Flavi_NS5_thumb"/>
</dbReference>
<dbReference type="InterPro" id="IPR002535">
    <property type="entry name" value="Flavi_propep"/>
</dbReference>
<dbReference type="InterPro" id="IPR038688">
    <property type="entry name" value="Flavi_propep_sf"/>
</dbReference>
<dbReference type="InterPro" id="IPR047530">
    <property type="entry name" value="Flavi_RdRp"/>
</dbReference>
<dbReference type="InterPro" id="IPR000208">
    <property type="entry name" value="Flavi_RdRp_fingers/palm"/>
</dbReference>
<dbReference type="InterPro" id="IPR000336">
    <property type="entry name" value="Flavivir/Alphavir_Ig-like_sf"/>
</dbReference>
<dbReference type="InterPro" id="IPR014412">
    <property type="entry name" value="Gen_Poly_FLV"/>
</dbReference>
<dbReference type="InterPro" id="IPR036253">
    <property type="entry name" value="Glycoprot_cen/dimer_sf"/>
</dbReference>
<dbReference type="InterPro" id="IPR038055">
    <property type="entry name" value="Glycoprot_E_dimer_dom"/>
</dbReference>
<dbReference type="InterPro" id="IPR013756">
    <property type="entry name" value="GlyE_cen_dom_subdom2"/>
</dbReference>
<dbReference type="InterPro" id="IPR014001">
    <property type="entry name" value="Helicase_ATP-bd"/>
</dbReference>
<dbReference type="InterPro" id="IPR001650">
    <property type="entry name" value="Helicase_C-like"/>
</dbReference>
<dbReference type="InterPro" id="IPR014756">
    <property type="entry name" value="Ig_E-set"/>
</dbReference>
<dbReference type="InterPro" id="IPR026490">
    <property type="entry name" value="mRNA_cap_0/1_MeTrfase"/>
</dbReference>
<dbReference type="InterPro" id="IPR049486">
    <property type="entry name" value="NS3-hel_C_flaviviridae"/>
</dbReference>
<dbReference type="InterPro" id="IPR027417">
    <property type="entry name" value="P-loop_NTPase"/>
</dbReference>
<dbReference type="InterPro" id="IPR009003">
    <property type="entry name" value="Peptidase_S1_PA"/>
</dbReference>
<dbReference type="InterPro" id="IPR007094">
    <property type="entry name" value="RNA-dir_pol_PSvirus"/>
</dbReference>
<dbReference type="InterPro" id="IPR002877">
    <property type="entry name" value="RNA_MeTrfase_FtsJ_dom"/>
</dbReference>
<dbReference type="InterPro" id="IPR029063">
    <property type="entry name" value="SAM-dependent_MTases_sf"/>
</dbReference>
<dbReference type="NCBIfam" id="TIGR04240">
    <property type="entry name" value="flavi_E_stem"/>
    <property type="match status" value="1"/>
</dbReference>
<dbReference type="Pfam" id="PF20907">
    <property type="entry name" value="Flav_NS3-hel_C"/>
    <property type="match status" value="1"/>
</dbReference>
<dbReference type="Pfam" id="PF01003">
    <property type="entry name" value="Flavi_capsid"/>
    <property type="match status" value="1"/>
</dbReference>
<dbReference type="Pfam" id="PF07652">
    <property type="entry name" value="Flavi_DEAD"/>
    <property type="match status" value="1"/>
</dbReference>
<dbReference type="Pfam" id="PF21659">
    <property type="entry name" value="Flavi_E_stem"/>
    <property type="match status" value="1"/>
</dbReference>
<dbReference type="Pfam" id="PF02832">
    <property type="entry name" value="Flavi_glycop_C"/>
    <property type="match status" value="1"/>
</dbReference>
<dbReference type="Pfam" id="PF00869">
    <property type="entry name" value="Flavi_glycoprot"/>
    <property type="match status" value="1"/>
</dbReference>
<dbReference type="Pfam" id="PF01004">
    <property type="entry name" value="Flavi_M"/>
    <property type="match status" value="1"/>
</dbReference>
<dbReference type="Pfam" id="PF00948">
    <property type="entry name" value="Flavi_NS1"/>
    <property type="match status" value="1"/>
</dbReference>
<dbReference type="Pfam" id="PF01005">
    <property type="entry name" value="Flavi_NS2A"/>
    <property type="match status" value="1"/>
</dbReference>
<dbReference type="Pfam" id="PF01002">
    <property type="entry name" value="Flavi_NS2B"/>
    <property type="match status" value="1"/>
</dbReference>
<dbReference type="Pfam" id="PF01350">
    <property type="entry name" value="Flavi_NS4A"/>
    <property type="match status" value="1"/>
</dbReference>
<dbReference type="Pfam" id="PF01349">
    <property type="entry name" value="Flavi_NS4B"/>
    <property type="match status" value="1"/>
</dbReference>
<dbReference type="Pfam" id="PF00972">
    <property type="entry name" value="Flavi_NS5"/>
    <property type="match status" value="1"/>
</dbReference>
<dbReference type="Pfam" id="PF20483">
    <property type="entry name" value="Flavi_NS5_thumb"/>
    <property type="match status" value="1"/>
</dbReference>
<dbReference type="Pfam" id="PF01570">
    <property type="entry name" value="Flavi_propep"/>
    <property type="match status" value="1"/>
</dbReference>
<dbReference type="Pfam" id="PF01728">
    <property type="entry name" value="FtsJ"/>
    <property type="match status" value="1"/>
</dbReference>
<dbReference type="Pfam" id="PF00949">
    <property type="entry name" value="Peptidase_S7"/>
    <property type="match status" value="1"/>
</dbReference>
<dbReference type="PIRSF" id="PIRSF003817">
    <property type="entry name" value="Gen_Poly_FLV"/>
    <property type="match status" value="1"/>
</dbReference>
<dbReference type="SMART" id="SM00487">
    <property type="entry name" value="DEXDc"/>
    <property type="match status" value="1"/>
</dbReference>
<dbReference type="SMART" id="SM00490">
    <property type="entry name" value="HELICc"/>
    <property type="match status" value="1"/>
</dbReference>
<dbReference type="SUPFAM" id="SSF56672">
    <property type="entry name" value="DNA/RNA polymerases"/>
    <property type="match status" value="1"/>
</dbReference>
<dbReference type="SUPFAM" id="SSF81296">
    <property type="entry name" value="E set domains"/>
    <property type="match status" value="1"/>
</dbReference>
<dbReference type="SUPFAM" id="SSF101257">
    <property type="entry name" value="Flavivirus capsid protein C"/>
    <property type="match status" value="1"/>
</dbReference>
<dbReference type="SUPFAM" id="SSF52540">
    <property type="entry name" value="P-loop containing nucleoside triphosphate hydrolases"/>
    <property type="match status" value="2"/>
</dbReference>
<dbReference type="SUPFAM" id="SSF53335">
    <property type="entry name" value="S-adenosyl-L-methionine-dependent methyltransferases"/>
    <property type="match status" value="1"/>
</dbReference>
<dbReference type="SUPFAM" id="SSF50494">
    <property type="entry name" value="Trypsin-like serine proteases"/>
    <property type="match status" value="1"/>
</dbReference>
<dbReference type="SUPFAM" id="SSF56983">
    <property type="entry name" value="Viral glycoprotein, central and dimerisation domains"/>
    <property type="match status" value="1"/>
</dbReference>
<dbReference type="PROSITE" id="PS51527">
    <property type="entry name" value="FLAVIVIRUS_NS2B"/>
    <property type="match status" value="1"/>
</dbReference>
<dbReference type="PROSITE" id="PS51528">
    <property type="entry name" value="FLAVIVIRUS_NS3PRO"/>
    <property type="match status" value="1"/>
</dbReference>
<dbReference type="PROSITE" id="PS51192">
    <property type="entry name" value="HELICASE_ATP_BIND_1"/>
    <property type="match status" value="1"/>
</dbReference>
<dbReference type="PROSITE" id="PS51194">
    <property type="entry name" value="HELICASE_CTER"/>
    <property type="match status" value="1"/>
</dbReference>
<dbReference type="PROSITE" id="PS50507">
    <property type="entry name" value="RDRP_SSRNA_POS"/>
    <property type="match status" value="1"/>
</dbReference>
<dbReference type="PROSITE" id="PS51591">
    <property type="entry name" value="RNA_CAP01_NS5_MT"/>
    <property type="match status" value="1"/>
</dbReference>
<organismHost>
    <name type="scientific">Aedes aegypti</name>
    <name type="common">Yellowfever mosquito</name>
    <name type="synonym">Culex aegypti</name>
    <dbReference type="NCBI Taxonomy" id="7159"/>
</organismHost>
<organismHost>
    <name type="scientific">Aedes albopictus</name>
    <name type="common">Asian tiger mosquito</name>
    <name type="synonym">Stegomyia albopicta</name>
    <dbReference type="NCBI Taxonomy" id="7160"/>
</organismHost>
<organismHost>
    <name type="scientific">Homo sapiens</name>
    <name type="common">Human</name>
    <dbReference type="NCBI Taxonomy" id="9606"/>
</organismHost>
<organismHost>
    <name type="scientific">Macaca mulatta</name>
    <name type="common">Rhesus macaque</name>
    <dbReference type="NCBI Taxonomy" id="9544"/>
</organismHost>
<organism>
    <name type="scientific">Zika virus</name>
    <name type="common">ZIKV</name>
    <dbReference type="NCBI Taxonomy" id="64320"/>
    <lineage>
        <taxon>Viruses</taxon>
        <taxon>Riboviria</taxon>
        <taxon>Orthornavirae</taxon>
        <taxon>Kitrinoviricota</taxon>
        <taxon>Flasuviricetes</taxon>
        <taxon>Amarillovirales</taxon>
        <taxon>Flaviviridae</taxon>
        <taxon>Orthoflavivirus</taxon>
        <taxon>Orthoflavivirus zikaense</taxon>
    </lineage>
</organism>
<comment type="function">
    <molecule>Capsid protein C</molecule>
    <text evidence="1 9">Plays a role in virus budding by binding to the host cell membrane and packages the viral RNA into a nucleocapsid that forms the core of the mature virus particle. During virus entry, may induce genome penetration into the host cytoplasm after hemifusion induced by the surface proteins. Can migrate to the cell nucleus where it modulates host functions. Inhibits the integrated stress response (ISR) in the infected cell (By similarity).</text>
</comment>
<comment type="function">
    <molecule>Capsid protein C</molecule>
    <text evidence="3">Inhibits RNA silencing by interfering with host Dicer.</text>
</comment>
<comment type="function">
    <molecule>Peptide pr</molecule>
    <text evidence="9">Prevents premature fusion activity of envelope proteins in trans-Golgi by binding to envelope protein E at pH 6.0. After virion release in extracellular space, gets dissociated from E dimers.</text>
</comment>
<comment type="function">
    <molecule>Protein prM</molecule>
    <text evidence="1 9">Plays a role in host immune defense modulation and protection of envelope protein E during virion synthesis. PrM-E cleavage is inefficient, many virions are only partially matured and immature prM-E proteins could play a role in immune evasion. Contributes to fetal microcephaly in humans. Acts as a chaperone for envelope protein E during intracellular virion assembly by masking and inactivating envelope protein E fusion peptide. prM is the only viral peptide matured by host furin in the trans-Golgi network probably to avoid catastrophic activation of the viral fusion activity in acidic Golgi compartment prior to virion release.</text>
</comment>
<comment type="function">
    <molecule>Small envelope protein M</molecule>
    <text evidence="9">May play a role in virus budding. Exerts cytotoxic effects by activating a mitochondrial apoptotic pathway through M ectodomain. May display a viroporin activity.</text>
</comment>
<comment type="function">
    <molecule>Envelope protein E</molecule>
    <text evidence="2 9">Binds to host cell surface receptors and mediates fusion between viral and cellular membranes. Efficient virus attachment to cell is, at least in part, mediated by host HAVCR1 in a cell-type specific manner (By similarity). In addition, host NCAM1 can also be used as entry receptor (By similarity). Interaction with host HSPA5 plays an important role in the early stages of infection as well (By similarity). Envelope protein is synthesized in the endoplasmic reticulum and forms a heterodimer with protein prM. The heterodimer plays a role in virion budding in the ER, and the newly formed immature particle is covered with 60 spikes composed of heterodimers between precursor prM and envelope protein E. The virion is transported to the Golgi apparatus where the low pH causes the dissociation of PrM-E heterodimers and formation of E homodimers. PrM-E cleavage is inefficient, many virions are only partially matured and immature prM-E proteins could play a role in immune evasion (By similarity).</text>
</comment>
<comment type="function">
    <molecule>Non-structural protein 1</molecule>
    <text evidence="30">Plays a role in the inhibition of host RLR-induced interferon-beta activation by targeting TANK-binding kinase 1/TBK1 (PubMed:28373913). In addition, recruits the host deubiquitinase USP8 to cleave 'Lys-11'-linked polyubiquitin chains from caspase-1/CASP1 thus inhibiting its proteasomal degradation. In turn, stabilized CASP1 promotes cleavage of cGAS, which inhibits its ability to recognize mitochondrial DNA release and initiate type I interferon signaling (PubMed:28373913).</text>
</comment>
<comment type="function">
    <molecule>Non-structural protein 2A</molecule>
    <text evidence="2 31 41 43">Component of the viral RNA replication complex that recruits genomic RNA, the structural protein prM/E complex, and the NS2B/NS3 protease complex to the virion assembly site and orchestrates virus morphogenesis (By similarity). Antagonizes also the host MDA5-mediated induction of alpha/beta interferon antiviral response (PubMed:31581385, PubMed:31882898). May disrupt adherens junction formation and thereby impair proliferation of radial cells in the host cortex (PubMed:28826723).</text>
</comment>
<comment type="function">
    <molecule>Serine protease subunit NS2B</molecule>
    <text evidence="17">Required cofactor for the serine protease function of NS3.</text>
</comment>
<comment type="function">
    <molecule>Serine protease NS3</molecule>
    <text evidence="1 18">Displays three enzymatic activities: serine protease, NTPase and RNA helicase. NS3 serine protease, in association with NS2B, performs its autocleavage and cleaves the polyprotein at dibasic sites in the cytoplasm: C-prM, NS2A-NS2B, NS2B-NS3, NS3-NS4A, NS4A-2K and NS4B-NS5. NS3 RNA helicase binds RNA and unwinds dsRNA in the 3' to 5' direction. Leads to translation arrest when expressed ex vivo (By similarity). Disrupts host centrosome organization in a CEP63-dependent manner to degrade host TBK1 and inhibits innate immune response. Inhibits the integrated stress response (ISR) in the infected cell (By similarity).</text>
</comment>
<comment type="function">
    <molecule>Non-structural protein 4A</molecule>
    <text evidence="1 12 24 38 41">Regulates the ATPase activity of the NS3 helicase activity (By similarity). NS4A allows NS3 helicase to conserve energy during unwinding (By similarity). Cooperatively with NS4B suppresses the Akt-mTOR pathway and leads to cellular dysregulation (PubMed:27524440). By inhibiting host ANKLE2 functions, may cause defects in brain development, such as microcephaly (PubMed:30550790). Also antagonizes the host MDA5-mediated induction of alpha/beta interferon antiviral response (PubMed:31581385). Inhibits the integrated stress response (ISR) in the infected cell (By similarity).</text>
</comment>
<comment type="function">
    <molecule>Peptide 2k</molecule>
    <text evidence="9">Functions as a signal peptide for NS4B and is required for the interferon antagonism activity of the latter.</text>
</comment>
<comment type="function">
    <molecule>Non-structural protein 4B</molecule>
    <text evidence="12 24 30">Induces the formation of ER-derived membrane vesicles where the viral replication takes place (By similarity). Also plays a role in the inhibition of host RLR-induced interferon-beta production at TANK-binding kinase 1/TBK1 level (PubMed:28373913). Cooperatively with NS4A suppresses the Akt-mTOR pathway and leads to cellular dysregulation (PubMed:27524440).</text>
</comment>
<comment type="function">
    <molecule>RNA-directed RNA polymerase NS5</molecule>
    <text evidence="1 20 25 37 42 45 49">Replicates the viral (+) and (-) RNA genome, and performs the capping of genomes in the cytoplasm (PubMed:31090058). Methylates viral RNA cap at guanine N-7 and ribose 2'-O positions. Once sufficient NS5 is expressed, binds to the cap-proximal structure and inhibits further translation of the viral genome (PubMed:32313955). Besides its role in RNA genome replication, also prevents the establishment of a cellular antiviral state by blocking the interferon-alpha/beta (IFN-alpha/beta) signaling pathway. Mechanistically, interferes with host kinases TBK1 and IKKE upstream of interferon regulatory factor 3/IRF3 to inhibit the RIG-I pathway (PubMed:30530224, PubMed:31690057). Also antagonizes type I interferon signaling by targeting STAT2 for degradation by the proteasome thereby preventing activation of JAK-STAT signaling pathway (PubMed:27212660, PubMed:27797853). Mechanistically, acts as a scaffold protein to connect host ZSWIM8/CUL3 ligase complex and STAT2, leading to STAT2 degradation (PubMed:39145933). Within the host nucleus, disrupts host SUMO1 and STAT2 co-localization with PML, resulting in PML degradation (By similarity). May also reduce immune responses by preventing the recruitment of the host PAF1 complex to interferon-responsive genes (By similarity).</text>
</comment>
<comment type="catalytic activity">
    <reaction>
        <text>Selective hydrolysis of -Xaa-Xaa-|-Yaa- bonds in which each of the Xaa can be either Arg or Lys and Yaa can be either Ser or Ala.</text>
        <dbReference type="EC" id="3.4.21.91"/>
    </reaction>
</comment>
<comment type="catalytic activity">
    <reaction evidence="14 40">
        <text>RNA(n) + a ribonucleoside 5'-triphosphate = RNA(n+1) + diphosphate</text>
        <dbReference type="Rhea" id="RHEA:21248"/>
        <dbReference type="Rhea" id="RHEA-COMP:14527"/>
        <dbReference type="Rhea" id="RHEA-COMP:17342"/>
        <dbReference type="ChEBI" id="CHEBI:33019"/>
        <dbReference type="ChEBI" id="CHEBI:61557"/>
        <dbReference type="ChEBI" id="CHEBI:140395"/>
        <dbReference type="EC" id="2.7.7.48"/>
    </reaction>
</comment>
<comment type="catalytic activity">
    <reaction>
        <text>a ribonucleoside 5'-triphosphate + H2O = a ribonucleoside 5'-diphosphate + phosphate + H(+)</text>
        <dbReference type="Rhea" id="RHEA:23680"/>
        <dbReference type="ChEBI" id="CHEBI:15377"/>
        <dbReference type="ChEBI" id="CHEBI:15378"/>
        <dbReference type="ChEBI" id="CHEBI:43474"/>
        <dbReference type="ChEBI" id="CHEBI:57930"/>
        <dbReference type="ChEBI" id="CHEBI:61557"/>
        <dbReference type="EC" id="3.6.1.15"/>
    </reaction>
</comment>
<comment type="catalytic activity">
    <reaction evidence="12">
        <text>ATP + H2O = ADP + phosphate + H(+)</text>
        <dbReference type="Rhea" id="RHEA:13065"/>
        <dbReference type="ChEBI" id="CHEBI:15377"/>
        <dbReference type="ChEBI" id="CHEBI:15378"/>
        <dbReference type="ChEBI" id="CHEBI:30616"/>
        <dbReference type="ChEBI" id="CHEBI:43474"/>
        <dbReference type="ChEBI" id="CHEBI:456216"/>
        <dbReference type="EC" id="3.6.4.13"/>
    </reaction>
</comment>
<comment type="catalytic activity">
    <reaction evidence="19">
        <text>a 5'-end (5'-triphosphoguanosine)-ribonucleoside in mRNA + S-adenosyl-L-methionine = a 5'-end (N(7)-methyl 5'-triphosphoguanosine)-ribonucleoside in mRNA + S-adenosyl-L-homocysteine</text>
        <dbReference type="Rhea" id="RHEA:67008"/>
        <dbReference type="Rhea" id="RHEA-COMP:17166"/>
        <dbReference type="Rhea" id="RHEA-COMP:17167"/>
        <dbReference type="ChEBI" id="CHEBI:57856"/>
        <dbReference type="ChEBI" id="CHEBI:59789"/>
        <dbReference type="ChEBI" id="CHEBI:156461"/>
        <dbReference type="ChEBI" id="CHEBI:167617"/>
        <dbReference type="EC" id="2.1.1.56"/>
    </reaction>
</comment>
<comment type="catalytic activity">
    <reaction evidence="19">
        <text>a 5'-end (N(7)-methyl 5'-triphosphoguanosine)-ribonucleoside in mRNA + S-adenosyl-L-methionine = a 5'-end (N(7)-methyl 5'-triphosphoguanosine)-(2'-O-methyl-ribonucleoside) in mRNA + S-adenosyl-L-homocysteine + H(+)</text>
        <dbReference type="Rhea" id="RHEA:67020"/>
        <dbReference type="Rhea" id="RHEA-COMP:17167"/>
        <dbReference type="Rhea" id="RHEA-COMP:17168"/>
        <dbReference type="ChEBI" id="CHEBI:15378"/>
        <dbReference type="ChEBI" id="CHEBI:57856"/>
        <dbReference type="ChEBI" id="CHEBI:59789"/>
        <dbReference type="ChEBI" id="CHEBI:156461"/>
        <dbReference type="ChEBI" id="CHEBI:167609"/>
        <dbReference type="EC" id="2.1.1.57"/>
    </reaction>
</comment>
<comment type="subunit">
    <molecule>Capsid protein C</molecule>
    <text evidence="1 9">Homodimer (By similarity). Interacts with host SERTAD3; this interaction promotes capsid protein C degradation. Interacts with host CAPRIN1; this interaction is probably linked to the inhibition of stress granules formation by the virus (By similarity). Interacts with host G3BP1; this interaction is probably linked to the inhibition of stress granules formation by the virus (By similarity).</text>
</comment>
<comment type="subunit">
    <molecule>Protein prM</molecule>
    <text evidence="2 9">Forms heterodimers with envelope protein E in the endoplasmic reticulum and Golgi (By similarity). Interacts with non-structural protein 2A (By similarity).</text>
</comment>
<comment type="subunit">
    <molecule>Envelope protein E</molecule>
    <text evidence="1 2 9 46 48">Homodimer; in the endoplasmic reticulum and Golgi (By similarity). Interacts with host TYRO3, AXL and DC-SIGN proteins (By similarity). Interacts with non-structural protein 2A (By similarity). Interacts with host HAVCR1; this interaction likely mediates virus attachment to host cell (By similarity). Interacts with host NCAM1 (By similarity). Interacts with host HSPA5 (PubMed:38710792). Interacts with Aedes aegypti SRPN25, APY and venom allergen-1 salivary proteins; the interactions do not affect Zika virus replication in human endothelial cells and keratinocytes (PubMed:35215815).</text>
</comment>
<comment type="subunit">
    <molecule>Non-structural protein 1</molecule>
    <text evidence="9 23 30 36 48">Homodimer; Homohexamer when secreted (PubMed:27455458). Interacts with host TBK1 (PubMed:28373913). Interacts with host USP8 (PubMed:30065070). Interacts with envelope protein E (By similarity). Interacts with host HSPA5 (PubMed:38710792).</text>
</comment>
<comment type="subunit">
    <molecule>Non-structural protein 2A</molecule>
    <text evidence="2">Interacts with the structural protein prM/E complex, and the NS2B/NS3 protease complex.</text>
</comment>
<comment type="subunit">
    <molecule>Serine protease subunit NS2B</molecule>
    <text evidence="2 9 35">Forms a heterodimer with serine protease NS3 (By similarity). May form homooligomers (By similarity). Interacts with human SPCS1 (PubMed:29593046). Interacts with non-structural protein 2A (By similarity).</text>
</comment>
<comment type="subunit">
    <molecule>Serine protease NS3</molecule>
    <text evidence="1 2 9 44">Forms a heterodimer with NS2B (By similarity). Interacts with NS4B (By similarity). Interacts with unphosphorylated RNA-directed RNA polymerase NS5; this interaction stimulates RNA-directed RNA polymerase NS5 guanylyltransferase activity (By similarity). Interacts with non-structural protein 2A (By similarity). Interacts with host SHFL; this interaction promotes NS3 degradation via a lysosome-dependent pathway (PubMed:32150556). Interacts with host CEP63; this interaction disorganizes the centrosome and inhibits host innate immune response (By similarity).</text>
</comment>
<comment type="subunit">
    <molecule>Non-structural protein 4A</molecule>
    <text evidence="38">May interact with host ANKLE2; the interaction may cause defects in brain development, such as microcephaly (PubMed:30550790). May interact with host SRPRA and SEC61G (PubMed:30550790).</text>
</comment>
<comment type="subunit">
    <molecule>Non-structural protein 4B</molecule>
    <text evidence="9 30">Interacts with serine protease NS3. Interacts with NS1 (By similarity). Interacts with host TBK1.</text>
</comment>
<comment type="subunit">
    <molecule>RNA-directed RNA polymerase NS5</molecule>
    <text evidence="1 9 20 25 32 37 39 40 42 49">Homodimer (PubMed:28876240, PubMed:31090058). Interacts with host STAT2; this interaction inhibits the phosphorylation of the latter, and, when all viral proteins are present (polyprotein), targets STAT2 for degradation (PubMed:27212660, PubMed:27797853). Interacts with host TBK1 and IKBKE; these interactions lead to the inhibition of the host RIG-I signaling pathway (PubMed:30530224, PubMed:31690057). Interacts with host KPNA2 (PubMed:30848123). Interacts with host PAF1 complex; the interaction may prevent the recruitment of the host PAF1 complex to interferon-responsive genes, and thus reduces the immune response (By similarity). Interacts with serine protease NS3 (By similarity). Interacts with host ZSWIM8; this interaction allows STAT2 binding to ZSWIM8 and subsequent proteasomal degradation leading to inhibition of interferon signaling (PubMed:39145933).</text>
</comment>
<comment type="interaction">
    <interactant intactId="EBI-20717588">
        <id>PRO_0000435835</id>
    </interactant>
    <interactant intactId="EBI-20717588">
        <id>PRO_0000435835</id>
        <dbReference type="UniProtKB" id="Q32ZE1"/>
    </interactant>
    <organismsDiffer>false</organismsDiffer>
    <experiments>2</experiments>
</comment>
<comment type="subcellular location">
    <molecule>Capsid protein C</molecule>
    <subcellularLocation>
        <location evidence="9">Virion</location>
    </subcellularLocation>
    <subcellularLocation>
        <location evidence="9">Host nucleus</location>
    </subcellularLocation>
    <subcellularLocation>
        <location evidence="4">Host cytoplasm</location>
    </subcellularLocation>
    <subcellularLocation>
        <location evidence="4">Host cytoplasm</location>
        <location evidence="4">Host perinuclear region</location>
    </subcellularLocation>
</comment>
<comment type="subcellular location">
    <molecule>Peptide pr</molecule>
    <subcellularLocation>
        <location evidence="9">Secreted</location>
    </subcellularLocation>
</comment>
<comment type="subcellular location">
    <molecule>Small envelope protein M</molecule>
    <subcellularLocation>
        <location evidence="9">Virion membrane</location>
        <topology evidence="13">Multi-pass membrane protein</topology>
    </subcellularLocation>
    <subcellularLocation>
        <location evidence="9">Host endoplasmic reticulum membrane</location>
        <topology evidence="13">Multi-pass membrane protein</topology>
    </subcellularLocation>
</comment>
<comment type="subcellular location">
    <molecule>Envelope protein E</molecule>
    <subcellularLocation>
        <location evidence="9">Virion membrane</location>
        <topology evidence="13">Multi-pass membrane protein</topology>
    </subcellularLocation>
    <subcellularLocation>
        <location evidence="9">Host endoplasmic reticulum membrane</location>
        <topology evidence="13">Multi-pass membrane protein</topology>
    </subcellularLocation>
</comment>
<comment type="subcellular location">
    <molecule>Non-structural protein 1</molecule>
    <subcellularLocation>
        <location evidence="9">Secreted</location>
    </subcellularLocation>
    <subcellularLocation>
        <location>Host endoplasmic reticulum membrane</location>
        <topology>Peripheral membrane protein</topology>
        <orientation evidence="9">Lumenal side</orientation>
    </subcellularLocation>
    <text evidence="12">Located in RE-derived vesicles hosting the replication complex.</text>
</comment>
<comment type="subcellular location">
    <molecule>Non-structural protein 2A</molecule>
    <subcellularLocation>
        <location evidence="9">Host endoplasmic reticulum membrane</location>
        <topology evidence="9">Multi-pass membrane protein</topology>
    </subcellularLocation>
</comment>
<comment type="subcellular location">
    <molecule>Serine protease subunit NS2B</molecule>
    <subcellularLocation>
        <location>Host endoplasmic reticulum membrane</location>
        <topology evidence="9">Multi-pass membrane protein</topology>
    </subcellularLocation>
</comment>
<comment type="subcellular location">
    <molecule>Serine protease NS3</molecule>
    <subcellularLocation>
        <location evidence="44 47">Host cytoplasm</location>
    </subcellularLocation>
    <subcellularLocation>
        <location evidence="18">Host endoplasmic reticulum membrane</location>
        <topology evidence="18">Peripheral membrane protein</topology>
        <orientation evidence="18">Cytoplasmic side</orientation>
    </subcellularLocation>
    <text evidence="18">Remains non-covalently associated to serine protease subunit NS2B.</text>
</comment>
<comment type="subcellular location">
    <molecule>Non-structural protein 4A</molecule>
    <subcellularLocation>
        <location evidence="9">Host endoplasmic reticulum membrane</location>
        <topology evidence="9">Multi-pass membrane protein</topology>
    </subcellularLocation>
    <text evidence="9">Located in RE-associated vesicles hosting the replication complex.</text>
</comment>
<comment type="subcellular location">
    <molecule>Non-structural protein 4B</molecule>
    <subcellularLocation>
        <location evidence="9">Host endoplasmic reticulum membrane</location>
        <topology evidence="9">Multi-pass membrane protein</topology>
    </subcellularLocation>
    <text evidence="12">Located in RE-derived vesicles hosting the replication complex.</text>
</comment>
<comment type="subcellular location">
    <molecule>RNA-directed RNA polymerase NS5</molecule>
    <subcellularLocation>
        <location>Host endoplasmic reticulum membrane</location>
        <topology>Peripheral membrane protein</topology>
        <orientation>Cytoplasmic side</orientation>
    </subcellularLocation>
    <subcellularLocation>
        <location evidence="20 39 40 42">Host nucleus</location>
    </subcellularLocation>
    <text evidence="9">Located in RE-associated vesicles hosting the replication complex. NS5 protein is mainly localized in the nucleus rather than in ER vesicles.</text>
</comment>
<comment type="alternative products">
    <event type="alternative initiation"/>
    <isoform>
        <id>Q32ZE1-1</id>
        <name>Genome polyprotein</name>
        <sequence type="displayed"/>
    </isoform>
    <isoform>
        <id>P0DXN9-1</id>
        <name evidence="50">uORF protein</name>
        <sequence type="external"/>
    </isoform>
</comment>
<comment type="domain">
    <molecule>Small envelope protein M</molecule>
    <text evidence="9">The transmembrane domain contains an endoplasmic reticulum retention signal.</text>
</comment>
<comment type="domain">
    <molecule>Envelope protein E</molecule>
    <text evidence="9">The transmembrane domain contains an endoplasmic reticulum retention signal.</text>
</comment>
<comment type="domain">
    <molecule>Capsid protein C</molecule>
    <text evidence="5 26">The disordered region at the N-terminus may be involved in lipid-droplet binding.</text>
</comment>
<comment type="domain">
    <molecule>Serine protease subunit NS2B</molecule>
    <text evidence="33">The central disordered region transitions to ordered by binding to NS3.</text>
</comment>
<comment type="domain">
    <molecule>RNA-directed RNA polymerase NS5</molecule>
    <text evidence="40">Comprises a methyltransferase (MTase) in the N-terminal region and an RNA-dependent RNA polymerase in the C-terminal region.</text>
</comment>
<comment type="PTM">
    <molecule>Genome polyprotein</molecule>
    <text evidence="9">Specific enzymatic cleavages in vivo yield mature proteins. Cleavages in the lumen of endoplasmic reticulum are performed by host signal peptidase, whereas cleavages in the cytoplasmic side are performed by serine protease NS3. Signal cleavage at the 2K-4B site requires a prior NS3 protease-mediated cleavage at the 4A-2K site.</text>
</comment>
<comment type="PTM">
    <molecule>Protein prM</molecule>
    <text evidence="9">Cleaved in post-Golgi vesicles by a host furin, releasing the mature small envelope protein M, and peptide pr. This cleavage is incomplete as up to 30% of viral particles still carry uncleaved prM.</text>
</comment>
<comment type="PTM">
    <molecule>Envelope protein E</molecule>
    <text evidence="1">N-glycosylation plays a role in virulence in mammalian and mosquito hosts, but may have no effect on neurovirulence.</text>
</comment>
<comment type="PTM">
    <molecule>Envelope protein E</molecule>
    <text evidence="2">Ubiquitination by host TRIM7 promotes virus attachment and fusion of the virus and the host endosome membrane.</text>
</comment>
<comment type="PTM">
    <molecule>Non-structural protein 1</molecule>
    <text evidence="9">N-glycosylated. The excreted form is glycosylated, which is required for efficient secretion of the protein from infected cells.</text>
</comment>
<comment type="PTM">
    <molecule>Serine protease NS3</molecule>
    <text evidence="47">Acetylated by host KAT5. Acetylation modulates NS3 RNA-binding and unwinding activities and plays an important positive role for viral replication.</text>
</comment>
<comment type="PTM">
    <molecule>RNA-directed RNA polymerase NS5</molecule>
    <text evidence="9">Phosphorylated on serines residues. This phosphorylation may trigger NS5 nuclear localization.</text>
</comment>
<comment type="PTM">
    <molecule>RNA-directed RNA polymerase NS5</molecule>
    <text evidence="1">Sumoylated, required for regulating IFN induced interferon stimulated genes/ISGs.</text>
</comment>
<comment type="miscellaneous">
    <text evidence="53">Belongs to the Zika virus African lineage encoding for a single uORF.</text>
</comment>
<comment type="similarity">
    <text evidence="19">In the N-terminal section; belongs to the class I-like SAM-binding methyltransferase superfamily. mRNA cap 0-1 NS5-type methyltransferase family.</text>
</comment>
<comment type="caution">
    <molecule>Envelope protein E</molecule>
    <text evidence="54">The strain Mr 766 lacks four amino-acids compared to circulating strains, removing the glycosylation site. This may be due to many cell culture passages since its isolation.</text>
</comment>
<accession>Q32ZE1</accession>
<reference key="1">
    <citation type="journal article" date="2005" name="Clin. Microbiol. Rev.">
        <title>Biological transmission of arboviruses: reexamination of and new insights into components, mechanisms, and unique traits as well as their evolutionary trends.</title>
        <authorList>
            <person name="Kuno G."/>
            <person name="Chang G.J."/>
        </authorList>
    </citation>
    <scope>NUCLEOTIDE SEQUENCE [GENOMIC RNA]</scope>
    <source>
        <strain>Uganda/MR 766</strain>
    </source>
</reference>
<reference key="2">
    <citation type="journal article" date="2007" name="Arch. Virol.">
        <title>Full-length sequencing and genomic characterization of Bagaza, Kedougou, and Zika viruses.</title>
        <authorList>
            <person name="Kuno G."/>
            <person name="Chang G.J."/>
        </authorList>
    </citation>
    <scope>NUCLEOTIDE SEQUENCE [GENOMIC RNA]</scope>
    <source>
        <strain>Uganda/MR 766</strain>
    </source>
</reference>
<reference key="3">
    <citation type="journal article" date="2016" name="Virol. J.">
        <title>Flavivirus NS1: a multifaceted enigmatic viral protein.</title>
        <authorList>
            <person name="Rastogi M."/>
            <person name="Sharma N."/>
            <person name="Singh S.K."/>
        </authorList>
    </citation>
    <scope>REVIEW (NON-STRUCTURAL PROTEIN 1)</scope>
    <source>
        <strain>Uganda/MR 766</strain>
    </source>
</reference>
<reference key="4">
    <citation type="journal article" date="2016" name="Front. Cell. Infect. Microbiol.">
        <title>Intrinsically disordered side of the zika virus proteome.</title>
        <authorList>
            <person name="Giri R."/>
            <person name="Kumar D."/>
            <person name="Sharma N."/>
            <person name="Uversky V.N."/>
        </authorList>
    </citation>
    <scope>DOMAIN (CAPSID PROTEIN C)</scope>
    <source>
        <strain>Uganda/MR 766</strain>
    </source>
</reference>
<reference key="5">
    <citation type="journal article" date="2016" name="Cell Stem Cell">
        <title>Zika virus NS4A and NS4B proteins deregulate Akt-mTOR signaling in human fetal neural stem cells to inhibit neurogenesis and induce autophagy.</title>
        <authorList>
            <person name="Liang Q."/>
            <person name="Luo Z."/>
            <person name="Zeng J."/>
            <person name="Chen W."/>
            <person name="Foo S.S."/>
            <person name="Lee S.A."/>
            <person name="Ge J."/>
            <person name="Wang S."/>
            <person name="Goldman S.A."/>
            <person name="Zlokovic B.V."/>
            <person name="Zhao Z."/>
            <person name="Jung J.U."/>
        </authorList>
    </citation>
    <scope>FUNCTION (NON-STRUCTURAL PROTEIN 4A)</scope>
    <scope>FUNCTION (NON-STRUCTURAL PROTEIN 4B)</scope>
    <source>
        <strain>Uganda/MR 766</strain>
    </source>
</reference>
<reference key="6">
    <citation type="journal article" date="2016" name="EMBO Rep.">
        <title>Zika virus inhibits type-I interferon production and downstream signaling.</title>
        <authorList>
            <person name="Kumar A."/>
            <person name="Hou S."/>
            <person name="Airo A.M."/>
            <person name="Limonta D."/>
            <person name="Mancinelli V."/>
            <person name="Branton W."/>
            <person name="Power C."/>
            <person name="Hobman T.C."/>
        </authorList>
    </citation>
    <scope>FUNCTION (RNA-DIRECTED RNA POLYMERASE NS5)</scope>
    <scope>INTERACTION WITH HOST STAT2 (RNA-DIRECTED RNA POLYMERASE NS5)</scope>
</reference>
<reference key="7">
    <citation type="journal article" date="2016" name="Cell Host Microbe">
        <title>Zika Virus Targets Human STAT2 to Inhibit Type I Interferon Signaling.</title>
        <authorList>
            <person name="Grant A."/>
            <person name="Ponia S.S."/>
            <person name="Tripathi S."/>
            <person name="Balasubramaniam V."/>
            <person name="Miorin L."/>
            <person name="Sourisseau M."/>
            <person name="Schwarz M.C."/>
            <person name="Sanchez-Seco M.P."/>
            <person name="Evans M.J."/>
            <person name="Best S.M."/>
            <person name="Garcia-Sastre A."/>
        </authorList>
    </citation>
    <scope>FUNCTION (RNA-DIRECTED RNA POLYMERASE NS5)</scope>
    <scope>INTERACTION WITH HOST STAT2 (RNA-DIRECTED RNA POLYMERASE NS5)</scope>
    <scope>SUBCELLULAR LOCATION (RNA-DIRECTED RNA POLYMERASE NS5)</scope>
</reference>
<reference key="8">
    <citation type="journal article" date="2017" name="Cell Stem Cell">
        <title>Zika-Virus-encoded NS2A disrupts mammalian cortical neurogenesis by degrading adherens junction proteins.</title>
        <authorList>
            <person name="Yoon K.J."/>
            <person name="Song G."/>
            <person name="Qian X."/>
            <person name="Pan J."/>
            <person name="Xu D."/>
            <person name="Rho H.S."/>
            <person name="Kim N.S."/>
            <person name="Habela C."/>
            <person name="Zheng L."/>
            <person name="Jacob F."/>
            <person name="Zhang F."/>
            <person name="Lee E.M."/>
            <person name="Huang W.K."/>
            <person name="Ringeling F.R."/>
            <person name="Vissers C."/>
            <person name="Li C."/>
            <person name="Yuan L."/>
            <person name="Kang K."/>
            <person name="Kim S."/>
            <person name="Yeo J."/>
            <person name="Cheng Y."/>
            <person name="Liu S."/>
            <person name="Wen Z."/>
            <person name="Qin C.F."/>
            <person name="Wu Q."/>
            <person name="Christian K.M."/>
            <person name="Tang H."/>
            <person name="Jin P."/>
            <person name="Xu Z."/>
            <person name="Qian J."/>
            <person name="Zhu H."/>
            <person name="Song H."/>
            <person name="Ming G.L."/>
        </authorList>
    </citation>
    <scope>FUNCTION (NON-STRUCTURAL PROTEIN 2A)</scope>
    <source>
        <strain>Uganda/MR 766</strain>
    </source>
</reference>
<reference key="9">
    <citation type="journal article" date="2017" name="PLoS Pathog.">
        <title>Zika genomics urgently need standardized and curated reference sequences.</title>
        <authorList>
            <person name="Theys K."/>
            <person name="Libin P."/>
            <person name="Dallmeier K."/>
            <person name="Pineda-Pena A.C."/>
            <person name="Vandamme A.M."/>
            <person name="Cuypers L."/>
            <person name="Abecasis A.B."/>
        </authorList>
    </citation>
    <scope>CAUTION (ENVELOPE PROTEIN E)</scope>
</reference>
<reference key="10">
    <citation type="journal article" date="2017" name="Cell Discov.">
        <title>Zika virus evades interferon-mediated antiviral response through the co-operation of multiple nonstructural proteins in vitro.</title>
        <authorList>
            <person name="Wu Y."/>
            <person name="Liu Q."/>
            <person name="Zhou J."/>
            <person name="Xie W."/>
            <person name="Chen C."/>
            <person name="Wang Z."/>
            <person name="Yang H."/>
            <person name="Cui J."/>
        </authorList>
    </citation>
    <scope>FUNCTION (NON-STRUCTURAL PROTEIN 1)</scope>
    <scope>FUNCTION (NON-STRUCTURAL PROTEIN 4B)</scope>
    <scope>INTERACTION WITH HOST TBK1 (NON-STRUCTURAL PROTEIN 1)</scope>
    <scope>INTERACTION WITH HOST TBK1 (NON-STRUCTURAL PROTEIN 4B)</scope>
</reference>
<reference key="11">
    <citation type="journal article" date="2018" name="Cell">
        <title>Comparative Flavivirus-Host Protein Interaction Mapping Reveals Mechanisms of Dengue and Zika Virus Pathogenesis.</title>
        <authorList>
            <person name="Shah P.S."/>
            <person name="Link N."/>
            <person name="Jang G.M."/>
            <person name="Sharp P.P."/>
            <person name="Zhu T."/>
            <person name="Swaney D.L."/>
            <person name="Johnson J.R."/>
            <person name="Von Dollen J."/>
            <person name="Ramage H.R."/>
            <person name="Satkamp L."/>
            <person name="Newton B."/>
            <person name="Huettenhain R."/>
            <person name="Petit M.J."/>
            <person name="Baum T."/>
            <person name="Everitt A."/>
            <person name="Laufman O."/>
            <person name="Tassetto M."/>
            <person name="Shales M."/>
            <person name="Stevenson E."/>
            <person name="Iglesias G.N."/>
            <person name="Shokat L."/>
            <person name="Tripathi S."/>
            <person name="Balasubramaniam V."/>
            <person name="Webb L.G."/>
            <person name="Aguirre S."/>
            <person name="Willsey A.J."/>
            <person name="Garcia-Sastre A."/>
            <person name="Pollard K.S."/>
            <person name="Cherry S."/>
            <person name="Gamarnik A.V."/>
            <person name="Marazzi I."/>
            <person name="Taunton J."/>
            <person name="Fernandez-Sesma A."/>
            <person name="Bellen H.J."/>
            <person name="Andino R."/>
            <person name="Krogan N.J."/>
        </authorList>
    </citation>
    <scope>FUNCTION (NON-STRUCTURAL PROTEIN 4A)</scope>
    <scope>INTERACTION WITH HUMAN SRPRA (NON-STRUCTURAL PROTEIN 4A)</scope>
    <scope>INTERACTION WITH HUMAN SEC61G (NON-STRUCTURAL PROTEIN 4A)</scope>
    <scope>INTERACTION WITH HUMAN ANKLE2 (NON-STRUCTURAL PROTEIN 4A)</scope>
</reference>
<reference key="12">
    <citation type="journal article" date="2018" name="J. Mol. Biol.">
        <title>Molecular recognition features in zika virus proteome.</title>
        <authorList>
            <person name="Mishra P.M."/>
            <person name="Uversky V.N."/>
            <person name="Giri R."/>
        </authorList>
    </citation>
    <scope>DOMAIN (SERINE PROTEASE SUBUNIT NS2B)</scope>
    <source>
        <strain>Uganda/MR 766</strain>
    </source>
</reference>
<reference key="13">
    <citation type="journal article" date="2018" name="J. Virol.">
        <title>Host Factor SPCS1 Regulates the Replication of Japanese Encephalitis Virus through Interactions with Transmembrane Domains of NS2B.</title>
        <authorList>
            <person name="Ma L."/>
            <person name="Li F."/>
            <person name="Zhang J.W."/>
            <person name="Li W."/>
            <person name="Zhao D.M."/>
            <person name="Wang H."/>
            <person name="Hua R.H."/>
            <person name="Bu Z.G."/>
        </authorList>
    </citation>
    <scope>INTERACTION WITH HUMAN SPCS1</scope>
</reference>
<reference key="14">
    <citation type="journal article" date="2018" name="EMBO J.">
        <title>Zika virus elicits inflammation to evade antiviral response by cleaving cGAS via NS1-caspase-1 axis.</title>
        <authorList>
            <person name="Zheng Y."/>
            <person name="Liu Q."/>
            <person name="Wu Y."/>
            <person name="Ma L."/>
            <person name="Zhang Z."/>
            <person name="Liu T."/>
            <person name="Jin S."/>
            <person name="She Y."/>
            <person name="Li Y.P."/>
            <person name="Cui J."/>
        </authorList>
    </citation>
    <scope>FUNCTION (NON-STRUCTURAL PROTEIN 1)</scope>
    <scope>INTERACTION WITH HOST USP8 (NON-STRUCTURAL PROTEIN 1)</scope>
    <source>
        <strain>GZ01</strain>
    </source>
</reference>
<reference key="15">
    <citation type="journal article" date="2019" name="FEBS Lett.">
        <title>Zika virus nonstructural protein 5 residue R681 is critical for dimer formation and enzymatic activity.</title>
        <authorList>
            <person name="Saw W.G."/>
            <person name="Chan K.W."/>
            <person name="Vasudevan S.G."/>
            <person name="Grueber G."/>
        </authorList>
    </citation>
    <scope>FUNCTION (RNA-DIRECTED RNA POLYMERASE NS5)</scope>
    <scope>SUBCELLULAR LOCATION (RNA-DIRECTED RNA POLYMERASE NS5)</scope>
    <scope>MUTAGENESIS OF ARG-3099</scope>
    <scope>DOMAIN (RNA-DIRECTED RNA POLYMERASE NS5)</scope>
    <scope>CATALYTIC ACTIVITY (RNA-DIRECTED RNA POLYMERASE NS5)</scope>
</reference>
<reference key="16">
    <citation type="journal article" date="2019" name="Viruses">
        <title>Zika Virus Non-Structural Protein NS5 Inhibits the RIG-I Pathway and Interferon Lambda 1 Promoter Activation by Targeting IKK Epsilon.</title>
        <authorList>
            <person name="Lundberg R."/>
            <person name="Melen K."/>
            <person name="Westenius V."/>
            <person name="Jiang M."/>
            <person name="Oesterlund P."/>
            <person name="Khan H."/>
            <person name="Vapalahti O."/>
            <person name="Julkunen I."/>
            <person name="Kakkola L."/>
        </authorList>
    </citation>
    <scope>FUNCTION (RNA-DIRECTED RNA POLYMERASE NS5)</scope>
    <scope>SUBCELLULAR LOCATION (RNA-DIRECTED RNA POLYMERASE NS5)</scope>
    <scope>INTERACTION WITH HOST IKBKE (RNA-DIRECTED RNA POLYMERASE NS5)</scope>
</reference>
<reference key="17">
    <citation type="journal article" date="2019" name="Virology">
        <title>Zika virus NS5 protein antagonizes type I interferon production via blocking TBK1 activation.</title>
        <authorList>
            <person name="Lin S."/>
            <person name="Yang S."/>
            <person name="He J."/>
            <person name="Guest J.D."/>
            <person name="Ma Z."/>
            <person name="Yang L."/>
            <person name="Pierce B.G."/>
            <person name="Tang Q."/>
            <person name="Zhang Y.J."/>
        </authorList>
    </citation>
    <scope>FUNCTION (RNA-DIRECTED RNA POLYMERASE NS5)</scope>
    <scope>INTERACTION WITH HOST TBK1 (RNA-DIRECTED RNA POLYMERASE NS5)</scope>
</reference>
<reference key="18">
    <citation type="journal article" date="2019" name="Sci. Rep.">
        <title>A natural polymorphism in Zika virus NS2A protein responsible of virulence in mice.</title>
        <authorList>
            <person name="Avila-Perez G."/>
            <person name="Nogales A."/>
            <person name="Park J.G."/>
            <person name="Marquez-Jurado S."/>
            <person name="Iborra F.J."/>
            <person name="Almazan F."/>
            <person name="Martinez-Sobrido L."/>
        </authorList>
    </citation>
    <scope>FUNCTION (NON-STRUCTURAL PROTEIN 2A)</scope>
    <scope>MUTAGENESIS OF ALA-1259</scope>
    <source>
        <strain>Paraiba</strain>
    </source>
</reference>
<reference key="19">
    <citation type="journal article" date="2019" name="J. Microbiol. Biotechnol.">
        <title>Zika Virus Proteins NS2A and NS4A Are Major Antagonists that Reduce IFN-beta Promoter Activity Induced by the MDA5/RIG-I Signaling Pathway.</title>
        <authorList>
            <person name="Ngueyen T.T.N."/>
            <person name="Kim S.J."/>
            <person name="Lee J.Y."/>
            <person name="Myoung J."/>
        </authorList>
    </citation>
    <scope>FUNCTION (NON-STRUCTURAL PROTEIN 2A)</scope>
    <scope>FUNCTION (NON-STRUCTURAL PROTEIN 4A)</scope>
</reference>
<reference key="20">
    <citation type="journal article" date="2020" name="PLoS Negl. Trop. Dis.">
        <title>C19orf66 interrupts Zika virus replication by inducing lysosomal degradation of viral NS3.</title>
        <authorList>
            <person name="Wu Y."/>
            <person name="Yang X."/>
            <person name="Yao Z."/>
            <person name="Dong X."/>
            <person name="Zhang D."/>
            <person name="Hu Y."/>
            <person name="Zhang S."/>
            <person name="Lin J."/>
            <person name="Chen J."/>
            <person name="An S."/>
            <person name="Ye H."/>
            <person name="Zhang S."/>
            <person name="Qiu Z."/>
            <person name="He Z."/>
            <person name="Huang M."/>
            <person name="Wei G."/>
            <person name="Zhu X."/>
        </authorList>
    </citation>
    <scope>INTERACTION WITH HOST PROTEIN SHFL (SERINE PROTEASE NS3)</scope>
    <scope>SUBCELLULAR LOCATION (SERINE PROTEASE NS3)</scope>
</reference>
<reference key="21">
    <citation type="journal article" date="2020" name="Nucleic Acids Res.">
        <title>The flavivirus polymerase NS5 regulates translation of viral genomic RNA.</title>
        <authorList>
            <person name="Fajardo T."/>
            <person name="Sanford T.J."/>
            <person name="Mears H.V."/>
            <person name="Jasper A."/>
            <person name="Storrie S."/>
            <person name="Mansur D.S."/>
            <person name="Sweeney T.R."/>
        </authorList>
    </citation>
    <scope>FUNCTION (RNA-DIRECTED RNA POLYMERASE NS5)</scope>
    <source>
        <strain>Isolate BeH819015</strain>
    </source>
</reference>
<reference key="22">
    <citation type="journal article" date="2022" name="Viruses">
        <title>Multiple Salivary Proteins from Aedes aegypti Mosquito Bind to the Zika Virus Envelope Protein.</title>
        <authorList>
            <person name="Valenzuela-Leon P.C."/>
            <person name="Shrivastava G."/>
            <person name="Martin-Martin I."/>
            <person name="Cardenas J.C."/>
            <person name="Londono-Renteria B."/>
            <person name="Calvo E."/>
        </authorList>
    </citation>
    <scope>INTERACTION WITH MOSQUITO SRPN25; APY AND VENOM ALLERGEN-1 (ENVELOPE PROTEIN E)</scope>
    <source>
        <strain evidence="52">Suriname Z1106033</strain>
    </source>
</reference>
<reference key="23">
    <citation type="journal article" date="2023" name="Cell Host Microbe">
        <title>Acetylation of the NS3 helicase by KAT5gamma is essential for flavivirus replication.</title>
        <authorList>
            <person name="Serman T."/>
            <person name="Chiang C."/>
            <person name="Liu G."/>
            <person name="Sayyad Z."/>
            <person name="Pandey S."/>
            <person name="Volcic M."/>
            <person name="Lee H."/>
            <person name="Muppala S."/>
            <person name="Acharya D."/>
            <person name="Goins C."/>
            <person name="Stauffer S.R."/>
            <person name="Sparrer K.M.J."/>
            <person name="Gack M.U."/>
        </authorList>
    </citation>
    <scope>ACETYLATION AT LYS-1887 BY HOST KAT5 (SERINE PROTEASE NS3)</scope>
    <scope>SUBCELLULAR LOCATION (SERINE PROTEASE NS3)</scope>
    <scope>MUTAGENESIS OF LYS-1887</scope>
</reference>
<reference key="24">
    <citation type="journal article" date="2024" name="Proc. Natl. Acad. Sci. U.S.A.">
        <title>Zika virus NS5 protein inhibits type I interferon signaling via CRL3 E3 ubiquitin ligase-mediated degradation of STAT2.</title>
        <authorList>
            <person name="Ren W."/>
            <person name="Fu C."/>
            <person name="Zhang Y."/>
            <person name="Ju X."/>
            <person name="Jiang X."/>
            <person name="Song J."/>
            <person name="Gong M."/>
            <person name="Li Z."/>
            <person name="Fan W."/>
            <person name="Yao J."/>
            <person name="Ding Q."/>
        </authorList>
    </citation>
    <scope>FUNCTION (RNA-DIRECTED RNA POLYMERASE NS5)</scope>
    <scope>INTERACTION WITH HOST ZSWIM8 (RNA-DIRECTED RNA POLYMERASE NS5)</scope>
</reference>
<reference key="25">
    <citation type="journal article" date="2024" name="Sci. Rep.">
        <title>The interaction of GRP78 and Zika virus E and NS1 proteins occurs in a chaperone-client manner.</title>
        <authorList>
            <person name="Sornjai W."/>
            <person name="Promma P."/>
            <person name="Priewkhiew S."/>
            <person name="Ramphan S."/>
            <person name="Jaratsittisin J."/>
            <person name="Jinagool P."/>
            <person name="Wikan N."/>
            <person name="Greenwood M."/>
            <person name="Murphy D."/>
            <person name="Smith D.R."/>
        </authorList>
    </citation>
    <scope>INTERACTION WITH HOST HSPA5/GRP78 (NON-STRUCTURAL PROTEIN 1)</scope>
    <scope>INTERACTION WITH HOST HSPA5/GRP78 (ENVELOPE PROTEIN E)</scope>
</reference>
<reference key="26">
    <citation type="journal article" date="2016" name="Nat. Struct. Mol. Biol.">
        <title>Extended surface for membrane association in Zika virus NS1 structure.</title>
        <authorList>
            <person name="Brown W.C."/>
            <person name="Akey D.L."/>
            <person name="Konwerski J.R."/>
            <person name="Tarrasch J.T."/>
            <person name="Skiniotis G."/>
            <person name="Kuhn R.J."/>
            <person name="Smith J.L."/>
        </authorList>
    </citation>
    <scope>X-RAY CRYSTALLOGRAPHY (1.89 ANGSTROMS) OF 790-1142</scope>
    <scope>GLYCOSYLATION AT ASN-920 AND ASN-997</scope>
    <scope>SUBUNIT (NON-STRUCTURAL PROTEIN 1)</scope>
    <source>
        <strain>Uganda/MR 766</strain>
    </source>
</reference>
<reference evidence="55" key="27">
    <citation type="journal article" date="2016" name="Science">
        <title>Crystal structure of unlinked NS2B-NS3 protease from Zika virus.</title>
        <authorList>
            <person name="Zhang Z."/>
            <person name="Li Y."/>
            <person name="Loh Y.R."/>
            <person name="Phoo W.W."/>
            <person name="Hung A.W."/>
            <person name="Kang C."/>
            <person name="Luo D."/>
        </authorList>
    </citation>
    <scope>X-RAY CRYSTALLOGRAPHY (1.58 ANGSTROMS) OF 1412-1464 AND 1499-1675</scope>
</reference>
<reference key="28">
    <citation type="journal article" date="2016" name="Science">
        <title>Crystal structure of Zika virus NS2B-NS3 protease in complex with a boronate inhibitor.</title>
        <authorList>
            <person name="Lei J."/>
            <person name="Hansen G."/>
            <person name="Nitsche C."/>
            <person name="Klein C.D."/>
            <person name="Zhang L."/>
            <person name="Hilgenfeld R."/>
        </authorList>
    </citation>
    <scope>X-RAY CRYSTALLOGRAPHY (2.7 ANGSTROMS) (SERINE PROTEASE SUBUNIT NS2B AND SERINE PROTEASE NS3)</scope>
    <source>
        <strain>Isolate BeH823339</strain>
    </source>
</reference>
<reference key="29">
    <citation type="journal article" date="2016" name="Nat. Struct. Mol. Biol.">
        <title>Structure of the NS3 helicase from Zika virus.</title>
        <authorList>
            <person name="Jain R."/>
            <person name="Coloma J."/>
            <person name="Garcia-Sastre A."/>
            <person name="Aggarwal A.K."/>
        </authorList>
    </citation>
    <scope>X-RAY CRYSTALLOGRAPHY (1.62 ANGSTROMS) OF 1669-2115</scope>
</reference>
<reference key="30">
    <citation type="journal article" date="2017" name="Nat. Commun.">
        <title>Crystal structure of Zika virus NS5 RNA-dependent RNA polymerase.</title>
        <authorList>
            <person name="Godoy A.S."/>
            <person name="Lima G.M."/>
            <person name="Oliveira K.I."/>
            <person name="Torres N.U."/>
            <person name="Maluf F.V."/>
            <person name="Guido R.V."/>
            <person name="Oliva G."/>
        </authorList>
    </citation>
    <scope>X-RAY CRYSTALLOGRAPHY (1.90 ANGSTROMS) OF 2822-3419 IN COMPLEX WITH ZINC</scope>
    <source>
        <strain>Uganda/MR 766</strain>
    </source>
</reference>
<reference evidence="59 60" key="31">
    <citation type="journal article" date="2017" name="Acta Crystallogr. D">
        <title>Crystal structures of the methyltransferase and helicase from the ZIKA 1947 MR766 Uganda strain.</title>
        <authorList>
            <person name="Bukrejewska M."/>
            <person name="Derewenda U."/>
            <person name="Radwanska M."/>
            <person name="Engel D.A."/>
            <person name="Derewenda Z.S."/>
        </authorList>
    </citation>
    <scope>X-RAY CRYSTALLOGRAPHY (2.00 ANGSTROMS) OF 1677-2115 AND 2521-2781</scope>
    <scope>SUBUNIT (RNA-DIRECTED RNA POLYMERASE NS5)</scope>
    <source>
        <strain>Uganda/MR 766</strain>
    </source>
</reference>
<reference evidence="56" key="32">
    <citation type="journal article" date="2017" name="Acta Crystallogr. F">
        <title>Crystal structure of full-length Zika virus NS5 protein reveals a conformation similar to Japanese encephalitis virus NS5.</title>
        <authorList>
            <person name="Upadhyay A.K."/>
            <person name="Cyr M."/>
            <person name="Longenecker K."/>
            <person name="Tripathi R."/>
            <person name="Sun C."/>
            <person name="Kempf D.J."/>
        </authorList>
    </citation>
    <scope>X-RAY CRYSTALLOGRAPHY (3.05 ANGSTROMS) OF 2517-3419 IN COMPLEX WITH S-ADENOSYL-L-HOMOCYSTEINE AND ZINC</scope>
</reference>
<reference evidence="57 58" key="33">
    <citation type="journal article" date="2017" name="Nat. Commun.">
        <title>Structure and function of the Zika virus full-length NS5 protein.</title>
        <authorList>
            <person name="Zhao B."/>
            <person name="Yi G."/>
            <person name="Du F."/>
            <person name="Chuang Y.C."/>
            <person name="Vaughan R.C."/>
            <person name="Sankaran B."/>
            <person name="Kao C.C."/>
            <person name="Li P."/>
        </authorList>
    </citation>
    <scope>X-RAY CRYSTALLOGRAPHY (3.00 ANGSTROMS) OF 2517-3419 IN COMPLEX WITH S-ADENOSYL-L-HOMOCYSTEINE AND ZINC</scope>
</reference>
<reference evidence="61" key="34">
    <citation type="journal article" date="2018" name="Acta Crystallogr. F">
        <title>Structural view of the helicase reveals that Zika virus uses a conserved mechanism for unwinding RNA.</title>
        <authorList>
            <person name="Li L."/>
            <person name="Wang J."/>
            <person name="Jia Z."/>
            <person name="Shaw N."/>
        </authorList>
    </citation>
    <scope>X-RAY CRYSTALLOGRAPHY (1.30 ANGSTROMS) OF 1676-2115</scope>
</reference>
<reference evidence="62 63" key="35">
    <citation type="journal article" date="2018" name="Structure">
        <title>Structural Insights into the Inhibition of Zika Virus NS2B-NS3 Protease by a Small-Molecule Inhibitor.</title>
        <authorList>
            <person name="Li Y."/>
            <person name="Zhang Z."/>
            <person name="Phoo W.W."/>
            <person name="Loh Y.R."/>
            <person name="Li R."/>
            <person name="Yang H.Y."/>
            <person name="Jansson A.E."/>
            <person name="Hill J."/>
            <person name="Keller T.H."/>
            <person name="Nacro K."/>
            <person name="Luo D."/>
            <person name="Kang C."/>
        </authorList>
    </citation>
    <scope>X-RAY CRYSTALLOGRAPHY (1.51 ANGSTROMS) OF 1412-1464 AND 1499-1675</scope>
    <scope>ACTIVE SITE</scope>
    <source>
        <strain>Isolate Nigeria/IbH_30656/1968</strain>
    </source>
</reference>
<reference key="36">
    <citation type="journal article" date="2019" name="ACS Infect. Dis.">
        <title>Zika Virus NS5 Forms Supramolecular Nuclear Bodies That Sequester Importin-alpha and Modulate the Host Immune and Pro-Inflammatory Response in Neuronal Cells.</title>
        <authorList>
            <person name="Ng I.H.W."/>
            <person name="Chan K.W."/>
            <person name="Tan M.J.A."/>
            <person name="Gwee C.P."/>
            <person name="Smith K.M."/>
            <person name="Jeffress S.J."/>
            <person name="Saw W.G."/>
            <person name="Swarbrick C.M.D."/>
            <person name="Watanabe S."/>
            <person name="Jans D.A."/>
            <person name="Grueber G."/>
            <person name="Forwood J.K."/>
            <person name="Vasudevan S.G."/>
        </authorList>
    </citation>
    <scope>X-RAY CRYSTALLOGRAPHY (2.20 ANGSTROMS) OF 2887-2923</scope>
    <scope>SUBCELLULAR LOCATION (RNA-DIRECTED RNA POLYMERASE NS5)</scope>
    <scope>MUTAGENESIS OF LYS-2906 AND ARG-2909</scope>
    <scope>FUNCTION (RNA-DIRECTED RNA POLYMERASE NS5)</scope>
    <scope>NUCLEAR LOCALIZATION SIGNAL (RNA-DIRECTED RNA POLYMERASE NS5)</scope>
    <scope>INTERACTION WITH HOST KPNA2 (RNA-DIRECTED RNA POLYMERASE NS5)</scope>
</reference>
<reference key="37">
    <citation type="journal article" date="2024" name="Nat. Commun.">
        <title>Zika viruses encode 5' upstream open reading frames affecting infection of human brain cells.</title>
        <authorList>
            <person name="Lefevre C."/>
            <person name="Cook G.M."/>
            <person name="Dinan A.M."/>
            <person name="Torii S."/>
            <person name="Stewart H."/>
            <person name="Gibbons G."/>
            <person name="Nicholson A.S."/>
            <person name="Echavarria-Consuegra L."/>
            <person name="Meredith L.W."/>
            <person name="Lulla V."/>
            <person name="McGovern N."/>
            <person name="Kenyon J.C."/>
            <person name="Goodfellow I."/>
            <person name="Deane J.E."/>
            <person name="Graham S.C."/>
            <person name="Lakatos A."/>
            <person name="Lambrechts L."/>
            <person name="Brierley I."/>
            <person name="Irigoyen N."/>
        </authorList>
    </citation>
    <scope>ALTERNATIVE INITIATION (ISOFORM UORF)</scope>
    <source>
        <strain>Isolate Dak84</strain>
    </source>
</reference>
<keyword id="KW-0002">3D-structure</keyword>
<keyword id="KW-0007">Acetylation</keyword>
<keyword id="KW-1072">Activation of host autophagy by virus</keyword>
<keyword id="KW-0024">Alternative initiation</keyword>
<keyword id="KW-0067">ATP-binding</keyword>
<keyword id="KW-0167">Capsid protein</keyword>
<keyword id="KW-1165">Clathrin-mediated endocytosis of virus by host</keyword>
<keyword id="KW-0165">Cleavage on pair of basic residues</keyword>
<keyword id="KW-1015">Disulfide bond</keyword>
<keyword id="KW-1170">Fusion of virus membrane with host endosomal membrane</keyword>
<keyword id="KW-1168">Fusion of virus membrane with host membrane</keyword>
<keyword id="KW-0325">Glycoprotein</keyword>
<keyword id="KW-0342">GTP-binding</keyword>
<keyword id="KW-0347">Helicase</keyword>
<keyword id="KW-1035">Host cytoplasm</keyword>
<keyword id="KW-1038">Host endoplasmic reticulum</keyword>
<keyword id="KW-1043">Host membrane</keyword>
<keyword id="KW-1048">Host nucleus</keyword>
<keyword id="KW-0945">Host-virus interaction</keyword>
<keyword id="KW-0378">Hydrolase</keyword>
<keyword id="KW-1090">Inhibition of host innate immune response by virus</keyword>
<keyword id="KW-1114">Inhibition of host interferon signaling pathway by virus</keyword>
<keyword id="KW-1105">Inhibition of host STAT1 by virus</keyword>
<keyword id="KW-1106">Inhibition of host STAT2 by virus</keyword>
<keyword id="KW-1223">Inhibition of host TBK1 by virus</keyword>
<keyword id="KW-1225">Inhibition of host TLR pathway by virus</keyword>
<keyword id="KW-1112">Inhibition of host TYK2 by virus</keyword>
<keyword id="KW-0922">Interferon antiviral system evasion</keyword>
<keyword id="KW-1017">Isopeptide bond</keyword>
<keyword id="KW-0472">Membrane</keyword>
<keyword id="KW-0479">Metal-binding</keyword>
<keyword id="KW-0489">Methyltransferase</keyword>
<keyword id="KW-0506">mRNA capping</keyword>
<keyword id="KW-0507">mRNA processing</keyword>
<keyword id="KW-0547">Nucleotide-binding</keyword>
<keyword id="KW-0548">Nucleotidyltransferase</keyword>
<keyword id="KW-0597">Phosphoprotein</keyword>
<keyword id="KW-0645">Protease</keyword>
<keyword id="KW-1185">Reference proteome</keyword>
<keyword id="KW-0694">RNA-binding</keyword>
<keyword id="KW-0696">RNA-directed RNA polymerase</keyword>
<keyword id="KW-0949">S-adenosyl-L-methionine</keyword>
<keyword id="KW-0964">Secreted</keyword>
<keyword id="KW-0720">Serine protease</keyword>
<keyword id="KW-0941">Suppressor of RNA silencing</keyword>
<keyword id="KW-0804">Transcription</keyword>
<keyword id="KW-0805">Transcription regulation</keyword>
<keyword id="KW-0808">Transferase</keyword>
<keyword id="KW-0812">Transmembrane</keyword>
<keyword id="KW-1133">Transmembrane helix</keyword>
<keyword id="KW-0832">Ubl conjugation</keyword>
<keyword id="KW-1161">Viral attachment to host cell</keyword>
<keyword id="KW-0261">Viral envelope protein</keyword>
<keyword id="KW-0899">Viral immunoevasion</keyword>
<keyword id="KW-1162">Viral penetration into host cytoplasm</keyword>
<keyword id="KW-0693">Viral RNA replication</keyword>
<keyword id="KW-0946">Virion</keyword>
<keyword id="KW-1164">Virus endocytosis by host</keyword>
<keyword id="KW-1160">Virus entry into host cell</keyword>
<keyword id="KW-0862">Zinc</keyword>
<name>POLG_ZIKV</name>
<evidence type="ECO:0000250" key="1">
    <source>
        <dbReference type="UniProtKB" id="A0A024B7W1"/>
    </source>
</evidence>
<evidence type="ECO:0000250" key="2">
    <source>
        <dbReference type="UniProtKB" id="A0A142I5B9"/>
    </source>
</evidence>
<evidence type="ECO:0000250" key="3">
    <source>
        <dbReference type="UniProtKB" id="P03314"/>
    </source>
</evidence>
<evidence type="ECO:0000250" key="4">
    <source>
        <dbReference type="UniProtKB" id="P06935"/>
    </source>
</evidence>
<evidence type="ECO:0000250" key="5">
    <source>
        <dbReference type="UniProtKB" id="P12823"/>
    </source>
</evidence>
<evidence type="ECO:0000250" key="6">
    <source>
        <dbReference type="UniProtKB" id="P14335"/>
    </source>
</evidence>
<evidence type="ECO:0000250" key="7">
    <source>
        <dbReference type="UniProtKB" id="P14336"/>
    </source>
</evidence>
<evidence type="ECO:0000250" key="8">
    <source>
        <dbReference type="UniProtKB" id="P14340"/>
    </source>
</evidence>
<evidence type="ECO:0000250" key="9">
    <source>
        <dbReference type="UniProtKB" id="P17763"/>
    </source>
</evidence>
<evidence type="ECO:0000250" key="10">
    <source>
        <dbReference type="UniProtKB" id="P29990"/>
    </source>
</evidence>
<evidence type="ECO:0000250" key="11">
    <source>
        <dbReference type="UniProtKB" id="Q6YMS4"/>
    </source>
</evidence>
<evidence type="ECO:0000250" key="12">
    <source>
        <dbReference type="UniProtKB" id="Q9Q6P4"/>
    </source>
</evidence>
<evidence type="ECO:0000255" key="13"/>
<evidence type="ECO:0000255" key="14">
    <source>
        <dbReference type="PROSITE-ProRule" id="PRU00539"/>
    </source>
</evidence>
<evidence type="ECO:0000255" key="15">
    <source>
        <dbReference type="PROSITE-ProRule" id="PRU00541"/>
    </source>
</evidence>
<evidence type="ECO:0000255" key="16">
    <source>
        <dbReference type="PROSITE-ProRule" id="PRU00542"/>
    </source>
</evidence>
<evidence type="ECO:0000255" key="17">
    <source>
        <dbReference type="PROSITE-ProRule" id="PRU00859"/>
    </source>
</evidence>
<evidence type="ECO:0000255" key="18">
    <source>
        <dbReference type="PROSITE-ProRule" id="PRU00860"/>
    </source>
</evidence>
<evidence type="ECO:0000255" key="19">
    <source>
        <dbReference type="PROSITE-ProRule" id="PRU00924"/>
    </source>
</evidence>
<evidence type="ECO:0000269" key="20">
    <source>
    </source>
</evidence>
<evidence type="ECO:0000269" key="21">
    <source>
    </source>
</evidence>
<evidence type="ECO:0000269" key="22">
    <source>
    </source>
</evidence>
<evidence type="ECO:0000269" key="23">
    <source>
    </source>
</evidence>
<evidence type="ECO:0000269" key="24">
    <source>
    </source>
</evidence>
<evidence type="ECO:0000269" key="25">
    <source>
    </source>
</evidence>
<evidence type="ECO:0000269" key="26">
    <source>
    </source>
</evidence>
<evidence type="ECO:0000269" key="27">
    <source>
    </source>
</evidence>
<evidence type="ECO:0000269" key="28">
    <source>
    </source>
</evidence>
<evidence type="ECO:0000269" key="29">
    <source>
    </source>
</evidence>
<evidence type="ECO:0000269" key="30">
    <source>
    </source>
</evidence>
<evidence type="ECO:0000269" key="31">
    <source>
    </source>
</evidence>
<evidence type="ECO:0000269" key="32">
    <source>
    </source>
</evidence>
<evidence type="ECO:0000269" key="33">
    <source>
    </source>
</evidence>
<evidence type="ECO:0000269" key="34">
    <source>
    </source>
</evidence>
<evidence type="ECO:0000269" key="35">
    <source>
    </source>
</evidence>
<evidence type="ECO:0000269" key="36">
    <source>
    </source>
</evidence>
<evidence type="ECO:0000269" key="37">
    <source>
    </source>
</evidence>
<evidence type="ECO:0000269" key="38">
    <source>
    </source>
</evidence>
<evidence type="ECO:0000269" key="39">
    <source>
    </source>
</evidence>
<evidence type="ECO:0000269" key="40">
    <source>
    </source>
</evidence>
<evidence type="ECO:0000269" key="41">
    <source>
    </source>
</evidence>
<evidence type="ECO:0000269" key="42">
    <source>
    </source>
</evidence>
<evidence type="ECO:0000269" key="43">
    <source>
    </source>
</evidence>
<evidence type="ECO:0000269" key="44">
    <source>
    </source>
</evidence>
<evidence type="ECO:0000269" key="45">
    <source>
    </source>
</evidence>
<evidence type="ECO:0000269" key="46">
    <source>
    </source>
</evidence>
<evidence type="ECO:0000269" key="47">
    <source>
    </source>
</evidence>
<evidence type="ECO:0000269" key="48">
    <source>
    </source>
</evidence>
<evidence type="ECO:0000269" key="49">
    <source>
    </source>
</evidence>
<evidence type="ECO:0000269" key="50">
    <source>
    </source>
</evidence>
<evidence type="ECO:0000303" key="51">
    <source>
    </source>
</evidence>
<evidence type="ECO:0000303" key="52">
    <source>
    </source>
</evidence>
<evidence type="ECO:0000305" key="53"/>
<evidence type="ECO:0000305" key="54">
    <source>
    </source>
</evidence>
<evidence type="ECO:0007744" key="55">
    <source>
        <dbReference type="PDB" id="5GPI"/>
    </source>
</evidence>
<evidence type="ECO:0007744" key="56">
    <source>
        <dbReference type="PDB" id="5TFR"/>
    </source>
</evidence>
<evidence type="ECO:0007744" key="57">
    <source>
        <dbReference type="PDB" id="5U0B"/>
    </source>
</evidence>
<evidence type="ECO:0007744" key="58">
    <source>
        <dbReference type="PDB" id="5U0C"/>
    </source>
</evidence>
<evidence type="ECO:0007744" key="59">
    <source>
        <dbReference type="PDB" id="5VI7"/>
    </source>
</evidence>
<evidence type="ECO:0007744" key="60">
    <source>
        <dbReference type="PDB" id="5VIM"/>
    </source>
</evidence>
<evidence type="ECO:0007744" key="61">
    <source>
        <dbReference type="PDB" id="5Y4Z"/>
    </source>
</evidence>
<evidence type="ECO:0007744" key="62">
    <source>
        <dbReference type="PDB" id="5YOD"/>
    </source>
</evidence>
<evidence type="ECO:0007744" key="63">
    <source>
        <dbReference type="PDB" id="5YOF"/>
    </source>
</evidence>
<evidence type="ECO:0007829" key="64">
    <source>
        <dbReference type="PDB" id="5GXJ"/>
    </source>
</evidence>
<evidence type="ECO:0007829" key="65">
    <source>
        <dbReference type="PDB" id="5K6K"/>
    </source>
</evidence>
<evidence type="ECO:0007829" key="66">
    <source>
        <dbReference type="PDB" id="5TFR"/>
    </source>
</evidence>
<evidence type="ECO:0007829" key="67">
    <source>
        <dbReference type="PDB" id="5TMH"/>
    </source>
</evidence>
<evidence type="ECO:0007829" key="68">
    <source>
        <dbReference type="PDB" id="5U04"/>
    </source>
</evidence>
<evidence type="ECO:0007829" key="69">
    <source>
        <dbReference type="PDB" id="5U0B"/>
    </source>
</evidence>
<evidence type="ECO:0007829" key="70">
    <source>
        <dbReference type="PDB" id="5U0C"/>
    </source>
</evidence>
<evidence type="ECO:0007829" key="71">
    <source>
        <dbReference type="PDB" id="5VIM"/>
    </source>
</evidence>
<evidence type="ECO:0007829" key="72">
    <source>
        <dbReference type="PDB" id="5Y4Z"/>
    </source>
</evidence>
<evidence type="ECO:0007829" key="73">
    <source>
        <dbReference type="PDB" id="5Z0R"/>
    </source>
</evidence>
<evidence type="ECO:0007829" key="74">
    <source>
        <dbReference type="PDB" id="5Z0V"/>
    </source>
</evidence>
<evidence type="ECO:0007829" key="75">
    <source>
        <dbReference type="PDB" id="5ZOB"/>
    </source>
</evidence>
<evidence type="ECO:0007829" key="76">
    <source>
        <dbReference type="PDB" id="6MH3"/>
    </source>
</evidence>
<evidence type="ECO:0007829" key="77">
    <source>
        <dbReference type="PDB" id="6UX2"/>
    </source>
</evidence>
<evidence type="ECO:0007829" key="78">
    <source>
        <dbReference type="PDB" id="7G9M"/>
    </source>
</evidence>
<evidence type="ECO:0007829" key="79">
    <source>
        <dbReference type="PDB" id="7GA4"/>
    </source>
</evidence>
<evidence type="ECO:0007829" key="80">
    <source>
        <dbReference type="PDB" id="7VXY"/>
    </source>
</evidence>
<evidence type="ECO:0007829" key="81">
    <source>
        <dbReference type="PDB" id="8AQK"/>
    </source>
</evidence>
<evidence type="ECO:0007829" key="82">
    <source>
        <dbReference type="PDB" id="8WN8"/>
    </source>
</evidence>
<evidence type="ECO:0007829" key="83">
    <source>
        <dbReference type="PDB" id="8WNP"/>
    </source>
</evidence>
<evidence type="ECO:0007829" key="84">
    <source>
        <dbReference type="PDB" id="8WO4"/>
    </source>
</evidence>
<sequence>MKNPKEEIRRIRIVNMLKRGVARVNPLGGLKRLPAGLLLGHGPIRMVLAILAFLRFTAIKPSLGLINRWGSVGKKEAMEIIKKFKKDLAAMLRIINARKERKRRGADTSIGIIGLLLTTAMAAEITRRGSAYYMYLDRSDAGKAISFATTLGVNKCHVQIMDLGHMCDATMSYECPMLDEGVEPDDVDCWCNTTSTWVVYGTCHHKKGEARRSRRAVTLPSHSTRKLQTRSQTWLESREYTKHLIKVENWIFRNPGFALVAVAIAWLLGSSTSQKVIYLVMILLIAPAYSIRCIGVSNRDFVEGMSGGTWVDVVLEHGGCVTVMAQDKPTVDIELVTTTVSNMAEVRSYCYEASISDMASDSRCPTQGEAYLDKQSDTQYVCKRTLVDRGWGNGCGLFGKGSLVTCAKFTCSKKMTGKSIQPENLEYRIMLSVHGSQHSGMIGYETDEDRAKVEVTPNSPRAEATLGGFGSLGLDCEPRTGLDFSDLYYLTMNNKHWLVHKEWFHDIPLPWHAGADTGTPHWNNKEALVEFKDAHAKRQTVVVLGSQEGAVHTALAGALEAEMDGAKGRLFSGHLKCRLKMDKLRLKGVSYSLCTAAFTFTKVPAETLHGTVTVEVQYAGTDGPCKIPVQMAVDMQTLTPVGRLITANPVITESTENSKMMLELDPPFGDSYIVIGVGDKKITHHWHRSGSTIGKAFEATVRGAKRMAVLGDTAWDFGSVGGVFNSLGKGIHQIFGAAFKSLFGGMSWFSQILIGTLLVWLGLNTKNGSISLTCLALGGVMIFLSTAVSADVGCSVDFSKKETRCGTGVFIYNDVEAWRDRYKYHPDSPRRLAAAVKQAWEEGICGISSVSRMENIMWKSVEGELNAILEENGVQLTVVVGSVKNPMWRGPQRLPVPVNELPHGWKAWGKSYFVRAAKTNNSFVVDGDTLKECPLEHRAWNSFLVEDHGFGVFHTSVWLKVREDYSLECDPAVIGTAVKGREAAHSDLGYWIESEKNDTWRLKRAHLIEMKTCEWPKSHTLWTDGVEESDLIIPKSLAGPLSHHNTREGYRTQVKGPWHSEELEIRFEECPGTKVYVEETCGTRGPSLRSTTASGRVIEEWCCRECTMPPLSFRAKDGCWYGMEIRPRKEPESNLVRSMVTAGSTDHMDHFSLGVLVILLMVQEGLKKRMTTKIIMSTSMAVLVVMILGGFSMSDLAKLVILMGATFAEMNTGGDVAHLALVAAFKVRPALLVSFIFRANWTPRESMLLALASCLLQTAISALEGDLMVLINGFALAWLAIRAMAVPRTDNIALPILAALTPLARGTLLVAWRAGLATCGGIMLLSLKGKGSVKKNLPFVMALGLTAVRVVDPINVVGLLLLTRSGKRSWPPSEVLTAVGLICALAGGFAKADIEMAGPMAAVGLLIVSYVVSGKSVDMYIERAGDITWEKDAEVTGNSPRLDVALDESGDFSLVEEDGPPMREIILKVVLMAICGMNPIAIPFAAGAWYVYVKTGKRSGALWDVPAPKEVKKGETTDGVYRVMTRRLLGSTQVGVGVMQEGVFHTMWHVTKGAALRSGEGRLDPYWGDVKQDLVSYCGPWKLDAAWDGLSEVQLLAVPPGERARNIQTLPGIFKTKDGDIGAVALDYPAGTSGSPILDKCGRVIGLYGNGVVIKNGSYVSAITQGKREEETPVECFEPSMLKKKQLTVLDLHPGAGKTRRVLPEIVREAIKKRLRTVILAPTRVVAAEMEEALRGLPVRYMTTAVNVTHSGTEIVDLMCHATFTSRLLQPIRVPNYNLNIMDEAHFTDPSSIAARGYISTRVEMGEAAAIFMTATPPGTRDAFPDSNSPIMDTEVEVPERAWSSGFDWVTDHSGKTVWFVPSVRNGNEIAACLTKAGKRVIQLSRKTFETEFQKTKNQEWDFVITTDISEMGANFKADRVIDSRRCLKPVILDGERVILAGPMPVTHASAAQRRGRIGRNPNKPGDEYMYGGGCAETDEGHAHWLEARMLLDNIYLQDGLIASLYRPEADKVAAIEGEFKLRTEQRKTFVELMKRGDLPVWLAYQVASAGITYTDRRWCFDGTTNNTIMEDSVPAEVWTKYGEKRVLKPRWMDARVCSDHAALKSFKEFAAGKRGAALGVMEALGTLPGHMTERFQEAIDNLAVLMRAETGSRPYKAAAAQLPETLETIMLLGLLGTVSLGIFFVLMRNKGIGKMGFGMVTLGASAWLMWLSEIEPARIACVLIVVFLLLVVLIPEPEKQRSPQDNQMAIIIMVAVGLLGLITANELGWLERTKNDIAHLMGRREEGATMGFSMDIDLRPASAWAIYAALTTLITPAVQHAVTTSYNNYSLMAMATQAGVLFGMGKGMPFMHGDLGVPLLMMGCYSQLTPLTLIVAIILLVAHYMYLIPGLQAAAARAAQKRTAAGIMKNPVVDGIVVTDIDTMTIDPQVEKKMGQVLLIAVAISSAVLLRTAWGWGEAGALITAATSTLWEGSPNKYWNSSTATSLCNIFRGSYLAGASLIYTVTRNAGLVKRRGGGTGETLGEKWKARLNQMSALEFYSYKKSGITEVCREEARRALKDGVATGGHAVSRGSAKIRWLEERGYLQPYGKVVDLGCGRGGWSYYAATIRKVQEVRGYTKGGPGHEEPMLVQSYGWNIVRLKSGVDVFHMAAEPCDTLLCDIGESSSSPEVEETRTLRVLSMVGDWLEKRPGAFCIKVLCPYTSTMMETMERLQRRHGGGLVRVPLCRNSTHEMYWVSGAKSNIIKSVSTTSQLLLGRMDGPRRPVKYEEDVNLGSGTRAVASCAEAPNMKIIGRRIERIRNEHAETWFLDENHPYRTWAYHGSYEAPTQGSASSLVNGVVRLLSKPWDVVTGVTGIAMTDTTPYGQQRVFKEKVDTRVPDPQEGTRQVMNIVSSWLWKELGKRKRPRVCTKEEFINKVRSNAALGAIFEEEKEWKTAVEAVNDPRFWALVDREREHHLRGECHSCVYNMMGKREKKQGEFGKAKGSRAIWYMWLGARFLEFEALGFLNEDHWMGRENSGGGVEGLGLQRLGYILEEMNRAPGGKMYADDTAGWDTRISKFDLENEALITNQMEEGHRTLALAVIKYTYQNKVVKVLRPAEGGKTVMDIISRQDQRGSGQVVTYALNTFTNLVVQLIRNMEAEEVLEMQDLWLLRKPEKVTRWLQSNGWDRLKRMAVSGDDCVVKPIDDRFAHALRFLNDMGKVRKDTQEWKPSTGWSNWEEVPFCSHHFNKLYLKDGRSIVVPCRHQDELIGRARVSPGAGWSIRETACLAKSYAQMWQLLYFHRRDLRLMANAICSAVPVDWVPTGRTTWSIHGKGEWMTTEDMLMVWNRVWIEENDHMEDKTPVTKWTDIPYLGKREDLWCGSLIGHRPRTTWAENIKDTVNMVRRIIGDEEKYMDYLSTQVRYLGEEGSTPGVL</sequence>
<proteinExistence type="evidence at protein level"/>
<feature type="chain" id="PRO_0000435828" description="Genome polyprotein">
    <location>
        <begin position="1"/>
        <end position="3419"/>
    </location>
</feature>
<feature type="chain" id="PRO_0000435829" description="Capsid protein C">
    <location>
        <begin position="1"/>
        <end position="104"/>
    </location>
</feature>
<feature type="propeptide" id="PRO_0000435830" description="ER anchor for capsid protein C, removed in mature form by serine protease NS3">
    <location>
        <begin position="105"/>
        <end position="122"/>
    </location>
</feature>
<feature type="chain" id="PRO_0000435831" description="Protein prM">
    <location>
        <begin position="123"/>
        <end position="290"/>
    </location>
</feature>
<feature type="chain" id="PRO_0000435832" description="Peptide pr">
    <location>
        <begin position="123"/>
        <end position="215"/>
    </location>
</feature>
<feature type="chain" id="PRO_0000435833" description="Small envelope protein M">
    <location>
        <begin position="216"/>
        <end position="290"/>
    </location>
</feature>
<feature type="chain" id="PRO_0000435834" description="Envelope protein E">
    <location>
        <begin position="291"/>
        <end position="790"/>
    </location>
</feature>
<feature type="chain" id="PRO_0000435835" description="Non-structural protein 1">
    <location>
        <begin position="791"/>
        <end position="1142"/>
    </location>
</feature>
<feature type="chain" id="PRO_0000435836" description="Non-structural protein 2A">
    <location>
        <begin position="1143"/>
        <end position="1368"/>
    </location>
</feature>
<feature type="chain" id="PRO_0000435837" description="Serine protease subunit NS2B">
    <location>
        <begin position="1369"/>
        <end position="1498"/>
    </location>
</feature>
<feature type="chain" id="PRO_0000435838" description="Serine protease NS3">
    <location>
        <begin position="1499"/>
        <end position="2115"/>
    </location>
</feature>
<feature type="chain" id="PRO_0000435839" description="Non-structural protein 4A">
    <location>
        <begin position="2116"/>
        <end position="2242"/>
    </location>
</feature>
<feature type="peptide" id="PRO_0000435840" description="Peptide 2k">
    <location>
        <begin position="2243"/>
        <end position="2265"/>
    </location>
</feature>
<feature type="chain" id="PRO_0000435841" description="Non-structural protein 4B">
    <location>
        <begin position="2266"/>
        <end position="2516"/>
    </location>
</feature>
<feature type="chain" id="PRO_0000435842" description="RNA-directed RNA polymerase NS5">
    <location>
        <begin position="2517"/>
        <end position="3419"/>
    </location>
</feature>
<feature type="topological domain" description="Cytoplasmic" evidence="53">
    <location>
        <begin position="1"/>
        <end position="104"/>
    </location>
</feature>
<feature type="transmembrane region" description="Helical" evidence="13">
    <location>
        <begin position="105"/>
        <end position="125"/>
    </location>
</feature>
<feature type="topological domain" description="Extracellular" evidence="53">
    <location>
        <begin position="126"/>
        <end position="249"/>
    </location>
</feature>
<feature type="transmembrane region" description="Helical" evidence="13">
    <location>
        <begin position="250"/>
        <end position="269"/>
    </location>
</feature>
<feature type="topological domain" description="Cytoplasmic" evidence="53">
    <location>
        <begin position="270"/>
        <end position="274"/>
    </location>
</feature>
<feature type="transmembrane region" description="Helical" evidence="53">
    <location>
        <begin position="275"/>
        <end position="290"/>
    </location>
</feature>
<feature type="topological domain" description="Extracellular" evidence="53">
    <location>
        <begin position="291"/>
        <end position="741"/>
    </location>
</feature>
<feature type="transmembrane region" description="Helical" evidence="13">
    <location>
        <begin position="742"/>
        <end position="763"/>
    </location>
</feature>
<feature type="topological domain" description="Cytoplasmic" evidence="53">
    <location>
        <begin position="764"/>
        <end position="769"/>
    </location>
</feature>
<feature type="transmembrane region" description="Helical" evidence="13">
    <location>
        <begin position="770"/>
        <end position="790"/>
    </location>
</feature>
<feature type="topological domain" description="Lumenal" evidence="53">
    <location>
        <begin position="791"/>
        <end position="1173"/>
    </location>
</feature>
<feature type="transmembrane region" description="Helical" evidence="13">
    <location>
        <begin position="1174"/>
        <end position="1194"/>
    </location>
</feature>
<feature type="topological domain" description="Cytoplasmic" evidence="53">
    <location>
        <begin position="1195"/>
        <end position="1216"/>
    </location>
</feature>
<feature type="transmembrane region" description="Helical" evidence="13">
    <location>
        <begin position="1217"/>
        <end position="1237"/>
    </location>
</feature>
<feature type="topological domain" description="Lumenal" evidence="53">
    <location>
        <begin position="1238"/>
        <end position="1266"/>
    </location>
</feature>
<feature type="transmembrane region" description="Helical" evidence="13">
    <location>
        <begin position="1267"/>
        <end position="1287"/>
    </location>
</feature>
<feature type="topological domain" description="Cytoplasmic" evidence="53">
    <location>
        <begin position="1288"/>
        <end position="1291"/>
    </location>
</feature>
<feature type="transmembrane region" description="Helical" evidence="13">
    <location>
        <begin position="1292"/>
        <end position="1312"/>
    </location>
</feature>
<feature type="topological domain" description="Lumenal" evidence="53">
    <location>
        <begin position="1313"/>
        <end position="1341"/>
    </location>
</feature>
<feature type="transmembrane region" description="Helical" evidence="13">
    <location>
        <begin position="1342"/>
        <end position="1362"/>
    </location>
</feature>
<feature type="topological domain" description="Cytoplasmic" evidence="53">
    <location>
        <begin position="1363"/>
        <end position="1369"/>
    </location>
</feature>
<feature type="transmembrane region" description="Helical" evidence="13">
    <location>
        <begin position="1370"/>
        <end position="1390"/>
    </location>
</feature>
<feature type="topological domain" description="Lumenal" evidence="53">
    <location>
        <begin position="1391"/>
        <end position="1393"/>
    </location>
</feature>
<feature type="transmembrane region" description="Helical" evidence="13">
    <location>
        <begin position="1394"/>
        <end position="1414"/>
    </location>
</feature>
<feature type="topological domain" description="Cytoplasmic" evidence="53">
    <location>
        <begin position="1415"/>
        <end position="1468"/>
    </location>
</feature>
<feature type="intramembrane region" description="Helical" evidence="13">
    <location>
        <begin position="1469"/>
        <end position="1489"/>
    </location>
</feature>
<feature type="topological domain" description="Lumenal" evidence="53">
    <location>
        <begin position="1490"/>
        <end position="2166"/>
    </location>
</feature>
<feature type="transmembrane region" description="Helical" evidence="13">
    <location>
        <begin position="2167"/>
        <end position="2187"/>
    </location>
</feature>
<feature type="topological domain" description="Lumenal" evidence="53">
    <location>
        <begin position="2188"/>
        <end position="2191"/>
    </location>
</feature>
<feature type="intramembrane region" description="Helical" evidence="13">
    <location>
        <begin position="2192"/>
        <end position="2212"/>
    </location>
</feature>
<feature type="topological domain" description="Cytoplasmic" evidence="53">
    <location>
        <begin position="2213"/>
        <end position="2214"/>
    </location>
</feature>
<feature type="transmembrane region" description="Helical" evidence="13">
    <location>
        <begin position="2215"/>
        <end position="2235"/>
    </location>
</feature>
<feature type="topological domain" description="Lumenal" evidence="53">
    <location>
        <begin position="2236"/>
        <end position="2250"/>
    </location>
</feature>
<feature type="intramembrane region" description="Helical; Note=Signal for NS4B" evidence="53">
    <location>
        <begin position="2251"/>
        <end position="2265"/>
    </location>
</feature>
<feature type="topological domain" description="Lumenal" evidence="53">
    <location>
        <begin position="2266"/>
        <end position="2303"/>
    </location>
</feature>
<feature type="intramembrane region" description="Helical" evidence="13">
    <location>
        <begin position="2304"/>
        <end position="2324"/>
    </location>
</feature>
<feature type="topological domain" description="Lumenal" evidence="53">
    <location>
        <begin position="2325"/>
        <end position="2340"/>
    </location>
</feature>
<feature type="transmembrane region" description="Helical" evidence="13">
    <location>
        <begin position="2341"/>
        <end position="2361"/>
    </location>
</feature>
<feature type="topological domain" description="Cytoplasmic" evidence="53">
    <location>
        <begin position="2362"/>
        <end position="2371"/>
    </location>
</feature>
<feature type="transmembrane region" description="Helical" evidence="13">
    <location>
        <begin position="2372"/>
        <end position="2392"/>
    </location>
</feature>
<feature type="topological domain" description="Lumenal" evidence="53">
    <location>
        <begin position="2393"/>
        <end position="2437"/>
    </location>
</feature>
<feature type="transmembrane region" description="Helical" evidence="13">
    <location>
        <begin position="2438"/>
        <end position="2458"/>
    </location>
</feature>
<feature type="topological domain" description="Cytoplasmic" evidence="53">
    <location>
        <begin position="2459"/>
        <end position="3419"/>
    </location>
</feature>
<feature type="domain" description="Peptidase S7" evidence="18">
    <location>
        <begin position="1499"/>
        <end position="1676"/>
    </location>
</feature>
<feature type="domain" description="Helicase ATP-binding" evidence="15">
    <location>
        <begin position="1679"/>
        <end position="1835"/>
    </location>
</feature>
<feature type="domain" description="Helicase C-terminal" evidence="16">
    <location>
        <begin position="1830"/>
        <end position="2009"/>
    </location>
</feature>
<feature type="domain" description="mRNA cap 0-1 NS5-type MT" evidence="19">
    <location>
        <begin position="2517"/>
        <end position="2781"/>
    </location>
</feature>
<feature type="domain" description="RdRp catalytic" evidence="14">
    <location>
        <begin position="3045"/>
        <end position="3195"/>
    </location>
</feature>
<feature type="region of interest" description="Disordered" evidence="26">
    <location>
        <begin position="1"/>
        <end position="25"/>
    </location>
</feature>
<feature type="region of interest" description="Hydrophobic; homodimerization of capsid protein C" evidence="10">
    <location>
        <begin position="37"/>
        <end position="72"/>
    </location>
</feature>
<feature type="region of interest" description="Fusion peptide" evidence="7">
    <location>
        <begin position="388"/>
        <end position="401"/>
    </location>
</feature>
<feature type="region of interest" description="Interacts with and activates NS3 protease" evidence="17">
    <location>
        <begin position="1421"/>
        <end position="1460"/>
    </location>
</feature>
<feature type="region of interest" description="Disordered" evidence="33">
    <location>
        <begin position="1425"/>
        <end position="1447"/>
    </location>
</feature>
<feature type="region of interest" description="Important for RNA-binding" evidence="8">
    <location>
        <begin position="1683"/>
        <end position="1686"/>
    </location>
</feature>
<feature type="region of interest" description="SUMO-interacting motif (SIM)" evidence="1">
    <location>
        <begin position="2593"/>
        <end position="2596"/>
    </location>
</feature>
<feature type="short sequence motif" description="DEAH box" evidence="15">
    <location>
        <begin position="1783"/>
        <end position="1786"/>
    </location>
</feature>
<feature type="short sequence motif" description="Nuclear localization signal (NLS)" evidence="39">
    <location>
        <begin position="2904"/>
        <end position="2910"/>
    </location>
</feature>
<feature type="active site" description="Charge relay system; for serine protease NS3 activity" evidence="18">
    <location>
        <position position="1549"/>
    </location>
</feature>
<feature type="active site" description="Charge relay system; for serine protease NS3 activity" evidence="18">
    <location>
        <position position="1573"/>
    </location>
</feature>
<feature type="active site" description="Charge relay system; for serine protease NS3 activity" evidence="18 34">
    <location>
        <position position="1633"/>
    </location>
</feature>
<feature type="active site" description="For 2'-O-MTase activity" evidence="11">
    <location>
        <position position="2577"/>
    </location>
</feature>
<feature type="active site" description="For 2'-O-MTase activity" evidence="11">
    <location>
        <position position="2662"/>
    </location>
</feature>
<feature type="active site" description="For 2'-O-MTase activity" evidence="11">
    <location>
        <position position="2698"/>
    </location>
</feature>
<feature type="active site" description="For 2'-O-MTase activity" evidence="11">
    <location>
        <position position="2734"/>
    </location>
</feature>
<feature type="binding site" evidence="15">
    <location>
        <begin position="1692"/>
        <end position="1699"/>
    </location>
    <ligand>
        <name>ATP</name>
        <dbReference type="ChEBI" id="CHEBI:30616"/>
    </ligand>
</feature>
<feature type="binding site" evidence="1">
    <location>
        <begin position="2529"/>
        <end position="2535"/>
    </location>
    <ligand>
        <name>GTP</name>
        <dbReference type="ChEBI" id="CHEBI:37565"/>
    </ligand>
</feature>
<feature type="binding site" evidence="19">
    <location>
        <position position="2529"/>
    </location>
    <ligand>
        <name>mRNA</name>
        <dbReference type="ChEBI" id="CHEBI:33699"/>
    </ligand>
    <ligandPart>
        <name>mRNA cap</name>
    </ligandPart>
</feature>
<feature type="binding site" evidence="19">
    <location>
        <position position="2532"/>
    </location>
    <ligand>
        <name>mRNA</name>
        <dbReference type="ChEBI" id="CHEBI:33699"/>
    </ligand>
    <ligandPart>
        <name>mRNA cap</name>
    </ligandPart>
</feature>
<feature type="binding site" evidence="19">
    <location>
        <position position="2533"/>
    </location>
    <ligand>
        <name>mRNA</name>
        <dbReference type="ChEBI" id="CHEBI:33699"/>
    </ligand>
    <ligandPart>
        <name>mRNA cap</name>
    </ligandPart>
</feature>
<feature type="binding site" evidence="19">
    <location>
        <position position="2535"/>
    </location>
    <ligand>
        <name>mRNA</name>
        <dbReference type="ChEBI" id="CHEBI:33699"/>
    </ligand>
    <ligandPart>
        <name>mRNA cap</name>
    </ligandPart>
</feature>
<feature type="binding site" evidence="19">
    <location>
        <position position="2540"/>
    </location>
    <ligand>
        <name>mRNA</name>
        <dbReference type="ChEBI" id="CHEBI:33699"/>
    </ligand>
    <ligandPart>
        <name>mRNA cap</name>
    </ligandPart>
</feature>
<feature type="binding site" evidence="19">
    <location>
        <position position="2544"/>
    </location>
    <ligand>
        <name>mRNA</name>
        <dbReference type="ChEBI" id="CHEBI:33699"/>
    </ligand>
    <ligandPart>
        <name>mRNA cap</name>
    </ligandPart>
</feature>
<feature type="binding site" evidence="19 27 29">
    <location>
        <position position="2572"/>
    </location>
    <ligand>
        <name>S-adenosyl-L-methionine</name>
        <dbReference type="ChEBI" id="CHEBI:59789"/>
    </ligand>
</feature>
<feature type="binding site" evidence="19 27">
    <location>
        <position position="2602"/>
    </location>
    <ligand>
        <name>S-adenosyl-L-methionine</name>
        <dbReference type="ChEBI" id="CHEBI:59789"/>
    </ligand>
</feature>
<feature type="binding site" evidence="19 27">
    <location>
        <position position="2603"/>
    </location>
    <ligand>
        <name>S-adenosyl-L-methionine</name>
        <dbReference type="ChEBI" id="CHEBI:59789"/>
    </ligand>
</feature>
<feature type="binding site" evidence="19">
    <location>
        <position position="2620"/>
    </location>
    <ligand>
        <name>S-adenosyl-L-methionine</name>
        <dbReference type="ChEBI" id="CHEBI:59789"/>
    </ligand>
</feature>
<feature type="binding site" evidence="21 22 33">
    <location>
        <position position="2621"/>
    </location>
    <ligand>
        <name>S-adenosyl-L-methionine</name>
        <dbReference type="ChEBI" id="CHEBI:59789"/>
    </ligand>
</feature>
<feature type="binding site" evidence="29">
    <location>
        <position position="2626"/>
    </location>
    <ligand>
        <name>S-adenosyl-L-methionine</name>
        <dbReference type="ChEBI" id="CHEBI:59789"/>
    </ligand>
</feature>
<feature type="binding site" evidence="1">
    <location>
        <position position="2627"/>
    </location>
    <ligand>
        <name>S-adenosyl-L-methionine</name>
        <dbReference type="ChEBI" id="CHEBI:59789"/>
    </ligand>
</feature>
<feature type="binding site" evidence="19 27 29">
    <location>
        <position position="2647"/>
    </location>
    <ligand>
        <name>S-adenosyl-L-methionine</name>
        <dbReference type="ChEBI" id="CHEBI:59789"/>
    </ligand>
</feature>
<feature type="binding site" evidence="19 27 29">
    <location>
        <position position="2648"/>
    </location>
    <ligand>
        <name>S-adenosyl-L-methionine</name>
        <dbReference type="ChEBI" id="CHEBI:59789"/>
    </ligand>
</feature>
<feature type="binding site" evidence="27 29">
    <location>
        <position position="2662"/>
    </location>
    <ligand>
        <name>S-adenosyl-L-methionine</name>
        <dbReference type="ChEBI" id="CHEBI:59789"/>
    </ligand>
</feature>
<feature type="binding site" evidence="19">
    <location>
        <position position="2663"/>
    </location>
    <ligand>
        <name>S-adenosyl-L-methionine</name>
        <dbReference type="ChEBI" id="CHEBI:59789"/>
    </ligand>
</feature>
<feature type="binding site" evidence="1">
    <location>
        <begin position="2665"/>
        <end position="2671"/>
    </location>
    <ligand>
        <name>GTP</name>
        <dbReference type="ChEBI" id="CHEBI:37565"/>
    </ligand>
</feature>
<feature type="binding site" evidence="19">
    <location>
        <position position="2666"/>
    </location>
    <ligand>
        <name>mRNA</name>
        <dbReference type="ChEBI" id="CHEBI:33699"/>
    </ligand>
    <ligandPart>
        <name>mRNA cap</name>
    </ligandPart>
</feature>
<feature type="binding site" evidence="1">
    <location>
        <begin position="2729"/>
        <end position="2731"/>
    </location>
    <ligand>
        <name>GTP</name>
        <dbReference type="ChEBI" id="CHEBI:37565"/>
    </ligand>
</feature>
<feature type="binding site" evidence="19">
    <location>
        <position position="2729"/>
    </location>
    <ligand>
        <name>mRNA</name>
        <dbReference type="ChEBI" id="CHEBI:33699"/>
    </ligand>
    <ligandPart>
        <name>mRNA cap</name>
    </ligandPart>
</feature>
<feature type="binding site" evidence="19">
    <location>
        <position position="2731"/>
    </location>
    <ligand>
        <name>mRNA</name>
        <dbReference type="ChEBI" id="CHEBI:33699"/>
    </ligand>
    <ligandPart>
        <name>mRNA cap</name>
    </ligandPart>
</feature>
<feature type="binding site" evidence="19">
    <location>
        <position position="2736"/>
    </location>
    <ligand>
        <name>S-adenosyl-L-methionine</name>
        <dbReference type="ChEBI" id="CHEBI:59789"/>
    </ligand>
</feature>
<feature type="binding site" evidence="27 28 29">
    <location>
        <position position="2955"/>
    </location>
    <ligand>
        <name>Zn(2+)</name>
        <dbReference type="ChEBI" id="CHEBI:29105"/>
        <label>1</label>
    </ligand>
</feature>
<feature type="binding site" evidence="27 28 29">
    <location>
        <position position="2959"/>
    </location>
    <ligand>
        <name>Zn(2+)</name>
        <dbReference type="ChEBI" id="CHEBI:29105"/>
        <label>1</label>
    </ligand>
</feature>
<feature type="binding site" evidence="27 28 29">
    <location>
        <position position="2964"/>
    </location>
    <ligand>
        <name>Zn(2+)</name>
        <dbReference type="ChEBI" id="CHEBI:29105"/>
        <label>1</label>
    </ligand>
</feature>
<feature type="binding site" evidence="27 28 29">
    <location>
        <position position="2967"/>
    </location>
    <ligand>
        <name>Zn(2+)</name>
        <dbReference type="ChEBI" id="CHEBI:29105"/>
        <label>1</label>
    </ligand>
</feature>
<feature type="binding site" evidence="27 28 29">
    <location>
        <position position="3230"/>
    </location>
    <ligand>
        <name>Zn(2+)</name>
        <dbReference type="ChEBI" id="CHEBI:29105"/>
        <label>2</label>
    </ligand>
</feature>
<feature type="binding site" evidence="27 28 29">
    <location>
        <position position="3246"/>
    </location>
    <ligand>
        <name>Zn(2+)</name>
        <dbReference type="ChEBI" id="CHEBI:29105"/>
        <label>2</label>
    </ligand>
</feature>
<feature type="binding site" evidence="27 28 29">
    <location>
        <position position="3365"/>
    </location>
    <ligand>
        <name>Zn(2+)</name>
        <dbReference type="ChEBI" id="CHEBI:29105"/>
        <label>2</label>
    </ligand>
</feature>
<feature type="site" description="Cleavage; by viral protease NS3" evidence="51">
    <location>
        <begin position="104"/>
        <end position="105"/>
    </location>
</feature>
<feature type="site" description="Cleavage; by host signal peptidase" evidence="51">
    <location>
        <begin position="122"/>
        <end position="123"/>
    </location>
</feature>
<feature type="site" description="Cleavage; by host furin" evidence="51">
    <location>
        <begin position="215"/>
        <end position="216"/>
    </location>
</feature>
<feature type="site" description="Cleavage; by host signal peptidase" evidence="4">
    <location>
        <begin position="290"/>
        <end position="291"/>
    </location>
</feature>
<feature type="site" description="Cleavage; by host signal peptidase" evidence="4">
    <location>
        <begin position="790"/>
        <end position="791"/>
    </location>
</feature>
<feature type="site" description="Cleavage; by host" evidence="4">
    <location>
        <begin position="1142"/>
        <end position="1143"/>
    </location>
</feature>
<feature type="site" description="Cleavage; by viral protease NS3" evidence="4">
    <location>
        <begin position="1368"/>
        <end position="1369"/>
    </location>
</feature>
<feature type="site" description="Cleavage; by autolysis" evidence="4">
    <location>
        <begin position="1498"/>
        <end position="1499"/>
    </location>
</feature>
<feature type="site" description="Involved in NS3 ATPase and RTPase activities" evidence="6">
    <location>
        <position position="1954"/>
    </location>
</feature>
<feature type="site" description="Involved in NS3 ATPase and RTPase activities" evidence="6">
    <location>
        <position position="1957"/>
    </location>
</feature>
<feature type="site" description="Cleavage; by autolysis" evidence="4">
    <location>
        <begin position="2115"/>
        <end position="2116"/>
    </location>
</feature>
<feature type="site" description="Cleavage; by viral protease NS3" evidence="4">
    <location>
        <begin position="2242"/>
        <end position="2243"/>
    </location>
</feature>
<feature type="site" description="Cleavage; by host signal peptidase" evidence="4">
    <location>
        <begin position="2265"/>
        <end position="2266"/>
    </location>
</feature>
<feature type="site" description="Cleavage; by viral protease NS3" evidence="4">
    <location>
        <begin position="2516"/>
        <end position="2517"/>
    </location>
</feature>
<feature type="site" description="Essential for 2'-O-methyltransferase activity" evidence="19">
    <location>
        <position position="2577"/>
    </location>
</feature>
<feature type="site" description="Essential for 2'-O-methyltransferase and N-7 methyltransferase activity" evidence="19">
    <location>
        <position position="2662"/>
    </location>
</feature>
<feature type="site" description="Essential for 2'-O-methyltransferase activity" evidence="19">
    <location>
        <position position="2698"/>
    </location>
</feature>
<feature type="site" description="Essential for 2'-O-methyltransferase activity" evidence="19">
    <location>
        <position position="2734"/>
    </location>
</feature>
<feature type="modified residue" description="N6-acetyllysine; by host" evidence="47">
    <location>
        <position position="1887"/>
    </location>
</feature>
<feature type="modified residue" description="Phosphoserine" evidence="3">
    <location>
        <position position="2572"/>
    </location>
</feature>
<feature type="glycosylation site" description="N-linked (GlcNAc...) asparagine; by host" evidence="13">
    <location>
        <position position="192"/>
    </location>
</feature>
<feature type="glycosylation site" description="N-linked (GlcNAc...) asparagine; by host" evidence="23">
    <location>
        <position position="920"/>
    </location>
</feature>
<feature type="glycosylation site" description="N-linked (GlcNAc...) asparagine; by host" evidence="23">
    <location>
        <position position="997"/>
    </location>
</feature>
<feature type="disulfide bond" evidence="9">
    <location>
        <begin position="293"/>
        <end position="320"/>
    </location>
</feature>
<feature type="disulfide bond" evidence="12">
    <location>
        <begin position="350"/>
        <end position="411"/>
    </location>
</feature>
<feature type="disulfide bond" evidence="9">
    <location>
        <begin position="350"/>
        <end position="406"/>
    </location>
</feature>
<feature type="disulfide bond" evidence="9">
    <location>
        <begin position="364"/>
        <end position="395"/>
    </location>
</feature>
<feature type="disulfide bond" evidence="9">
    <location>
        <begin position="382"/>
        <end position="411"/>
    </location>
</feature>
<feature type="disulfide bond" evidence="12">
    <location>
        <begin position="382"/>
        <end position="406"/>
    </location>
</feature>
<feature type="disulfide bond" evidence="9">
    <location>
        <begin position="476"/>
        <end position="577"/>
    </location>
</feature>
<feature type="disulfide bond" evidence="9">
    <location>
        <begin position="594"/>
        <end position="625"/>
    </location>
</feature>
<feature type="disulfide bond" evidence="12">
    <location>
        <begin position="794"/>
        <end position="805"/>
    </location>
</feature>
<feature type="disulfide bond" evidence="12">
    <location>
        <begin position="845"/>
        <end position="933"/>
    </location>
</feature>
<feature type="disulfide bond" evidence="12">
    <location>
        <begin position="969"/>
        <end position="1013"/>
    </location>
</feature>
<feature type="disulfide bond" evidence="12">
    <location>
        <begin position="1070"/>
        <end position="1119"/>
    </location>
</feature>
<feature type="disulfide bond" evidence="12">
    <location>
        <begin position="1081"/>
        <end position="1102"/>
    </location>
</feature>
<feature type="disulfide bond" evidence="12">
    <location>
        <begin position="1103"/>
        <end position="1106"/>
    </location>
</feature>
<feature type="cross-link" description="Glycyl lysine isopeptide (Lys-Gly) (interchain with G-Cter in ubiquitin)" evidence="2">
    <location>
        <position position="328"/>
    </location>
</feature>
<feature type="cross-link" description="Glycyl lysine isopeptide (Lys-Gly) (interchain with G-Cter in ubiquitin)" evidence="2">
    <location>
        <position position="567"/>
    </location>
</feature>
<feature type="mutagenesis site" description="Strong reduction of host innate immune responses and viral-induced apoptosis." evidence="43">
    <original>A</original>
    <variation>V</variation>
    <location>
        <position position="1259"/>
    </location>
</feature>
<feature type="mutagenesis site" description="Diminished RNA-unwinding capabilities." evidence="47">
    <original>K</original>
    <variation>R</variation>
    <location>
        <position position="1887"/>
    </location>
</feature>
<feature type="mutagenesis site" description="Complete loss of nuclear localization; when associated with A-2909." evidence="39">
    <original>K</original>
    <variation>A</variation>
    <location>
        <position position="2906"/>
    </location>
</feature>
<feature type="mutagenesis site" description="Complete loss of nuclear localization; when associated with A-2906." evidence="39">
    <original>R</original>
    <variation>A</variation>
    <location>
        <position position="2909"/>
    </location>
</feature>
<feature type="mutagenesis site" description="Disrupts dimer formation, subcellular localization as well as enzymatic activity." evidence="40">
    <original>R</original>
    <variation>A</variation>
    <location>
        <position position="3099"/>
    </location>
</feature>
<feature type="helix" evidence="74">
    <location>
        <begin position="25"/>
        <end position="27"/>
    </location>
</feature>
<feature type="turn" evidence="73">
    <location>
        <begin position="35"/>
        <end position="40"/>
    </location>
</feature>
<feature type="helix" evidence="73">
    <location>
        <begin position="44"/>
        <end position="56"/>
    </location>
</feature>
<feature type="helix" evidence="73">
    <location>
        <begin position="63"/>
        <end position="71"/>
    </location>
</feature>
<feature type="helix" evidence="73">
    <location>
        <begin position="74"/>
        <end position="96"/>
    </location>
</feature>
<feature type="strand" evidence="65">
    <location>
        <begin position="791"/>
        <end position="797"/>
    </location>
</feature>
<feature type="turn" evidence="65">
    <location>
        <begin position="798"/>
        <end position="801"/>
    </location>
</feature>
<feature type="strand" evidence="65">
    <location>
        <begin position="802"/>
        <end position="812"/>
    </location>
</feature>
<feature type="strand" evidence="65">
    <location>
        <begin position="815"/>
        <end position="819"/>
    </location>
</feature>
<feature type="strand" evidence="65">
    <location>
        <begin position="822"/>
        <end position="827"/>
    </location>
</feature>
<feature type="helix" evidence="65">
    <location>
        <begin position="829"/>
        <end position="841"/>
    </location>
</feature>
<feature type="helix" evidence="65">
    <location>
        <begin position="852"/>
        <end position="871"/>
    </location>
</feature>
<feature type="strand" evidence="65">
    <location>
        <begin position="877"/>
        <end position="880"/>
    </location>
</feature>
<feature type="strand" evidence="65">
    <location>
        <begin position="885"/>
        <end position="887"/>
    </location>
</feature>
<feature type="helix" evidence="84">
    <location>
        <begin position="905"/>
        <end position="907"/>
    </location>
</feature>
<feature type="strand" evidence="83">
    <location>
        <begin position="908"/>
        <end position="910"/>
    </location>
</feature>
<feature type="strand" evidence="84">
    <location>
        <begin position="911"/>
        <end position="913"/>
    </location>
</feature>
<feature type="strand" evidence="65">
    <location>
        <begin position="922"/>
        <end position="928"/>
    </location>
</feature>
<feature type="turn" evidence="65">
    <location>
        <begin position="930"/>
        <end position="932"/>
    </location>
</feature>
<feature type="helix" evidence="65">
    <location>
        <begin position="935"/>
        <end position="937"/>
    </location>
</feature>
<feature type="strand" evidence="65">
    <location>
        <begin position="943"/>
        <end position="949"/>
    </location>
</feature>
<feature type="strand" evidence="65">
    <location>
        <begin position="952"/>
        <end position="961"/>
    </location>
</feature>
<feature type="helix" evidence="65">
    <location>
        <begin position="971"/>
        <end position="973"/>
    </location>
</feature>
<feature type="strand" evidence="65">
    <location>
        <begin position="975"/>
        <end position="979"/>
    </location>
</feature>
<feature type="strand" evidence="65">
    <location>
        <begin position="982"/>
        <end position="986"/>
    </location>
</feature>
<feature type="strand" evidence="65">
    <location>
        <begin position="988"/>
        <end position="1008"/>
    </location>
</feature>
<feature type="helix" evidence="65">
    <location>
        <begin position="1017"/>
        <end position="1019"/>
    </location>
</feature>
<feature type="helix" evidence="65">
    <location>
        <begin position="1028"/>
        <end position="1030"/>
    </location>
</feature>
<feature type="helix" evidence="65">
    <location>
        <begin position="1035"/>
        <end position="1037"/>
    </location>
</feature>
<feature type="helix" evidence="65">
    <location>
        <begin position="1043"/>
        <end position="1045"/>
    </location>
</feature>
<feature type="strand" evidence="82">
    <location>
        <begin position="1054"/>
        <end position="1056"/>
    </location>
</feature>
<feature type="strand" evidence="65">
    <location>
        <begin position="1060"/>
        <end position="1068"/>
    </location>
</feature>
<feature type="strand" evidence="65">
    <location>
        <begin position="1074"/>
        <end position="1077"/>
    </location>
</feature>
<feature type="strand" evidence="65">
    <location>
        <begin position="1088"/>
        <end position="1091"/>
    </location>
</feature>
<feature type="strand" evidence="65">
    <location>
        <begin position="1100"/>
        <end position="1105"/>
    </location>
</feature>
<feature type="strand" evidence="65">
    <location>
        <begin position="1111"/>
        <end position="1115"/>
    </location>
</feature>
<feature type="strand" evidence="65">
    <location>
        <begin position="1118"/>
        <end position="1121"/>
    </location>
</feature>
<feature type="strand" evidence="65">
    <location>
        <begin position="1126"/>
        <end position="1130"/>
    </location>
</feature>
<feature type="helix" evidence="65">
    <location>
        <begin position="1132"/>
        <end position="1134"/>
    </location>
</feature>
<feature type="strand" evidence="81">
    <location>
        <begin position="1418"/>
        <end position="1425"/>
    </location>
</feature>
<feature type="strand" evidence="75">
    <location>
        <begin position="1434"/>
        <end position="1436"/>
    </location>
</feature>
<feature type="strand" evidence="81">
    <location>
        <begin position="1441"/>
        <end position="1446"/>
    </location>
</feature>
<feature type="strand" evidence="81">
    <location>
        <begin position="1452"/>
        <end position="1454"/>
    </location>
</feature>
<feature type="strand" evidence="81">
    <location>
        <begin position="1518"/>
        <end position="1529"/>
    </location>
</feature>
<feature type="strand" evidence="81">
    <location>
        <begin position="1531"/>
        <end position="1540"/>
    </location>
</feature>
<feature type="strand" evidence="81">
    <location>
        <begin position="1543"/>
        <end position="1547"/>
    </location>
</feature>
<feature type="helix" evidence="81">
    <location>
        <begin position="1548"/>
        <end position="1551"/>
    </location>
</feature>
<feature type="strand" evidence="81">
    <location>
        <begin position="1556"/>
        <end position="1558"/>
    </location>
</feature>
<feature type="strand" evidence="81">
    <location>
        <begin position="1561"/>
        <end position="1563"/>
    </location>
</feature>
<feature type="strand" evidence="81">
    <location>
        <begin position="1565"/>
        <end position="1569"/>
    </location>
</feature>
<feature type="turn" evidence="81">
    <location>
        <begin position="1570"/>
        <end position="1573"/>
    </location>
</feature>
<feature type="strand" evidence="81">
    <location>
        <begin position="1574"/>
        <end position="1580"/>
    </location>
</feature>
<feature type="strand" evidence="81">
    <location>
        <begin position="1589"/>
        <end position="1591"/>
    </location>
</feature>
<feature type="strand" evidence="81">
    <location>
        <begin position="1593"/>
        <end position="1597"/>
    </location>
</feature>
<feature type="strand" evidence="81">
    <location>
        <begin position="1605"/>
        <end position="1609"/>
    </location>
</feature>
<feature type="strand" evidence="81">
    <location>
        <begin position="1612"/>
        <end position="1616"/>
    </location>
</feature>
<feature type="strand" evidence="81">
    <location>
        <begin position="1619"/>
        <end position="1624"/>
    </location>
</feature>
<feature type="helix" evidence="81">
    <location>
        <begin position="1630"/>
        <end position="1632"/>
    </location>
</feature>
<feature type="strand" evidence="81">
    <location>
        <begin position="1636"/>
        <end position="1638"/>
    </location>
</feature>
<feature type="strand" evidence="64">
    <location>
        <begin position="1640"/>
        <end position="1642"/>
    </location>
</feature>
<feature type="strand" evidence="81">
    <location>
        <begin position="1644"/>
        <end position="1648"/>
    </location>
</feature>
<feature type="strand" evidence="81">
    <location>
        <begin position="1651"/>
        <end position="1653"/>
    </location>
</feature>
<feature type="strand" evidence="80">
    <location>
        <begin position="1655"/>
        <end position="1657"/>
    </location>
</feature>
<feature type="strand" evidence="81">
    <location>
        <begin position="1659"/>
        <end position="1662"/>
    </location>
</feature>
<feature type="helix" evidence="72">
    <location>
        <begin position="1679"/>
        <end position="1682"/>
    </location>
</feature>
<feature type="strand" evidence="79">
    <location>
        <begin position="1683"/>
        <end position="1685"/>
    </location>
</feature>
<feature type="strand" evidence="72">
    <location>
        <begin position="1687"/>
        <end position="1690"/>
    </location>
</feature>
<feature type="turn" evidence="72">
    <location>
        <begin position="1698"/>
        <end position="1701"/>
    </location>
</feature>
<feature type="helix" evidence="72">
    <location>
        <begin position="1702"/>
        <end position="1712"/>
    </location>
</feature>
<feature type="strand" evidence="72">
    <location>
        <begin position="1717"/>
        <end position="1723"/>
    </location>
</feature>
<feature type="helix" evidence="72">
    <location>
        <begin position="1724"/>
        <end position="1733"/>
    </location>
</feature>
<feature type="turn" evidence="72">
    <location>
        <begin position="1734"/>
        <end position="1736"/>
    </location>
</feature>
<feature type="strand" evidence="72">
    <location>
        <begin position="1739"/>
        <end position="1741"/>
    </location>
</feature>
<feature type="strand" evidence="72">
    <location>
        <begin position="1756"/>
        <end position="1760"/>
    </location>
</feature>
<feature type="helix" evidence="72">
    <location>
        <begin position="1761"/>
        <end position="1769"/>
    </location>
</feature>
<feature type="strand" evidence="78">
    <location>
        <begin position="1770"/>
        <end position="1772"/>
    </location>
</feature>
<feature type="strand" evidence="72">
    <location>
        <begin position="1778"/>
        <end position="1784"/>
    </location>
</feature>
<feature type="helix" evidence="72">
    <location>
        <begin position="1790"/>
        <end position="1804"/>
    </location>
</feature>
<feature type="strand" evidence="72">
    <location>
        <begin position="1809"/>
        <end position="1813"/>
    </location>
</feature>
<feature type="strand" evidence="72">
    <location>
        <begin position="1831"/>
        <end position="1835"/>
    </location>
</feature>
<feature type="strand" evidence="72">
    <location>
        <begin position="1844"/>
        <end position="1846"/>
    </location>
</feature>
<feature type="helix" evidence="72">
    <location>
        <begin position="1848"/>
        <end position="1851"/>
    </location>
</feature>
<feature type="strand" evidence="72">
    <location>
        <begin position="1857"/>
        <end position="1860"/>
    </location>
</feature>
<feature type="helix" evidence="72">
    <location>
        <begin position="1864"/>
        <end position="1876"/>
    </location>
</feature>
<feature type="strand" evidence="72">
    <location>
        <begin position="1881"/>
        <end position="1884"/>
    </location>
</feature>
<feature type="turn" evidence="72">
    <location>
        <begin position="1886"/>
        <end position="1888"/>
    </location>
</feature>
<feature type="helix" evidence="72">
    <location>
        <begin position="1889"/>
        <end position="1898"/>
    </location>
</feature>
<feature type="strand" evidence="72">
    <location>
        <begin position="1902"/>
        <end position="1906"/>
    </location>
</feature>
<feature type="helix" evidence="72">
    <location>
        <begin position="1908"/>
        <end position="1911"/>
    </location>
</feature>
<feature type="strand" evidence="72">
    <location>
        <begin position="1919"/>
        <end position="1923"/>
    </location>
</feature>
<feature type="strand" evidence="72">
    <location>
        <begin position="1926"/>
        <end position="1933"/>
    </location>
</feature>
<feature type="turn" evidence="72">
    <location>
        <begin position="1934"/>
        <end position="1936"/>
    </location>
</feature>
<feature type="strand" evidence="72">
    <location>
        <begin position="1937"/>
        <end position="1945"/>
    </location>
</feature>
<feature type="helix" evidence="72">
    <location>
        <begin position="1948"/>
        <end position="1955"/>
    </location>
</feature>
<feature type="strand" evidence="72">
    <location>
        <begin position="1967"/>
        <end position="1971"/>
    </location>
</feature>
<feature type="turn" evidence="72">
    <location>
        <begin position="1978"/>
        <end position="1981"/>
    </location>
</feature>
<feature type="helix" evidence="72">
    <location>
        <begin position="1983"/>
        <end position="1992"/>
    </location>
</feature>
<feature type="helix" evidence="72">
    <location>
        <begin position="2007"/>
        <end position="2012"/>
    </location>
</feature>
<feature type="turn" evidence="72">
    <location>
        <begin position="2017"/>
        <end position="2020"/>
    </location>
</feature>
<feature type="helix" evidence="72">
    <location>
        <begin position="2024"/>
        <end position="2035"/>
    </location>
</feature>
<feature type="helix" evidence="72">
    <location>
        <begin position="2041"/>
        <end position="2049"/>
    </location>
</feature>
<feature type="helix" evidence="72">
    <location>
        <begin position="2058"/>
        <end position="2060"/>
    </location>
</feature>
<feature type="helix" evidence="72">
    <location>
        <begin position="2065"/>
        <end position="2067"/>
    </location>
</feature>
<feature type="strand" evidence="76">
    <location>
        <begin position="2070"/>
        <end position="2075"/>
    </location>
</feature>
<feature type="strand" evidence="72">
    <location>
        <begin position="2077"/>
        <end position="2079"/>
    </location>
</feature>
<feature type="strand" evidence="72">
    <location>
        <begin position="2085"/>
        <end position="2087"/>
    </location>
</feature>
<feature type="strand" evidence="72">
    <location>
        <begin position="2091"/>
        <end position="2094"/>
    </location>
</feature>
<feature type="helix" evidence="72">
    <location>
        <begin position="2095"/>
        <end position="2097"/>
    </location>
</feature>
<feature type="strand" evidence="72">
    <location>
        <begin position="2098"/>
        <end position="2100"/>
    </location>
</feature>
<feature type="helix" evidence="72">
    <location>
        <begin position="2101"/>
        <end position="2111"/>
    </location>
</feature>
<feature type="helix" evidence="71">
    <location>
        <begin position="2524"/>
        <end position="2534"/>
    </location>
</feature>
<feature type="helix" evidence="71">
    <location>
        <begin position="2537"/>
        <end position="2543"/>
    </location>
</feature>
<feature type="turn" evidence="71">
    <location>
        <begin position="2544"/>
        <end position="2547"/>
    </location>
</feature>
<feature type="strand" evidence="71">
    <location>
        <begin position="2549"/>
        <end position="2552"/>
    </location>
</feature>
<feature type="helix" evidence="71">
    <location>
        <begin position="2554"/>
        <end position="2561"/>
    </location>
</feature>
<feature type="helix" evidence="71">
    <location>
        <begin position="2574"/>
        <end position="2583"/>
    </location>
</feature>
<feature type="strand" evidence="71">
    <location>
        <begin position="2591"/>
        <end position="2596"/>
    </location>
</feature>
<feature type="turn" evidence="69">
    <location>
        <begin position="2599"/>
        <end position="2601"/>
    </location>
</feature>
<feature type="helix" evidence="71">
    <location>
        <begin position="2602"/>
        <end position="2607"/>
    </location>
</feature>
<feature type="strand" evidence="71">
    <location>
        <begin position="2613"/>
        <end position="2619"/>
    </location>
</feature>
<feature type="strand" evidence="66">
    <location>
        <begin position="2623"/>
        <end position="2626"/>
    </location>
</feature>
<feature type="helix" evidence="71">
    <location>
        <begin position="2637"/>
        <end position="2639"/>
    </location>
</feature>
<feature type="strand" evidence="71">
    <location>
        <begin position="2640"/>
        <end position="2643"/>
    </location>
</feature>
<feature type="helix" evidence="71">
    <location>
        <begin position="2648"/>
        <end position="2650"/>
    </location>
</feature>
<feature type="strand" evidence="71">
    <location>
        <begin position="2657"/>
        <end position="2661"/>
    </location>
</feature>
<feature type="helix" evidence="71">
    <location>
        <begin position="2670"/>
        <end position="2688"/>
    </location>
</feature>
<feature type="strand" evidence="71">
    <location>
        <begin position="2693"/>
        <end position="2700"/>
    </location>
</feature>
<feature type="helix" evidence="71">
    <location>
        <begin position="2705"/>
        <end position="2718"/>
    </location>
</feature>
<feature type="strand" evidence="71">
    <location>
        <begin position="2721"/>
        <end position="2723"/>
    </location>
</feature>
<feature type="strand" evidence="69">
    <location>
        <begin position="2726"/>
        <end position="2728"/>
    </location>
</feature>
<feature type="strand" evidence="71">
    <location>
        <begin position="2735"/>
        <end position="2738"/>
    </location>
</feature>
<feature type="helix" evidence="71">
    <location>
        <begin position="2745"/>
        <end position="2760"/>
    </location>
</feature>
<feature type="strand" evidence="69">
    <location>
        <begin position="2761"/>
        <end position="2763"/>
    </location>
</feature>
<feature type="strand" evidence="71">
    <location>
        <begin position="2768"/>
        <end position="2771"/>
    </location>
</feature>
<feature type="turn" evidence="69">
    <location>
        <begin position="2791"/>
        <end position="2793"/>
    </location>
</feature>
<feature type="helix" evidence="69">
    <location>
        <begin position="2795"/>
        <end position="2804"/>
    </location>
</feature>
<feature type="turn" evidence="69">
    <location>
        <begin position="2805"/>
        <end position="2808"/>
    </location>
</feature>
<feature type="strand" evidence="69">
    <location>
        <begin position="2818"/>
        <end position="2827"/>
    </location>
</feature>
<feature type="helix" evidence="68">
    <location>
        <begin position="2840"/>
        <end position="2844"/>
    </location>
</feature>
<feature type="helix" evidence="68">
    <location>
        <begin position="2847"/>
        <end position="2851"/>
    </location>
</feature>
<feature type="turn" evidence="68">
    <location>
        <begin position="2853"/>
        <end position="2855"/>
    </location>
</feature>
<feature type="strand" evidence="69">
    <location>
        <begin position="2858"/>
        <end position="2860"/>
    </location>
</feature>
<feature type="helix" evidence="69">
    <location>
        <begin position="2865"/>
        <end position="2875"/>
    </location>
</feature>
<feature type="helix" evidence="68">
    <location>
        <begin position="2885"/>
        <end position="2902"/>
    </location>
</feature>
<feature type="turn" evidence="69">
    <location>
        <begin position="2903"/>
        <end position="2905"/>
    </location>
</feature>
<feature type="helix" evidence="68">
    <location>
        <begin position="2913"/>
        <end position="2920"/>
    </location>
</feature>
<feature type="turn" evidence="68">
    <location>
        <begin position="2921"/>
        <end position="2923"/>
    </location>
</feature>
<feature type="helix" evidence="69">
    <location>
        <begin position="2931"/>
        <end position="2933"/>
    </location>
</feature>
<feature type="helix" evidence="68">
    <location>
        <begin position="2935"/>
        <end position="2944"/>
    </location>
</feature>
<feature type="helix" evidence="68">
    <location>
        <begin position="2946"/>
        <end position="2959"/>
    </location>
</feature>
<feature type="turn" evidence="68">
    <location>
        <begin position="2960"/>
        <end position="2962"/>
    </location>
</feature>
<feature type="strand" evidence="69">
    <location>
        <begin position="2969"/>
        <end position="2973"/>
    </location>
</feature>
<feature type="strand" evidence="69">
    <location>
        <begin position="2977"/>
        <end position="2979"/>
    </location>
</feature>
<feature type="helix" evidence="68">
    <location>
        <begin position="2989"/>
        <end position="3006"/>
    </location>
</feature>
<feature type="helix" evidence="68">
    <location>
        <begin position="3008"/>
        <end position="3011"/>
    </location>
</feature>
<feature type="turn" evidence="68">
    <location>
        <begin position="3012"/>
        <end position="3015"/>
    </location>
</feature>
<feature type="helix" evidence="68">
    <location>
        <begin position="3017"/>
        <end position="3020"/>
    </location>
</feature>
<feature type="strand" evidence="68">
    <location>
        <begin position="3021"/>
        <end position="3023"/>
    </location>
</feature>
<feature type="helix" evidence="68">
    <location>
        <begin position="3029"/>
        <end position="3041"/>
    </location>
</feature>
<feature type="strand" evidence="68">
    <location>
        <begin position="3042"/>
        <end position="3045"/>
    </location>
</feature>
<feature type="helix" evidence="69">
    <location>
        <begin position="3055"/>
        <end position="3057"/>
    </location>
</feature>
<feature type="helix" evidence="68">
    <location>
        <begin position="3061"/>
        <end position="3067"/>
    </location>
</feature>
<feature type="helix" evidence="68">
    <location>
        <begin position="3068"/>
        <end position="3073"/>
    </location>
</feature>
<feature type="helix" evidence="68">
    <location>
        <begin position="3076"/>
        <end position="3091"/>
    </location>
</feature>
<feature type="helix" evidence="70">
    <location>
        <begin position="3102"/>
        <end position="3104"/>
    </location>
</feature>
<feature type="strand" evidence="69">
    <location>
        <begin position="3106"/>
        <end position="3116"/>
    </location>
</feature>
<feature type="helix" evidence="68">
    <location>
        <begin position="3123"/>
        <end position="3143"/>
    </location>
</feature>
<feature type="helix" evidence="68">
    <location>
        <begin position="3149"/>
        <end position="3152"/>
    </location>
</feature>
<feature type="helix" evidence="68">
    <location>
        <begin position="3159"/>
        <end position="3173"/>
    </location>
</feature>
<feature type="strand" evidence="68">
    <location>
        <begin position="3176"/>
        <end position="3179"/>
    </location>
</feature>
<feature type="strand" evidence="68">
    <location>
        <begin position="3182"/>
        <end position="3185"/>
    </location>
</feature>
<feature type="helix" evidence="68">
    <location>
        <begin position="3190"/>
        <end position="3194"/>
    </location>
</feature>
<feature type="helix" evidence="68">
    <location>
        <begin position="3197"/>
        <end position="3201"/>
    </location>
</feature>
<feature type="strand" evidence="69">
    <location>
        <begin position="3206"/>
        <end position="3209"/>
    </location>
</feature>
<feature type="strand" evidence="77">
    <location>
        <begin position="3218"/>
        <end position="3220"/>
    </location>
</feature>
<feature type="helix" evidence="68">
    <location>
        <begin position="3221"/>
        <end position="3223"/>
    </location>
</feature>
<feature type="strand" evidence="68">
    <location>
        <begin position="3229"/>
        <end position="3235"/>
    </location>
</feature>
<feature type="strand" evidence="69">
    <location>
        <begin position="3237"/>
        <end position="3239"/>
    </location>
</feature>
<feature type="strand" evidence="68">
    <location>
        <begin position="3241"/>
        <end position="3246"/>
    </location>
</feature>
<feature type="helix" evidence="68">
    <location>
        <begin position="3249"/>
        <end position="3256"/>
    </location>
</feature>
<feature type="strand" evidence="70">
    <location>
        <begin position="3258"/>
        <end position="3261"/>
    </location>
</feature>
<feature type="helix" evidence="68">
    <location>
        <begin position="3266"/>
        <end position="3283"/>
    </location>
</feature>
<feature type="helix" evidence="68">
    <location>
        <begin position="3288"/>
        <end position="3300"/>
    </location>
</feature>
<feature type="strand" evidence="68">
    <location>
        <begin position="3322"/>
        <end position="3325"/>
    </location>
</feature>
<feature type="helix" evidence="68">
    <location>
        <begin position="3327"/>
        <end position="3335"/>
    </location>
</feature>
<feature type="turn" evidence="68">
    <location>
        <begin position="3336"/>
        <end position="3338"/>
    </location>
</feature>
<feature type="helix" evidence="68">
    <location>
        <begin position="3351"/>
        <end position="3353"/>
    </location>
</feature>
<feature type="helix" evidence="68">
    <location>
        <begin position="3359"/>
        <end position="3364"/>
    </location>
</feature>
<feature type="strand" evidence="69">
    <location>
        <begin position="3369"/>
        <end position="3371"/>
    </location>
</feature>
<feature type="helix" evidence="68">
    <location>
        <begin position="3372"/>
        <end position="3379"/>
    </location>
</feature>
<feature type="helix" evidence="68">
    <location>
        <begin position="3381"/>
        <end position="3392"/>
    </location>
</feature>
<feature type="strand" evidence="67">
    <location>
        <begin position="3394"/>
        <end position="3396"/>
    </location>
</feature>